<dbReference type="EC" id="2.1.1.364" evidence="12 23 24 35 38 40"/>
<dbReference type="EC" id="2.1.1.-" evidence="35"/>
<dbReference type="EMBL" id="L04284">
    <property type="protein sequence ID" value="AAA58669.1"/>
    <property type="status" value="ALT_FRAME"/>
    <property type="molecule type" value="mRNA"/>
</dbReference>
<dbReference type="EMBL" id="Z69744">
    <property type="protein sequence ID" value="CAA93625.1"/>
    <property type="molecule type" value="Genomic_DNA"/>
</dbReference>
<dbReference type="EMBL" id="Z69745">
    <property type="protein sequence ID" value="CAA93625.1"/>
    <property type="status" value="JOINED"/>
    <property type="molecule type" value="Genomic_DNA"/>
</dbReference>
<dbReference type="EMBL" id="Z69746">
    <property type="protein sequence ID" value="CAA93625.1"/>
    <property type="status" value="JOINED"/>
    <property type="molecule type" value="Genomic_DNA"/>
</dbReference>
<dbReference type="EMBL" id="Z69747">
    <property type="protein sequence ID" value="CAA93625.1"/>
    <property type="status" value="JOINED"/>
    <property type="molecule type" value="Genomic_DNA"/>
</dbReference>
<dbReference type="EMBL" id="Z69748">
    <property type="protein sequence ID" value="CAA93625.1"/>
    <property type="status" value="JOINED"/>
    <property type="molecule type" value="Genomic_DNA"/>
</dbReference>
<dbReference type="EMBL" id="Z69749">
    <property type="protein sequence ID" value="CAA93625.1"/>
    <property type="status" value="JOINED"/>
    <property type="molecule type" value="Genomic_DNA"/>
</dbReference>
<dbReference type="EMBL" id="Z69750">
    <property type="protein sequence ID" value="CAA93625.1"/>
    <property type="status" value="JOINED"/>
    <property type="molecule type" value="Genomic_DNA"/>
</dbReference>
<dbReference type="EMBL" id="Z69751">
    <property type="protein sequence ID" value="CAA93625.1"/>
    <property type="status" value="JOINED"/>
    <property type="molecule type" value="Genomic_DNA"/>
</dbReference>
<dbReference type="EMBL" id="Z69752">
    <property type="protein sequence ID" value="CAA93625.1"/>
    <property type="status" value="JOINED"/>
    <property type="molecule type" value="Genomic_DNA"/>
</dbReference>
<dbReference type="EMBL" id="Z69753">
    <property type="protein sequence ID" value="CAA93625.1"/>
    <property type="status" value="JOINED"/>
    <property type="molecule type" value="Genomic_DNA"/>
</dbReference>
<dbReference type="EMBL" id="Z69754">
    <property type="protein sequence ID" value="CAA93625.1"/>
    <property type="status" value="JOINED"/>
    <property type="molecule type" value="Genomic_DNA"/>
</dbReference>
<dbReference type="EMBL" id="Z69755">
    <property type="protein sequence ID" value="CAA93625.1"/>
    <property type="status" value="JOINED"/>
    <property type="molecule type" value="Genomic_DNA"/>
</dbReference>
<dbReference type="EMBL" id="Z69756">
    <property type="protein sequence ID" value="CAA93625.1"/>
    <property type="status" value="JOINED"/>
    <property type="molecule type" value="Genomic_DNA"/>
</dbReference>
<dbReference type="EMBL" id="Z69757">
    <property type="protein sequence ID" value="CAA93625.1"/>
    <property type="status" value="JOINED"/>
    <property type="molecule type" value="Genomic_DNA"/>
</dbReference>
<dbReference type="EMBL" id="Z69758">
    <property type="protein sequence ID" value="CAA93625.1"/>
    <property type="status" value="JOINED"/>
    <property type="molecule type" value="Genomic_DNA"/>
</dbReference>
<dbReference type="EMBL" id="Z69759">
    <property type="protein sequence ID" value="CAA93625.1"/>
    <property type="status" value="JOINED"/>
    <property type="molecule type" value="Genomic_DNA"/>
</dbReference>
<dbReference type="EMBL" id="Z69760">
    <property type="protein sequence ID" value="CAA93625.1"/>
    <property type="status" value="JOINED"/>
    <property type="molecule type" value="Genomic_DNA"/>
</dbReference>
<dbReference type="EMBL" id="Z69761">
    <property type="protein sequence ID" value="CAA93625.1"/>
    <property type="status" value="JOINED"/>
    <property type="molecule type" value="Genomic_DNA"/>
</dbReference>
<dbReference type="EMBL" id="Z69762">
    <property type="protein sequence ID" value="CAA93625.1"/>
    <property type="status" value="JOINED"/>
    <property type="molecule type" value="Genomic_DNA"/>
</dbReference>
<dbReference type="EMBL" id="Z69763">
    <property type="protein sequence ID" value="CAA93625.1"/>
    <property type="status" value="JOINED"/>
    <property type="molecule type" value="Genomic_DNA"/>
</dbReference>
<dbReference type="EMBL" id="Z69764">
    <property type="protein sequence ID" value="CAA93625.1"/>
    <property type="status" value="JOINED"/>
    <property type="molecule type" value="Genomic_DNA"/>
</dbReference>
<dbReference type="EMBL" id="Z69765">
    <property type="protein sequence ID" value="CAA93625.1"/>
    <property type="status" value="JOINED"/>
    <property type="molecule type" value="Genomic_DNA"/>
</dbReference>
<dbReference type="EMBL" id="Z69766">
    <property type="protein sequence ID" value="CAA93625.1"/>
    <property type="status" value="JOINED"/>
    <property type="molecule type" value="Genomic_DNA"/>
</dbReference>
<dbReference type="EMBL" id="Z69767">
    <property type="protein sequence ID" value="CAA93625.1"/>
    <property type="status" value="JOINED"/>
    <property type="molecule type" value="Genomic_DNA"/>
</dbReference>
<dbReference type="EMBL" id="Z69768">
    <property type="protein sequence ID" value="CAA93625.1"/>
    <property type="status" value="JOINED"/>
    <property type="molecule type" value="Genomic_DNA"/>
</dbReference>
<dbReference type="EMBL" id="Z69769">
    <property type="protein sequence ID" value="CAA93625.1"/>
    <property type="status" value="JOINED"/>
    <property type="molecule type" value="Genomic_DNA"/>
</dbReference>
<dbReference type="EMBL" id="Z69770">
    <property type="protein sequence ID" value="CAA93625.1"/>
    <property type="status" value="JOINED"/>
    <property type="molecule type" value="Genomic_DNA"/>
</dbReference>
<dbReference type="EMBL" id="Z69772">
    <property type="protein sequence ID" value="CAA93625.1"/>
    <property type="status" value="JOINED"/>
    <property type="molecule type" value="Genomic_DNA"/>
</dbReference>
<dbReference type="EMBL" id="Z69773">
    <property type="protein sequence ID" value="CAA93625.1"/>
    <property type="status" value="JOINED"/>
    <property type="molecule type" value="Genomic_DNA"/>
</dbReference>
<dbReference type="EMBL" id="Z69774">
    <property type="protein sequence ID" value="CAA93625.1"/>
    <property type="status" value="JOINED"/>
    <property type="molecule type" value="Genomic_DNA"/>
</dbReference>
<dbReference type="EMBL" id="Z69775">
    <property type="protein sequence ID" value="CAA93625.1"/>
    <property type="status" value="JOINED"/>
    <property type="molecule type" value="Genomic_DNA"/>
</dbReference>
<dbReference type="EMBL" id="Z69776">
    <property type="protein sequence ID" value="CAA93625.1"/>
    <property type="status" value="JOINED"/>
    <property type="molecule type" value="Genomic_DNA"/>
</dbReference>
<dbReference type="EMBL" id="Z69777">
    <property type="protein sequence ID" value="CAA93625.1"/>
    <property type="status" value="JOINED"/>
    <property type="molecule type" value="Genomic_DNA"/>
</dbReference>
<dbReference type="EMBL" id="Z69778">
    <property type="protein sequence ID" value="CAA93625.1"/>
    <property type="status" value="JOINED"/>
    <property type="molecule type" value="Genomic_DNA"/>
</dbReference>
<dbReference type="EMBL" id="Z69779">
    <property type="protein sequence ID" value="CAA93625.1"/>
    <property type="status" value="JOINED"/>
    <property type="molecule type" value="Genomic_DNA"/>
</dbReference>
<dbReference type="EMBL" id="Z69780">
    <property type="protein sequence ID" value="CAA93625.1"/>
    <property type="status" value="JOINED"/>
    <property type="molecule type" value="Genomic_DNA"/>
</dbReference>
<dbReference type="EMBL" id="AY373585">
    <property type="protein sequence ID" value="AAQ63624.1"/>
    <property type="molecule type" value="Genomic_DNA"/>
</dbReference>
<dbReference type="EMBL" id="AP000941">
    <property type="status" value="NOT_ANNOTATED_CDS"/>
    <property type="molecule type" value="Genomic_DNA"/>
</dbReference>
<dbReference type="EMBL" id="AP001267">
    <property type="status" value="NOT_ANNOTATED_CDS"/>
    <property type="molecule type" value="Genomic_DNA"/>
</dbReference>
<dbReference type="EMBL" id="D14540">
    <property type="protein sequence ID" value="BAA03407.1"/>
    <property type="molecule type" value="mRNA"/>
</dbReference>
<dbReference type="EMBL" id="AB209508">
    <property type="protein sequence ID" value="BAD92745.1"/>
    <property type="status" value="ALT_FRAME"/>
    <property type="molecule type" value="mRNA"/>
</dbReference>
<dbReference type="EMBL" id="L04731">
    <property type="status" value="NOT_ANNOTATED_CDS"/>
    <property type="molecule type" value="mRNA"/>
</dbReference>
<dbReference type="EMBL" id="L01986">
    <property type="protein sequence ID" value="AAA92511.1"/>
    <property type="molecule type" value="mRNA"/>
</dbReference>
<dbReference type="EMBL" id="X83604">
    <property type="protein sequence ID" value="CAA58584.1"/>
    <property type="molecule type" value="Genomic_DNA"/>
</dbReference>
<dbReference type="EMBL" id="S78570">
    <property type="protein sequence ID" value="AAB34770.1"/>
    <property type="molecule type" value="mRNA"/>
</dbReference>
<dbReference type="EMBL" id="U04737">
    <property type="protein sequence ID" value="AAA18644.1"/>
    <property type="molecule type" value="Genomic_DNA"/>
</dbReference>
<dbReference type="EMBL" id="S66432">
    <property type="protein sequence ID" value="AAB28545.1"/>
    <property type="molecule type" value="mRNA"/>
</dbReference>
<dbReference type="EMBL" id="AF232001">
    <property type="protein sequence ID" value="AAG26335.2"/>
    <property type="molecule type" value="mRNA"/>
</dbReference>
<dbReference type="EMBL" id="AF231998">
    <property type="protein sequence ID" value="AAG26332.2"/>
    <property type="status" value="ALT_SEQ"/>
    <property type="molecule type" value="mRNA"/>
</dbReference>
<dbReference type="CCDS" id="CCDS31686.1">
    <molecule id="Q03164-1"/>
</dbReference>
<dbReference type="CCDS" id="CCDS55791.1">
    <molecule id="Q03164-3"/>
</dbReference>
<dbReference type="PIR" id="A44265">
    <property type="entry name" value="A44265"/>
</dbReference>
<dbReference type="PIR" id="I52578">
    <property type="entry name" value="I52578"/>
</dbReference>
<dbReference type="PIR" id="I53035">
    <property type="entry name" value="I53035"/>
</dbReference>
<dbReference type="RefSeq" id="NP_001184033.1">
    <molecule id="Q03164-3"/>
    <property type="nucleotide sequence ID" value="NM_001197104.2"/>
</dbReference>
<dbReference type="RefSeq" id="NP_005924.2">
    <molecule id="Q03164-1"/>
    <property type="nucleotide sequence ID" value="NM_005933.4"/>
</dbReference>
<dbReference type="PDB" id="2AGH">
    <property type="method" value="NMR"/>
    <property type="chains" value="C=2840-2869"/>
</dbReference>
<dbReference type="PDB" id="2J2S">
    <property type="method" value="NMR"/>
    <property type="chains" value="A=1143-1214"/>
</dbReference>
<dbReference type="PDB" id="2JYI">
    <property type="method" value="NMR"/>
    <property type="chains" value="A=1147-1203"/>
</dbReference>
<dbReference type="PDB" id="2KKF">
    <property type="method" value="NMR"/>
    <property type="chains" value="A=1147-1203"/>
</dbReference>
<dbReference type="PDB" id="2KU7">
    <property type="method" value="NMR"/>
    <property type="chains" value="A=1585-1628"/>
</dbReference>
<dbReference type="PDB" id="2KYU">
    <property type="method" value="NMR"/>
    <property type="chains" value="A=1564-1628"/>
</dbReference>
<dbReference type="PDB" id="2LXS">
    <property type="method" value="NMR"/>
    <property type="chains" value="B=2840-2858"/>
</dbReference>
<dbReference type="PDB" id="2LXT">
    <property type="method" value="NMR"/>
    <property type="chains" value="B=2840-2858"/>
</dbReference>
<dbReference type="PDB" id="2MSR">
    <property type="method" value="NMR"/>
    <property type="chains" value="A=140-160"/>
</dbReference>
<dbReference type="PDB" id="2MTN">
    <property type="method" value="NMR"/>
    <property type="chains" value="A=110-160"/>
</dbReference>
<dbReference type="PDB" id="2W5Y">
    <property type="method" value="X-ray"/>
    <property type="resolution" value="2.00 A"/>
    <property type="chains" value="A=3785-3969"/>
</dbReference>
<dbReference type="PDB" id="2W5Z">
    <property type="method" value="X-ray"/>
    <property type="resolution" value="2.20 A"/>
    <property type="chains" value="A=3785-3969"/>
</dbReference>
<dbReference type="PDB" id="3EG6">
    <property type="method" value="X-ray"/>
    <property type="resolution" value="1.72 A"/>
    <property type="chains" value="C=3762-3773"/>
</dbReference>
<dbReference type="PDB" id="3EMH">
    <property type="method" value="X-ray"/>
    <property type="resolution" value="1.37 A"/>
    <property type="chains" value="B=3764-3776"/>
</dbReference>
<dbReference type="PDB" id="3LQH">
    <property type="method" value="X-ray"/>
    <property type="resolution" value="1.72 A"/>
    <property type="chains" value="A=1566-1784"/>
</dbReference>
<dbReference type="PDB" id="3LQI">
    <property type="method" value="X-ray"/>
    <property type="resolution" value="1.92 A"/>
    <property type="chains" value="A/B/C=1566-1784"/>
</dbReference>
<dbReference type="PDB" id="3LQJ">
    <property type="method" value="X-ray"/>
    <property type="resolution" value="1.90 A"/>
    <property type="chains" value="A/B=1566-1784"/>
</dbReference>
<dbReference type="PDB" id="3P4F">
    <property type="method" value="X-ray"/>
    <property type="resolution" value="2.35 A"/>
    <property type="chains" value="C=3761-3770"/>
</dbReference>
<dbReference type="PDB" id="3U85">
    <property type="method" value="X-ray"/>
    <property type="resolution" value="3.00 A"/>
    <property type="chains" value="B=6-25"/>
</dbReference>
<dbReference type="PDB" id="3U88">
    <property type="method" value="X-ray"/>
    <property type="resolution" value="3.00 A"/>
    <property type="chains" value="M/N=103-153"/>
</dbReference>
<dbReference type="PDB" id="4ESG">
    <property type="method" value="X-ray"/>
    <property type="resolution" value="1.70 A"/>
    <property type="chains" value="C/D=3755-3771"/>
</dbReference>
<dbReference type="PDB" id="4GQ6">
    <property type="method" value="X-ray"/>
    <property type="resolution" value="1.55 A"/>
    <property type="chains" value="B=6-15"/>
</dbReference>
<dbReference type="PDB" id="4NW3">
    <property type="method" value="X-ray"/>
    <property type="resolution" value="2.82 A"/>
    <property type="chains" value="A=1147-1204"/>
</dbReference>
<dbReference type="PDB" id="5F5E">
    <property type="method" value="X-ray"/>
    <property type="resolution" value="1.80 A"/>
    <property type="chains" value="A=3813-3969"/>
</dbReference>
<dbReference type="PDB" id="5F6L">
    <property type="method" value="X-ray"/>
    <property type="resolution" value="1.90 A"/>
    <property type="chains" value="A=3813-3969"/>
</dbReference>
<dbReference type="PDB" id="5SVH">
    <property type="method" value="X-ray"/>
    <property type="resolution" value="2.05 A"/>
    <property type="chains" value="B=2839-2869"/>
</dbReference>
<dbReference type="PDB" id="6EMQ">
    <property type="method" value="NMR"/>
    <property type="chains" value="A=111-160"/>
</dbReference>
<dbReference type="PDB" id="6KIU">
    <property type="method" value="EM"/>
    <property type="resolution" value="3.20 A"/>
    <property type="chains" value="K=3754-3969"/>
</dbReference>
<dbReference type="PDB" id="6KIV">
    <property type="method" value="EM"/>
    <property type="resolution" value="4.00 A"/>
    <property type="chains" value="K=3754-3969"/>
</dbReference>
<dbReference type="PDB" id="6KIX">
    <property type="method" value="EM"/>
    <property type="resolution" value="4.10 A"/>
    <property type="chains" value="K=3754-3969"/>
</dbReference>
<dbReference type="PDB" id="6KIZ">
    <property type="method" value="EM"/>
    <property type="resolution" value="4.50 A"/>
    <property type="chains" value="K=3754-3969"/>
</dbReference>
<dbReference type="PDB" id="6PWV">
    <property type="method" value="EM"/>
    <property type="resolution" value="6.20 A"/>
    <property type="chains" value="C=3762-3969"/>
</dbReference>
<dbReference type="PDB" id="6PWW">
    <property type="method" value="EM"/>
    <property type="resolution" value="4.40 A"/>
    <property type="chains" value="C=3762-3969"/>
</dbReference>
<dbReference type="PDB" id="6U9K">
    <property type="method" value="X-ray"/>
    <property type="resolution" value="2.00 A"/>
    <property type="chains" value="A/B=3813-3969"/>
</dbReference>
<dbReference type="PDB" id="6U9M">
    <property type="method" value="X-ray"/>
    <property type="resolution" value="2.05 A"/>
    <property type="chains" value="A/B=3813-3969"/>
</dbReference>
<dbReference type="PDB" id="6U9N">
    <property type="method" value="X-ray"/>
    <property type="resolution" value="1.95 A"/>
    <property type="chains" value="A/B=3813-3969"/>
</dbReference>
<dbReference type="PDB" id="6U9R">
    <property type="method" value="X-ray"/>
    <property type="resolution" value="2.10 A"/>
    <property type="chains" value="A/B=3813-3969"/>
</dbReference>
<dbReference type="PDB" id="6W5I">
    <property type="method" value="EM"/>
    <property type="resolution" value="6.90 A"/>
    <property type="chains" value="C=3762-3969"/>
</dbReference>
<dbReference type="PDB" id="6W5M">
    <property type="method" value="EM"/>
    <property type="resolution" value="4.60 A"/>
    <property type="chains" value="C=3762-3969"/>
</dbReference>
<dbReference type="PDB" id="6W5N">
    <property type="method" value="EM"/>
    <property type="resolution" value="6.00 A"/>
    <property type="chains" value="C=3762-3969"/>
</dbReference>
<dbReference type="PDB" id="7MBM">
    <property type="method" value="EM"/>
    <property type="chains" value="C=3762-3969"/>
</dbReference>
<dbReference type="PDB" id="7MBN">
    <property type="method" value="EM"/>
    <property type="chains" value="C=3762-3969"/>
</dbReference>
<dbReference type="PDB" id="7RZD">
    <property type="method" value="X-ray"/>
    <property type="resolution" value="1.82 A"/>
    <property type="chains" value="C=747-755"/>
</dbReference>
<dbReference type="PDB" id="7RZJ">
    <property type="method" value="X-ray"/>
    <property type="resolution" value="1.80 A"/>
    <property type="chains" value="E=747-755"/>
</dbReference>
<dbReference type="PDB" id="7S79">
    <property type="method" value="X-ray"/>
    <property type="resolution" value="1.53 A"/>
    <property type="chains" value="E=747-755"/>
</dbReference>
<dbReference type="PDB" id="7S7D">
    <property type="method" value="X-ray"/>
    <property type="resolution" value="1.56 A"/>
    <property type="chains" value="E=747-755"/>
</dbReference>
<dbReference type="PDB" id="7S8A">
    <property type="method" value="X-ray"/>
    <property type="resolution" value="2.10 A"/>
    <property type="chains" value="C=747-755"/>
</dbReference>
<dbReference type="PDB" id="7S8E">
    <property type="method" value="X-ray"/>
    <property type="resolution" value="1.60 A"/>
    <property type="chains" value="E=747-755"/>
</dbReference>
<dbReference type="PDB" id="7S8F">
    <property type="method" value="X-ray"/>
    <property type="resolution" value="1.80 A"/>
    <property type="chains" value="C=747-755"/>
</dbReference>
<dbReference type="PDB" id="7U5V">
    <property type="method" value="X-ray"/>
    <property type="resolution" value="2.59 A"/>
    <property type="chains" value="A=3811-3969"/>
</dbReference>
<dbReference type="PDB" id="7W67">
    <property type="method" value="X-ray"/>
    <property type="resolution" value="2.19 A"/>
    <property type="chains" value="C=3813-3969"/>
</dbReference>
<dbReference type="PDB" id="7W6A">
    <property type="method" value="X-ray"/>
    <property type="resolution" value="2.21 A"/>
    <property type="chains" value="C=3813-3969"/>
</dbReference>
<dbReference type="PDB" id="7W6I">
    <property type="method" value="X-ray"/>
    <property type="resolution" value="2.56 A"/>
    <property type="chains" value="C=3813-3969"/>
</dbReference>
<dbReference type="PDB" id="7W6J">
    <property type="method" value="X-ray"/>
    <property type="resolution" value="2.68 A"/>
    <property type="chains" value="C=3813-3969"/>
</dbReference>
<dbReference type="PDB" id="7ZEY">
    <property type="method" value="NMR"/>
    <property type="chains" value="B=1564-1627"/>
</dbReference>
<dbReference type="PDB" id="7ZEZ">
    <property type="method" value="NMR"/>
    <property type="chains" value="B=1564-1627"/>
</dbReference>
<dbReference type="PDBsum" id="2AGH"/>
<dbReference type="PDBsum" id="2J2S"/>
<dbReference type="PDBsum" id="2JYI"/>
<dbReference type="PDBsum" id="2KKF"/>
<dbReference type="PDBsum" id="2KU7"/>
<dbReference type="PDBsum" id="2KYU"/>
<dbReference type="PDBsum" id="2LXS"/>
<dbReference type="PDBsum" id="2LXT"/>
<dbReference type="PDBsum" id="2MSR"/>
<dbReference type="PDBsum" id="2MTN"/>
<dbReference type="PDBsum" id="2W5Y"/>
<dbReference type="PDBsum" id="2W5Z"/>
<dbReference type="PDBsum" id="3EG6"/>
<dbReference type="PDBsum" id="3EMH"/>
<dbReference type="PDBsum" id="3LQH"/>
<dbReference type="PDBsum" id="3LQI"/>
<dbReference type="PDBsum" id="3LQJ"/>
<dbReference type="PDBsum" id="3P4F"/>
<dbReference type="PDBsum" id="3U85"/>
<dbReference type="PDBsum" id="3U88"/>
<dbReference type="PDBsum" id="4ESG"/>
<dbReference type="PDBsum" id="4GQ6"/>
<dbReference type="PDBsum" id="4NW3"/>
<dbReference type="PDBsum" id="5F5E"/>
<dbReference type="PDBsum" id="5F6L"/>
<dbReference type="PDBsum" id="5SVH"/>
<dbReference type="PDBsum" id="6EMQ"/>
<dbReference type="PDBsum" id="6KIU"/>
<dbReference type="PDBsum" id="6KIV"/>
<dbReference type="PDBsum" id="6KIX"/>
<dbReference type="PDBsum" id="6KIZ"/>
<dbReference type="PDBsum" id="6PWV"/>
<dbReference type="PDBsum" id="6PWW"/>
<dbReference type="PDBsum" id="6U9K"/>
<dbReference type="PDBsum" id="6U9M"/>
<dbReference type="PDBsum" id="6U9N"/>
<dbReference type="PDBsum" id="6U9R"/>
<dbReference type="PDBsum" id="6W5I"/>
<dbReference type="PDBsum" id="6W5M"/>
<dbReference type="PDBsum" id="6W5N"/>
<dbReference type="PDBsum" id="7MBM"/>
<dbReference type="PDBsum" id="7MBN"/>
<dbReference type="PDBsum" id="7RZD"/>
<dbReference type="PDBsum" id="7RZJ"/>
<dbReference type="PDBsum" id="7S79"/>
<dbReference type="PDBsum" id="7S7D"/>
<dbReference type="PDBsum" id="7S8A"/>
<dbReference type="PDBsum" id="7S8E"/>
<dbReference type="PDBsum" id="7S8F"/>
<dbReference type="PDBsum" id="7U5V"/>
<dbReference type="PDBsum" id="7W67"/>
<dbReference type="PDBsum" id="7W6A"/>
<dbReference type="PDBsum" id="7W6I"/>
<dbReference type="PDBsum" id="7W6J"/>
<dbReference type="PDBsum" id="7ZEY"/>
<dbReference type="PDBsum" id="7ZEZ"/>
<dbReference type="BMRB" id="Q03164"/>
<dbReference type="EMDB" id="EMD-0694"/>
<dbReference type="EMDB" id="EMD-0695"/>
<dbReference type="EMDB" id="EMD-20512"/>
<dbReference type="EMDB" id="EMD-20513"/>
<dbReference type="EMDB" id="EMD-21542"/>
<dbReference type="EMDB" id="EMD-21543"/>
<dbReference type="EMDB" id="EMD-21544"/>
<dbReference type="EMDB" id="EMD-23738"/>
<dbReference type="EMDB" id="EMD-23739"/>
<dbReference type="EMDB" id="EMD-9998"/>
<dbReference type="EMDB" id="EMD-9999"/>
<dbReference type="SASBDB" id="Q03164"/>
<dbReference type="SMR" id="Q03164"/>
<dbReference type="BioGRID" id="110443">
    <property type="interactions" value="310"/>
</dbReference>
<dbReference type="ComplexPortal" id="CPX-5850">
    <property type="entry name" value="Histone-lysine N-methyltransferase complex, KMT2A variant"/>
</dbReference>
<dbReference type="CORUM" id="Q03164"/>
<dbReference type="DIP" id="DIP-29221N"/>
<dbReference type="ELM" id="Q03164"/>
<dbReference type="FunCoup" id="Q03164">
    <property type="interactions" value="3961"/>
</dbReference>
<dbReference type="IntAct" id="Q03164">
    <property type="interactions" value="130"/>
</dbReference>
<dbReference type="MINT" id="Q03164"/>
<dbReference type="STRING" id="9606.ENSP00000436786"/>
<dbReference type="BindingDB" id="Q03164"/>
<dbReference type="ChEMBL" id="CHEMBL1293299"/>
<dbReference type="CarbonylDB" id="Q03164"/>
<dbReference type="GlyConnect" id="2046">
    <property type="glycosylation" value="1 N-Linked glycan (1 site)"/>
</dbReference>
<dbReference type="GlyCosmos" id="Q03164">
    <property type="glycosylation" value="17 sites, 4 glycans"/>
</dbReference>
<dbReference type="GlyGen" id="Q03164">
    <property type="glycosylation" value="36 sites, 4 N-linked glycans (3 sites), 2 O-linked glycans (23 sites)"/>
</dbReference>
<dbReference type="iPTMnet" id="Q03164"/>
<dbReference type="PhosphoSitePlus" id="Q03164"/>
<dbReference type="SwissPalm" id="Q03164"/>
<dbReference type="BioMuta" id="KMT2A"/>
<dbReference type="DMDM" id="146345435"/>
<dbReference type="jPOST" id="Q03164"/>
<dbReference type="MassIVE" id="Q03164"/>
<dbReference type="PaxDb" id="9606-ENSP00000436786"/>
<dbReference type="PeptideAtlas" id="Q03164"/>
<dbReference type="ProteomicsDB" id="23014"/>
<dbReference type="ProteomicsDB" id="58195">
    <molecule id="Q03164-1"/>
</dbReference>
<dbReference type="ProteomicsDB" id="58196">
    <molecule id="Q03164-2"/>
</dbReference>
<dbReference type="Pumba" id="Q03164"/>
<dbReference type="Antibodypedia" id="18629">
    <property type="antibodies" value="476 antibodies from 36 providers"/>
</dbReference>
<dbReference type="DNASU" id="4297"/>
<dbReference type="Ensembl" id="ENST00000389506.10">
    <molecule id="Q03164-1"/>
    <property type="protein sequence ID" value="ENSP00000374157.5"/>
    <property type="gene ID" value="ENSG00000118058.25"/>
</dbReference>
<dbReference type="Ensembl" id="ENST00000534358.8">
    <molecule id="Q03164-3"/>
    <property type="protein sequence ID" value="ENSP00000436786.2"/>
    <property type="gene ID" value="ENSG00000118058.25"/>
</dbReference>
<dbReference type="Ensembl" id="ENST00000649699.1">
    <molecule id="Q03164-2"/>
    <property type="protein sequence ID" value="ENSP00000496927.1"/>
    <property type="gene ID" value="ENSG00000118058.25"/>
</dbReference>
<dbReference type="GeneID" id="4297"/>
<dbReference type="KEGG" id="hsa:4297"/>
<dbReference type="MANE-Select" id="ENST00000534358.8">
    <molecule id="Q03164-3"/>
    <property type="protein sequence ID" value="ENSP00000436786.2"/>
    <property type="RefSeq nucleotide sequence ID" value="NM_001197104.2"/>
    <property type="RefSeq protein sequence ID" value="NP_001184033.1"/>
</dbReference>
<dbReference type="UCSC" id="uc001pta.4">
    <molecule id="Q03164-1"/>
    <property type="organism name" value="human"/>
</dbReference>
<dbReference type="AGR" id="HGNC:7132"/>
<dbReference type="CTD" id="4297"/>
<dbReference type="DisGeNET" id="4297"/>
<dbReference type="GeneCards" id="KMT2A"/>
<dbReference type="GeneReviews" id="KMT2A"/>
<dbReference type="HGNC" id="HGNC:7132">
    <property type="gene designation" value="KMT2A"/>
</dbReference>
<dbReference type="HPA" id="ENSG00000118058">
    <property type="expression patterns" value="Low tissue specificity"/>
</dbReference>
<dbReference type="MalaCards" id="KMT2A"/>
<dbReference type="MIM" id="159555">
    <property type="type" value="gene+phenotype"/>
</dbReference>
<dbReference type="MIM" id="605130">
    <property type="type" value="phenotype"/>
</dbReference>
<dbReference type="neXtProt" id="NX_Q03164"/>
<dbReference type="OpenTargets" id="ENSG00000118058"/>
<dbReference type="Orphanet" id="98831">
    <property type="disease" value="Acute myeloid leukemia with 11q23 abnormalities"/>
</dbReference>
<dbReference type="Orphanet" id="402017">
    <property type="disease" value="Acute myeloid leukemia with t(9;11)(p22;q23)"/>
</dbReference>
<dbReference type="Orphanet" id="98835">
    <property type="disease" value="Acute undifferentiated leukemia"/>
</dbReference>
<dbReference type="Orphanet" id="585918">
    <property type="disease" value="B-lymphoblastic leukemia/lymphoma with t(v;11q23.3)"/>
</dbReference>
<dbReference type="Orphanet" id="589534">
    <property type="disease" value="Mixed phenotype acute leukemia with t(9;22)(q34.1;q11.2)"/>
</dbReference>
<dbReference type="Orphanet" id="589595">
    <property type="disease" value="Mixed phenotype acute leukemia with t(v;11q23.3)"/>
</dbReference>
<dbReference type="Orphanet" id="319182">
    <property type="disease" value="Wiedemann-Steiner syndrome"/>
</dbReference>
<dbReference type="PharmGKB" id="PA241"/>
<dbReference type="VEuPathDB" id="HostDB:ENSG00000118058"/>
<dbReference type="eggNOG" id="KOG1084">
    <property type="taxonomic scope" value="Eukaryota"/>
</dbReference>
<dbReference type="GeneTree" id="ENSGT00940000160099"/>
<dbReference type="HOGENOM" id="CLU_000208_2_0_1"/>
<dbReference type="InParanoid" id="Q03164"/>
<dbReference type="OMA" id="VVRSQQW"/>
<dbReference type="OrthoDB" id="308383at2759"/>
<dbReference type="PAN-GO" id="Q03164">
    <property type="GO annotations" value="4 GO annotations based on evolutionary models"/>
</dbReference>
<dbReference type="PhylomeDB" id="Q03164"/>
<dbReference type="TreeFam" id="TF319820"/>
<dbReference type="BioCyc" id="MetaCyc:HS04188-MONOMER"/>
<dbReference type="PathwayCommons" id="Q03164"/>
<dbReference type="Reactome" id="R-HSA-3214841">
    <property type="pathway name" value="PKMTs methylate histone lysines"/>
</dbReference>
<dbReference type="Reactome" id="R-HSA-8936459">
    <property type="pathway name" value="RUNX1 regulates genes involved in megakaryocyte differentiation and platelet function"/>
</dbReference>
<dbReference type="Reactome" id="R-HSA-8939236">
    <property type="pathway name" value="RUNX1 regulates transcription of genes involved in differentiation of HSCs"/>
</dbReference>
<dbReference type="Reactome" id="R-HSA-9616222">
    <property type="pathway name" value="Transcriptional regulation of granulopoiesis"/>
</dbReference>
<dbReference type="Reactome" id="R-HSA-9772755">
    <property type="pathway name" value="Formation of WDR5-containing histone-modifying complexes"/>
</dbReference>
<dbReference type="SignaLink" id="Q03164"/>
<dbReference type="SIGNOR" id="Q03164"/>
<dbReference type="BioGRID-ORCS" id="4297">
    <property type="hits" value="127 hits in 1158 CRISPR screens"/>
</dbReference>
<dbReference type="CD-CODE" id="91857CE7">
    <property type="entry name" value="Nucleolus"/>
</dbReference>
<dbReference type="ChiTaRS" id="KMT2A">
    <property type="organism name" value="human"/>
</dbReference>
<dbReference type="EvolutionaryTrace" id="Q03164"/>
<dbReference type="GeneWiki" id="MLL_(gene)"/>
<dbReference type="GenomeRNAi" id="4297"/>
<dbReference type="Pharos" id="Q03164">
    <property type="development level" value="Tchem"/>
</dbReference>
<dbReference type="PRO" id="PR:Q03164"/>
<dbReference type="Proteomes" id="UP000005640">
    <property type="component" value="Chromosome 11"/>
</dbReference>
<dbReference type="RNAct" id="Q03164">
    <property type="molecule type" value="protein"/>
</dbReference>
<dbReference type="Bgee" id="ENSG00000118058">
    <property type="expression patterns" value="Expressed in ventricular zone and 215 other cell types or tissues"/>
</dbReference>
<dbReference type="ExpressionAtlas" id="Q03164">
    <property type="expression patterns" value="baseline and differential"/>
</dbReference>
<dbReference type="GO" id="GO:0005829">
    <property type="term" value="C:cytosol"/>
    <property type="evidence" value="ECO:0000314"/>
    <property type="project" value="HPA"/>
</dbReference>
<dbReference type="GO" id="GO:0035097">
    <property type="term" value="C:histone methyltransferase complex"/>
    <property type="evidence" value="ECO:0000314"/>
    <property type="project" value="UniProtKB"/>
</dbReference>
<dbReference type="GO" id="GO:0071339">
    <property type="term" value="C:MLL1 complex"/>
    <property type="evidence" value="ECO:0000314"/>
    <property type="project" value="UniProtKB"/>
</dbReference>
<dbReference type="GO" id="GO:0005654">
    <property type="term" value="C:nucleoplasm"/>
    <property type="evidence" value="ECO:0000314"/>
    <property type="project" value="HPA"/>
</dbReference>
<dbReference type="GO" id="GO:0005634">
    <property type="term" value="C:nucleus"/>
    <property type="evidence" value="ECO:0000314"/>
    <property type="project" value="UniProtKB"/>
</dbReference>
<dbReference type="GO" id="GO:0003682">
    <property type="term" value="F:chromatin binding"/>
    <property type="evidence" value="ECO:0007669"/>
    <property type="project" value="Ensembl"/>
</dbReference>
<dbReference type="GO" id="GO:0042800">
    <property type="term" value="F:histone H3K4 methyltransferase activity"/>
    <property type="evidence" value="ECO:0000314"/>
    <property type="project" value="UniProtKB"/>
</dbReference>
<dbReference type="GO" id="GO:0140945">
    <property type="term" value="F:histone H3K4 monomethyltransferase activity"/>
    <property type="evidence" value="ECO:0007669"/>
    <property type="project" value="RHEA"/>
</dbReference>
<dbReference type="GO" id="GO:0140999">
    <property type="term" value="F:histone H3K4 trimethyltransferase activity"/>
    <property type="evidence" value="ECO:0000314"/>
    <property type="project" value="BHF-UCL"/>
</dbReference>
<dbReference type="GO" id="GO:0042802">
    <property type="term" value="F:identical protein binding"/>
    <property type="evidence" value="ECO:0000353"/>
    <property type="project" value="IntAct"/>
</dbReference>
<dbReference type="GO" id="GO:0003680">
    <property type="term" value="F:minor groove of adenine-thymine-rich DNA binding"/>
    <property type="evidence" value="ECO:0000303"/>
    <property type="project" value="UniProtKB"/>
</dbReference>
<dbReference type="GO" id="GO:0042803">
    <property type="term" value="F:protein homodimerization activity"/>
    <property type="evidence" value="ECO:0000314"/>
    <property type="project" value="UniProtKB"/>
</dbReference>
<dbReference type="GO" id="GO:0106363">
    <property type="term" value="F:protein-cysteine methyltransferase activity"/>
    <property type="evidence" value="ECO:0000314"/>
    <property type="project" value="UniProtKB"/>
</dbReference>
<dbReference type="GO" id="GO:0045322">
    <property type="term" value="F:unmethylated CpG binding"/>
    <property type="evidence" value="ECO:0000314"/>
    <property type="project" value="UniProtKB"/>
</dbReference>
<dbReference type="GO" id="GO:0008270">
    <property type="term" value="F:zinc ion binding"/>
    <property type="evidence" value="ECO:0000314"/>
    <property type="project" value="UniProtKB"/>
</dbReference>
<dbReference type="GO" id="GO:0009952">
    <property type="term" value="P:anterior/posterior pattern specification"/>
    <property type="evidence" value="ECO:0007669"/>
    <property type="project" value="Ensembl"/>
</dbReference>
<dbReference type="GO" id="GO:0006915">
    <property type="term" value="P:apoptotic process"/>
    <property type="evidence" value="ECO:0007669"/>
    <property type="project" value="UniProtKB-KW"/>
</dbReference>
<dbReference type="GO" id="GO:0071560">
    <property type="term" value="P:cellular response to transforming growth factor beta stimulus"/>
    <property type="evidence" value="ECO:0007669"/>
    <property type="project" value="Ensembl"/>
</dbReference>
<dbReference type="GO" id="GO:0032922">
    <property type="term" value="P:circadian regulation of gene expression"/>
    <property type="evidence" value="ECO:0000250"/>
    <property type="project" value="UniProtKB"/>
</dbReference>
<dbReference type="GO" id="GO:0060216">
    <property type="term" value="P:definitive hemopoiesis"/>
    <property type="evidence" value="ECO:0007669"/>
    <property type="project" value="Ensembl"/>
</dbReference>
<dbReference type="GO" id="GO:0035162">
    <property type="term" value="P:embryonic hemopoiesis"/>
    <property type="evidence" value="ECO:0000304"/>
    <property type="project" value="UniProtKB"/>
</dbReference>
<dbReference type="GO" id="GO:0035640">
    <property type="term" value="P:exploration behavior"/>
    <property type="evidence" value="ECO:0007669"/>
    <property type="project" value="Ensembl"/>
</dbReference>
<dbReference type="GO" id="GO:0048144">
    <property type="term" value="P:fibroblast proliferation"/>
    <property type="evidence" value="ECO:0007669"/>
    <property type="project" value="Ensembl"/>
</dbReference>
<dbReference type="GO" id="GO:0048873">
    <property type="term" value="P:homeostasis of number of cells within a tissue"/>
    <property type="evidence" value="ECO:0007669"/>
    <property type="project" value="Ensembl"/>
</dbReference>
<dbReference type="GO" id="GO:0051899">
    <property type="term" value="P:membrane depolarization"/>
    <property type="evidence" value="ECO:0007669"/>
    <property type="project" value="Ensembl"/>
</dbReference>
<dbReference type="GO" id="GO:0032259">
    <property type="term" value="P:methylation"/>
    <property type="evidence" value="ECO:0007669"/>
    <property type="project" value="UniProtKB-KW"/>
</dbReference>
<dbReference type="GO" id="GO:0090310">
    <property type="term" value="P:negative regulation of DNA methylation-dependent heterochromatin formation"/>
    <property type="evidence" value="ECO:0000315"/>
    <property type="project" value="UniProtKB"/>
</dbReference>
<dbReference type="GO" id="GO:0048147">
    <property type="term" value="P:negative regulation of fibroblast proliferation"/>
    <property type="evidence" value="ECO:0007669"/>
    <property type="project" value="Ensembl"/>
</dbReference>
<dbReference type="GO" id="GO:0045893">
    <property type="term" value="P:positive regulation of DNA-templated transcription"/>
    <property type="evidence" value="ECO:0000315"/>
    <property type="project" value="UniProtKB"/>
</dbReference>
<dbReference type="GO" id="GO:0045944">
    <property type="term" value="P:positive regulation of transcription by RNA polymerase II"/>
    <property type="evidence" value="ECO:0000314"/>
    <property type="project" value="BHF-UCL"/>
</dbReference>
<dbReference type="GO" id="GO:0009791">
    <property type="term" value="P:post-embryonic development"/>
    <property type="evidence" value="ECO:0007669"/>
    <property type="project" value="Ensembl"/>
</dbReference>
<dbReference type="GO" id="GO:0036211">
    <property type="term" value="P:protein modification process"/>
    <property type="evidence" value="ECO:0007669"/>
    <property type="project" value="Ensembl"/>
</dbReference>
<dbReference type="GO" id="GO:0065003">
    <property type="term" value="P:protein-containing complex assembly"/>
    <property type="evidence" value="ECO:0000314"/>
    <property type="project" value="UniProtKB"/>
</dbReference>
<dbReference type="GO" id="GO:0048172">
    <property type="term" value="P:regulation of short-term neuronal synaptic plasticity"/>
    <property type="evidence" value="ECO:0007669"/>
    <property type="project" value="Ensembl"/>
</dbReference>
<dbReference type="GO" id="GO:0035864">
    <property type="term" value="P:response to potassium ion"/>
    <property type="evidence" value="ECO:0007669"/>
    <property type="project" value="Ensembl"/>
</dbReference>
<dbReference type="GO" id="GO:0048536">
    <property type="term" value="P:spleen development"/>
    <property type="evidence" value="ECO:0007669"/>
    <property type="project" value="Ensembl"/>
</dbReference>
<dbReference type="GO" id="GO:0045064">
    <property type="term" value="P:T-helper 2 cell differentiation"/>
    <property type="evidence" value="ECO:0000314"/>
    <property type="project" value="UniProtKB"/>
</dbReference>
<dbReference type="GO" id="GO:0045815">
    <property type="term" value="P:transcription initiation-coupled chromatin remodeling"/>
    <property type="evidence" value="ECO:0000314"/>
    <property type="project" value="UniProtKB"/>
</dbReference>
<dbReference type="GO" id="GO:0008542">
    <property type="term" value="P:visual learning"/>
    <property type="evidence" value="ECO:0007669"/>
    <property type="project" value="Ensembl"/>
</dbReference>
<dbReference type="CDD" id="cd05493">
    <property type="entry name" value="Bromo_ALL-1"/>
    <property type="match status" value="1"/>
</dbReference>
<dbReference type="CDD" id="cd15693">
    <property type="entry name" value="ePHD_KMT2A"/>
    <property type="match status" value="1"/>
</dbReference>
<dbReference type="CDD" id="cd15588">
    <property type="entry name" value="PHD1_KMT2A"/>
    <property type="match status" value="1"/>
</dbReference>
<dbReference type="CDD" id="cd15590">
    <property type="entry name" value="PHD2_KMT2A"/>
    <property type="match status" value="1"/>
</dbReference>
<dbReference type="CDD" id="cd15592">
    <property type="entry name" value="PHD3_KMT2A"/>
    <property type="match status" value="1"/>
</dbReference>
<dbReference type="CDD" id="cd19170">
    <property type="entry name" value="SET_KMT2A_2B"/>
    <property type="match status" value="1"/>
</dbReference>
<dbReference type="DisProt" id="DP01116"/>
<dbReference type="FunFam" id="3.30.160.360:FF:000002">
    <property type="entry name" value="Histone-lysine N-methyltransferase"/>
    <property type="match status" value="1"/>
</dbReference>
<dbReference type="FunFam" id="3.30.160.360:FF:000003">
    <property type="entry name" value="Histone-lysine N-methyltransferase"/>
    <property type="match status" value="1"/>
</dbReference>
<dbReference type="FunFam" id="3.30.40.10:FF:000002">
    <property type="entry name" value="Histone-lysine N-methyltransferase"/>
    <property type="match status" value="1"/>
</dbReference>
<dbReference type="FunFam" id="3.30.40.10:FF:000071">
    <property type="entry name" value="Histone-lysine N-methyltransferase"/>
    <property type="match status" value="1"/>
</dbReference>
<dbReference type="FunFam" id="3.30.40.10:FF:000089">
    <property type="entry name" value="Histone-lysine N-methyltransferase"/>
    <property type="match status" value="1"/>
</dbReference>
<dbReference type="FunFam" id="2.170.270.10:FF:000149">
    <property type="entry name" value="Myeloid/lymphoid or mixed-lineage leukemia"/>
    <property type="match status" value="1"/>
</dbReference>
<dbReference type="Gene3D" id="3.30.160.360">
    <property type="match status" value="2"/>
</dbReference>
<dbReference type="Gene3D" id="6.10.250.2390">
    <property type="match status" value="1"/>
</dbReference>
<dbReference type="Gene3D" id="1.20.920.10">
    <property type="entry name" value="Bromodomain-like"/>
    <property type="match status" value="1"/>
</dbReference>
<dbReference type="Gene3D" id="2.170.270.10">
    <property type="entry name" value="SET domain"/>
    <property type="match status" value="1"/>
</dbReference>
<dbReference type="Gene3D" id="3.30.40.10">
    <property type="entry name" value="Zinc/RING finger domain, C3HC4 (zinc finger)"/>
    <property type="match status" value="3"/>
</dbReference>
<dbReference type="IDEAL" id="IID00379"/>
<dbReference type="InterPro" id="IPR001487">
    <property type="entry name" value="Bromodomain"/>
</dbReference>
<dbReference type="InterPro" id="IPR036427">
    <property type="entry name" value="Bromodomain-like_sf"/>
</dbReference>
<dbReference type="InterPro" id="IPR034732">
    <property type="entry name" value="EPHD"/>
</dbReference>
<dbReference type="InterPro" id="IPR003889">
    <property type="entry name" value="FYrich_C"/>
</dbReference>
<dbReference type="InterPro" id="IPR003888">
    <property type="entry name" value="FYrich_N"/>
</dbReference>
<dbReference type="InterPro" id="IPR047219">
    <property type="entry name" value="KMT2A_2B_SET"/>
</dbReference>
<dbReference type="InterPro" id="IPR041958">
    <property type="entry name" value="KMT2A_ePHD"/>
</dbReference>
<dbReference type="InterPro" id="IPR042023">
    <property type="entry name" value="KMT2A_PHD1"/>
</dbReference>
<dbReference type="InterPro" id="IPR042025">
    <property type="entry name" value="KMT2A_PHD2"/>
</dbReference>
<dbReference type="InterPro" id="IPR044133">
    <property type="entry name" value="KMT2A_PHD3"/>
</dbReference>
<dbReference type="InterPro" id="IPR016569">
    <property type="entry name" value="MeTrfase_trithorax"/>
</dbReference>
<dbReference type="InterPro" id="IPR003616">
    <property type="entry name" value="Post-SET_dom"/>
</dbReference>
<dbReference type="InterPro" id="IPR001214">
    <property type="entry name" value="SET_dom"/>
</dbReference>
<dbReference type="InterPro" id="IPR046341">
    <property type="entry name" value="SET_dom_sf"/>
</dbReference>
<dbReference type="InterPro" id="IPR002857">
    <property type="entry name" value="Znf_CXXC"/>
</dbReference>
<dbReference type="InterPro" id="IPR011011">
    <property type="entry name" value="Znf_FYVE_PHD"/>
</dbReference>
<dbReference type="InterPro" id="IPR001965">
    <property type="entry name" value="Znf_PHD"/>
</dbReference>
<dbReference type="InterPro" id="IPR019787">
    <property type="entry name" value="Znf_PHD-finger"/>
</dbReference>
<dbReference type="InterPro" id="IPR013083">
    <property type="entry name" value="Znf_RING/FYVE/PHD"/>
</dbReference>
<dbReference type="PANTHER" id="PTHR45838:SF2">
    <property type="entry name" value="HISTONE-LYSINE N-METHYLTRANSFERASE 2A"/>
    <property type="match status" value="1"/>
</dbReference>
<dbReference type="PANTHER" id="PTHR45838">
    <property type="entry name" value="HISTONE-LYSINE-N-METHYLTRANSFERASE 2 KMT2 FAMILY MEMBER"/>
    <property type="match status" value="1"/>
</dbReference>
<dbReference type="Pfam" id="PF05965">
    <property type="entry name" value="FYRC"/>
    <property type="match status" value="1"/>
</dbReference>
<dbReference type="Pfam" id="PF05964">
    <property type="entry name" value="FYRN"/>
    <property type="match status" value="1"/>
</dbReference>
<dbReference type="Pfam" id="PF00628">
    <property type="entry name" value="PHD"/>
    <property type="match status" value="2"/>
</dbReference>
<dbReference type="Pfam" id="PF00856">
    <property type="entry name" value="SET"/>
    <property type="match status" value="1"/>
</dbReference>
<dbReference type="Pfam" id="PF02008">
    <property type="entry name" value="zf-CXXC"/>
    <property type="match status" value="1"/>
</dbReference>
<dbReference type="Pfam" id="PF13771">
    <property type="entry name" value="zf-HC5HC2H"/>
    <property type="match status" value="1"/>
</dbReference>
<dbReference type="PIRSF" id="PIRSF010354">
    <property type="entry name" value="Methyltransferase_trithorax"/>
    <property type="match status" value="1"/>
</dbReference>
<dbReference type="SMART" id="SM00297">
    <property type="entry name" value="BROMO"/>
    <property type="match status" value="1"/>
</dbReference>
<dbReference type="SMART" id="SM00542">
    <property type="entry name" value="FYRC"/>
    <property type="match status" value="1"/>
</dbReference>
<dbReference type="SMART" id="SM00541">
    <property type="entry name" value="FYRN"/>
    <property type="match status" value="1"/>
</dbReference>
<dbReference type="SMART" id="SM00249">
    <property type="entry name" value="PHD"/>
    <property type="match status" value="4"/>
</dbReference>
<dbReference type="SMART" id="SM00508">
    <property type="entry name" value="PostSET"/>
    <property type="match status" value="1"/>
</dbReference>
<dbReference type="SMART" id="SM00317">
    <property type="entry name" value="SET"/>
    <property type="match status" value="1"/>
</dbReference>
<dbReference type="SUPFAM" id="SSF47370">
    <property type="entry name" value="Bromodomain"/>
    <property type="match status" value="1"/>
</dbReference>
<dbReference type="SUPFAM" id="SSF57903">
    <property type="entry name" value="FYVE/PHD zinc finger"/>
    <property type="match status" value="2"/>
</dbReference>
<dbReference type="SUPFAM" id="SSF82199">
    <property type="entry name" value="SET domain"/>
    <property type="match status" value="1"/>
</dbReference>
<dbReference type="PROSITE" id="PS50014">
    <property type="entry name" value="BROMODOMAIN_2"/>
    <property type="match status" value="1"/>
</dbReference>
<dbReference type="PROSITE" id="PS51805">
    <property type="entry name" value="EPHD"/>
    <property type="match status" value="1"/>
</dbReference>
<dbReference type="PROSITE" id="PS51543">
    <property type="entry name" value="FYRC"/>
    <property type="match status" value="1"/>
</dbReference>
<dbReference type="PROSITE" id="PS51542">
    <property type="entry name" value="FYRN"/>
    <property type="match status" value="1"/>
</dbReference>
<dbReference type="PROSITE" id="PS50868">
    <property type="entry name" value="POST_SET"/>
    <property type="match status" value="1"/>
</dbReference>
<dbReference type="PROSITE" id="PS50280">
    <property type="entry name" value="SET"/>
    <property type="match status" value="1"/>
</dbReference>
<dbReference type="PROSITE" id="PS51058">
    <property type="entry name" value="ZF_CXXC"/>
    <property type="match status" value="1"/>
</dbReference>
<dbReference type="PROSITE" id="PS01359">
    <property type="entry name" value="ZF_PHD_1"/>
    <property type="match status" value="3"/>
</dbReference>
<dbReference type="PROSITE" id="PS50016">
    <property type="entry name" value="ZF_PHD_2"/>
    <property type="match status" value="3"/>
</dbReference>
<feature type="chain" id="PRO_0000124876" description="Histone-lysine N-methyltransferase 2A">
    <location>
        <begin position="1"/>
        <end position="3969"/>
    </location>
</feature>
<feature type="chain" id="PRO_0000390949" description="MLL cleavage product N320" evidence="52 53">
    <location>
        <begin position="1"/>
        <end position="2718"/>
    </location>
</feature>
<feature type="chain" id="PRO_0000390950" description="MLL cleavage product C180" evidence="52 53">
    <location>
        <begin position="2719"/>
        <end position="3969"/>
    </location>
</feature>
<feature type="domain" description="Bromo" evidence="2">
    <location>
        <begin position="1635"/>
        <end position="1765"/>
    </location>
</feature>
<feature type="domain" description="FYR N-terminal" evidence="7">
    <location>
        <begin position="2018"/>
        <end position="2074"/>
    </location>
</feature>
<feature type="domain" description="FYR C-terminal" evidence="8">
    <location>
        <begin position="3666"/>
        <end position="3747"/>
    </location>
</feature>
<feature type="domain" description="SET" evidence="5">
    <location>
        <begin position="3829"/>
        <end position="3945"/>
    </location>
</feature>
<feature type="domain" description="Post-SET" evidence="4">
    <location>
        <begin position="3953"/>
        <end position="3969"/>
    </location>
</feature>
<feature type="DNA-binding region" description="A.T hook 1">
    <location>
        <begin position="169"/>
        <end position="180"/>
    </location>
</feature>
<feature type="DNA-binding region" description="A.T hook 2">
    <location>
        <begin position="217"/>
        <end position="227"/>
    </location>
</feature>
<feature type="DNA-binding region" description="A.T hook 3">
    <location>
        <begin position="301"/>
        <end position="309"/>
    </location>
</feature>
<feature type="zinc finger region" description="CXXC-type" evidence="6 41">
    <location>
        <begin position="1147"/>
        <end position="1195"/>
    </location>
</feature>
<feature type="zinc finger region" description="PHD-type 1" evidence="3">
    <location>
        <begin position="1431"/>
        <end position="1482"/>
    </location>
</feature>
<feature type="zinc finger region" description="PHD-type 2" evidence="3">
    <location>
        <begin position="1479"/>
        <end position="1533"/>
    </location>
</feature>
<feature type="zinc finger region" description="PHD-type 3" evidence="3">
    <location>
        <begin position="1566"/>
        <end position="1627"/>
    </location>
</feature>
<feature type="zinc finger region" description="C2HC pre-PHD-type" evidence="9">
    <location>
        <begin position="1870"/>
        <end position="1910"/>
    </location>
</feature>
<feature type="zinc finger region" description="PHD-type 4" evidence="9">
    <location>
        <begin position="1931"/>
        <end position="1978"/>
    </location>
</feature>
<feature type="region of interest" description="Disordered" evidence="10">
    <location>
        <begin position="1"/>
        <end position="108"/>
    </location>
</feature>
<feature type="region of interest" description="Disordered" evidence="10">
    <location>
        <begin position="132"/>
        <end position="253"/>
    </location>
</feature>
<feature type="region of interest" description="Disordered" evidence="10">
    <location>
        <begin position="301"/>
        <end position="352"/>
    </location>
</feature>
<feature type="region of interest" description="Disordered" evidence="10">
    <location>
        <begin position="445"/>
        <end position="585"/>
    </location>
</feature>
<feature type="region of interest" description="Disordered" evidence="10">
    <location>
        <begin position="713"/>
        <end position="780"/>
    </location>
</feature>
<feature type="region of interest" description="Disordered" evidence="10">
    <location>
        <begin position="798"/>
        <end position="949"/>
    </location>
</feature>
<feature type="region of interest" description="Disordered" evidence="10">
    <location>
        <begin position="1038"/>
        <end position="1066"/>
    </location>
</feature>
<feature type="region of interest" description="Disordered" evidence="10">
    <location>
        <begin position="1106"/>
        <end position="1166"/>
    </location>
</feature>
<feature type="region of interest" description="Disordered" evidence="10">
    <location>
        <begin position="1200"/>
        <end position="1375"/>
    </location>
</feature>
<feature type="region of interest" description="Interaction with histone H3K4me3" evidence="27">
    <location>
        <begin position="1584"/>
        <end position="1600"/>
    </location>
</feature>
<feature type="region of interest" description="Disordered" evidence="10">
    <location>
        <begin position="1663"/>
        <end position="1713"/>
    </location>
</feature>
<feature type="region of interest" description="Disordered" evidence="10">
    <location>
        <begin position="1806"/>
        <end position="1869"/>
    </location>
</feature>
<feature type="region of interest" description="Disordered" evidence="10">
    <location>
        <begin position="2081"/>
        <end position="2133"/>
    </location>
</feature>
<feature type="region of interest" description="Disordered" evidence="10">
    <location>
        <begin position="2145"/>
        <end position="2232"/>
    </location>
</feature>
<feature type="region of interest" description="Disordered" evidence="10">
    <location>
        <begin position="2275"/>
        <end position="2333"/>
    </location>
</feature>
<feature type="region of interest" description="Disordered" evidence="10">
    <location>
        <begin position="2373"/>
        <end position="2460"/>
    </location>
</feature>
<feature type="region of interest" description="Disordered" evidence="10">
    <location>
        <begin position="2475"/>
        <end position="2618"/>
    </location>
</feature>
<feature type="region of interest" description="Disordered" evidence="10">
    <location>
        <begin position="2647"/>
        <end position="2675"/>
    </location>
</feature>
<feature type="region of interest" description="Disordered" evidence="10">
    <location>
        <begin position="2713"/>
        <end position="2821"/>
    </location>
</feature>
<feature type="region of interest" description="Disordered" evidence="10">
    <location>
        <begin position="2961"/>
        <end position="3064"/>
    </location>
</feature>
<feature type="region of interest" description="Disordered" evidence="10">
    <location>
        <begin position="3166"/>
        <end position="3244"/>
    </location>
</feature>
<feature type="region of interest" description="Disordered" evidence="10">
    <location>
        <begin position="3464"/>
        <end position="3608"/>
    </location>
</feature>
<feature type="region of interest" description="Disordered" evidence="10">
    <location>
        <begin position="3620"/>
        <end position="3643"/>
    </location>
</feature>
<feature type="region of interest" description="Disordered" evidence="10">
    <location>
        <begin position="3785"/>
        <end position="3808"/>
    </location>
</feature>
<feature type="short sequence motif" description="Menin-binding motif (MBM)" evidence="29">
    <location>
        <begin position="6"/>
        <end position="25"/>
    </location>
</feature>
<feature type="short sequence motif" description="Integrase domain-binding motif 1 (IBM1)" evidence="37">
    <location>
        <begin position="123"/>
        <end position="134"/>
    </location>
</feature>
<feature type="short sequence motif" description="Integrase domain-binding motif 2 (IBM2)" evidence="37">
    <location>
        <begin position="147"/>
        <end position="152"/>
    </location>
</feature>
<feature type="short sequence motif" description="9aaTAD" evidence="19">
    <location>
        <begin position="2847"/>
        <end position="2855"/>
    </location>
</feature>
<feature type="short sequence motif" description="WDR5 interaction motif (WIN)" evidence="21 30">
    <location>
        <begin position="3762"/>
        <end position="3767"/>
    </location>
</feature>
<feature type="compositionally biased region" description="Gly residues" evidence="10">
    <location>
        <begin position="15"/>
        <end position="29"/>
    </location>
</feature>
<feature type="compositionally biased region" description="Low complexity" evidence="10">
    <location>
        <begin position="59"/>
        <end position="69"/>
    </location>
</feature>
<feature type="compositionally biased region" description="Low complexity" evidence="10">
    <location>
        <begin position="77"/>
        <end position="104"/>
    </location>
</feature>
<feature type="compositionally biased region" description="Basic and acidic residues" evidence="10">
    <location>
        <begin position="202"/>
        <end position="220"/>
    </location>
</feature>
<feature type="compositionally biased region" description="Basic and acidic residues" evidence="10">
    <location>
        <begin position="237"/>
        <end position="253"/>
    </location>
</feature>
<feature type="compositionally biased region" description="Basic and acidic residues" evidence="10">
    <location>
        <begin position="323"/>
        <end position="347"/>
    </location>
</feature>
<feature type="compositionally biased region" description="Low complexity" evidence="10">
    <location>
        <begin position="452"/>
        <end position="491"/>
    </location>
</feature>
<feature type="compositionally biased region" description="Low complexity" evidence="10">
    <location>
        <begin position="546"/>
        <end position="559"/>
    </location>
</feature>
<feature type="compositionally biased region" description="Pro residues" evidence="10">
    <location>
        <begin position="560"/>
        <end position="573"/>
    </location>
</feature>
<feature type="compositionally biased region" description="Polar residues" evidence="10">
    <location>
        <begin position="716"/>
        <end position="732"/>
    </location>
</feature>
<feature type="compositionally biased region" description="Low complexity" evidence="10">
    <location>
        <begin position="762"/>
        <end position="780"/>
    </location>
</feature>
<feature type="compositionally biased region" description="Polar residues" evidence="10">
    <location>
        <begin position="798"/>
        <end position="808"/>
    </location>
</feature>
<feature type="compositionally biased region" description="Low complexity" evidence="10">
    <location>
        <begin position="820"/>
        <end position="841"/>
    </location>
</feature>
<feature type="compositionally biased region" description="Basic and acidic residues" evidence="10">
    <location>
        <begin position="846"/>
        <end position="890"/>
    </location>
</feature>
<feature type="compositionally biased region" description="Polar residues" evidence="10">
    <location>
        <begin position="1043"/>
        <end position="1062"/>
    </location>
</feature>
<feature type="compositionally biased region" description="Basic and acidic residues" evidence="10">
    <location>
        <begin position="1220"/>
        <end position="1232"/>
    </location>
</feature>
<feature type="compositionally biased region" description="Low complexity" evidence="10">
    <location>
        <begin position="1233"/>
        <end position="1243"/>
    </location>
</feature>
<feature type="compositionally biased region" description="Basic and acidic residues" evidence="10">
    <location>
        <begin position="1248"/>
        <end position="1273"/>
    </location>
</feature>
<feature type="compositionally biased region" description="Polar residues" evidence="10">
    <location>
        <begin position="1284"/>
        <end position="1300"/>
    </location>
</feature>
<feature type="compositionally biased region" description="Pro residues" evidence="10">
    <location>
        <begin position="1304"/>
        <end position="1313"/>
    </location>
</feature>
<feature type="compositionally biased region" description="Pro residues" evidence="10">
    <location>
        <begin position="1826"/>
        <end position="1847"/>
    </location>
</feature>
<feature type="compositionally biased region" description="Polar residues" evidence="10">
    <location>
        <begin position="2095"/>
        <end position="2115"/>
    </location>
</feature>
<feature type="compositionally biased region" description="Polar residues" evidence="10">
    <location>
        <begin position="2214"/>
        <end position="2232"/>
    </location>
</feature>
<feature type="compositionally biased region" description="Low complexity" evidence="10">
    <location>
        <begin position="2283"/>
        <end position="2302"/>
    </location>
</feature>
<feature type="compositionally biased region" description="Polar residues" evidence="10">
    <location>
        <begin position="2310"/>
        <end position="2319"/>
    </location>
</feature>
<feature type="compositionally biased region" description="Polar residues" evidence="10">
    <location>
        <begin position="2406"/>
        <end position="2421"/>
    </location>
</feature>
<feature type="compositionally biased region" description="Basic and acidic residues" evidence="10">
    <location>
        <begin position="2432"/>
        <end position="2442"/>
    </location>
</feature>
<feature type="compositionally biased region" description="Polar residues" evidence="10">
    <location>
        <begin position="2543"/>
        <end position="2563"/>
    </location>
</feature>
<feature type="compositionally biased region" description="Polar residues" evidence="10">
    <location>
        <begin position="2573"/>
        <end position="2592"/>
    </location>
</feature>
<feature type="compositionally biased region" description="Polar residues" evidence="10">
    <location>
        <begin position="2726"/>
        <end position="2741"/>
    </location>
</feature>
<feature type="compositionally biased region" description="Basic and acidic residues" evidence="10">
    <location>
        <begin position="2744"/>
        <end position="2782"/>
    </location>
</feature>
<feature type="compositionally biased region" description="Polar residues" evidence="10">
    <location>
        <begin position="2784"/>
        <end position="2795"/>
    </location>
</feature>
<feature type="compositionally biased region" description="Low complexity" evidence="10">
    <location>
        <begin position="2796"/>
        <end position="2805"/>
    </location>
</feature>
<feature type="compositionally biased region" description="Polar residues" evidence="10">
    <location>
        <begin position="2812"/>
        <end position="2821"/>
    </location>
</feature>
<feature type="compositionally biased region" description="Polar residues" evidence="10">
    <location>
        <begin position="2963"/>
        <end position="2972"/>
    </location>
</feature>
<feature type="compositionally biased region" description="Polar residues" evidence="10">
    <location>
        <begin position="3016"/>
        <end position="3030"/>
    </location>
</feature>
<feature type="compositionally biased region" description="Polar residues" evidence="10">
    <location>
        <begin position="3039"/>
        <end position="3064"/>
    </location>
</feature>
<feature type="compositionally biased region" description="Low complexity" evidence="10">
    <location>
        <begin position="3171"/>
        <end position="3182"/>
    </location>
</feature>
<feature type="compositionally biased region" description="Polar residues" evidence="10">
    <location>
        <begin position="3198"/>
        <end position="3216"/>
    </location>
</feature>
<feature type="compositionally biased region" description="Basic residues" evidence="10">
    <location>
        <begin position="3218"/>
        <end position="3233"/>
    </location>
</feature>
<feature type="compositionally biased region" description="Polar residues" evidence="10">
    <location>
        <begin position="3476"/>
        <end position="3489"/>
    </location>
</feature>
<feature type="compositionally biased region" description="Low complexity" evidence="10">
    <location>
        <begin position="3508"/>
        <end position="3529"/>
    </location>
</feature>
<feature type="compositionally biased region" description="Polar residues" evidence="10">
    <location>
        <begin position="3591"/>
        <end position="3603"/>
    </location>
</feature>
<feature type="binding site" evidence="6 41 76">
    <location>
        <position position="1155"/>
    </location>
    <ligand>
        <name>Zn(2+)</name>
        <dbReference type="ChEBI" id="CHEBI:29105"/>
        <label>1</label>
    </ligand>
</feature>
<feature type="binding site" evidence="6 41 76">
    <location>
        <position position="1158"/>
    </location>
    <ligand>
        <name>Zn(2+)</name>
        <dbReference type="ChEBI" id="CHEBI:29105"/>
        <label>1</label>
    </ligand>
</feature>
<feature type="binding site" evidence="6 41 76">
    <location>
        <position position="1161"/>
    </location>
    <ligand>
        <name>Zn(2+)</name>
        <dbReference type="ChEBI" id="CHEBI:29105"/>
        <label>1</label>
    </ligand>
</feature>
<feature type="binding site" evidence="6 41 76">
    <location>
        <position position="1167"/>
    </location>
    <ligand>
        <name>Zn(2+)</name>
        <dbReference type="ChEBI" id="CHEBI:29105"/>
        <label>2</label>
    </ligand>
</feature>
<feature type="binding site" evidence="6 41 76">
    <location>
        <position position="1170"/>
    </location>
    <ligand>
        <name>Zn(2+)</name>
        <dbReference type="ChEBI" id="CHEBI:29105"/>
        <label>2</label>
    </ligand>
</feature>
<feature type="binding site" evidence="6 41 76">
    <location>
        <position position="1173"/>
    </location>
    <ligand>
        <name>Zn(2+)</name>
        <dbReference type="ChEBI" id="CHEBI:29105"/>
        <label>2</label>
    </ligand>
</feature>
<feature type="binding site" evidence="6 41 76">
    <location>
        <position position="1189"/>
    </location>
    <ligand>
        <name>Zn(2+)</name>
        <dbReference type="ChEBI" id="CHEBI:29105"/>
        <label>2</label>
    </ligand>
</feature>
<feature type="binding site" evidence="6 41 76">
    <location>
        <position position="1194"/>
    </location>
    <ligand>
        <name>Zn(2+)</name>
        <dbReference type="ChEBI" id="CHEBI:29105"/>
        <label>1</label>
    </ligand>
</feature>
<feature type="binding site" evidence="5 23 40 65 77 78">
    <location>
        <position position="3839"/>
    </location>
    <ligand>
        <name>S-adenosyl-L-methionine</name>
        <dbReference type="ChEBI" id="CHEBI:59789"/>
    </ligand>
</feature>
<feature type="binding site" evidence="5 23 40 65 77 78">
    <location>
        <position position="3841"/>
    </location>
    <ligand>
        <name>S-adenosyl-L-methionine</name>
        <dbReference type="ChEBI" id="CHEBI:59789"/>
    </ligand>
</feature>
<feature type="binding site" evidence="5 23 40 66 77">
    <location>
        <position position="3883"/>
    </location>
    <ligand>
        <name>S-adenosyl-L-methionine</name>
        <dbReference type="ChEBI" id="CHEBI:59789"/>
    </ligand>
</feature>
<feature type="binding site" evidence="23 40 65 77 78">
    <location>
        <begin position="3906"/>
        <end position="3907"/>
    </location>
    <ligand>
        <name>S-adenosyl-L-methionine</name>
        <dbReference type="ChEBI" id="CHEBI:59789"/>
    </ligand>
</feature>
<feature type="binding site" evidence="18 23 65 66 77 78">
    <location>
        <position position="3909"/>
    </location>
    <ligand>
        <name>Zn(2+)</name>
        <dbReference type="ChEBI" id="CHEBI:29105"/>
    </ligand>
</feature>
<feature type="binding site" evidence="18 23 65 66 77 78">
    <location>
        <position position="3957"/>
    </location>
    <ligand>
        <name>Zn(2+)</name>
        <dbReference type="ChEBI" id="CHEBI:29105"/>
    </ligand>
</feature>
<feature type="binding site" evidence="5 23 40 65 77 78">
    <location>
        <position position="3958"/>
    </location>
    <ligand>
        <name>S-adenosyl-L-methionine</name>
        <dbReference type="ChEBI" id="CHEBI:59789"/>
    </ligand>
</feature>
<feature type="binding site" evidence="18 23 65 66 77 78">
    <location>
        <position position="3959"/>
    </location>
    <ligand>
        <name>Zn(2+)</name>
        <dbReference type="ChEBI" id="CHEBI:29105"/>
    </ligand>
</feature>
<feature type="binding site" evidence="18 23 65 66 78">
    <location>
        <position position="3964"/>
    </location>
    <ligand>
        <name>Zn(2+)</name>
        <dbReference type="ChEBI" id="CHEBI:29105"/>
    </ligand>
</feature>
<feature type="site" description="Breakpoint for translocation to form KMT2A-ZFYVE19 oncogene">
    <location>
        <begin position="1334"/>
        <end position="1335"/>
    </location>
</feature>
<feature type="site" description="Breakpoint for translocation to form KMT2A-AF3P21 and KMT2A-KNL1 oncogenes">
    <location>
        <begin position="1362"/>
        <end position="1363"/>
    </location>
</feature>
<feature type="site" description="Breakpoint for translocation to form KMT2A-CENPK oncogene">
    <location>
        <begin position="1362"/>
        <end position="1363"/>
    </location>
</feature>
<feature type="site" description="Breakpoint for translocation to form KMT2A-FRYL fusion protein">
    <location>
        <position position="1362"/>
    </location>
</feature>
<feature type="site" description="Breakpoint for translocation to form KMT2A-AFF4 fusion protein">
    <location>
        <begin position="1406"/>
        <end position="1407"/>
    </location>
</feature>
<feature type="site" description="Breakpoint for translocation to form KMT2A-GAS7 oncogene">
    <location>
        <begin position="1444"/>
        <end position="1445"/>
    </location>
</feature>
<feature type="site" description="Breakpoint for translocation to form KMT2A-LPP">
    <location>
        <begin position="1444"/>
        <end position="1445"/>
    </location>
</feature>
<feature type="site" description="Cleavage; by TASP1, site 1" evidence="14">
    <location>
        <begin position="2666"/>
        <end position="2667"/>
    </location>
</feature>
<feature type="site" description="Cleavage; by TASP1, site 2" evidence="14">
    <location>
        <begin position="2718"/>
        <end position="2719"/>
    </location>
</feature>
<feature type="site" description="Important for WDR5-recognition and binding" evidence="24">
    <location>
        <position position="3765"/>
    </location>
</feature>
<feature type="modified residue" description="Phosphoserine; by CK2" evidence="42">
    <location>
        <position position="136"/>
    </location>
</feature>
<feature type="modified residue" description="Phosphoserine; by CK2" evidence="42">
    <location>
        <position position="142"/>
    </location>
</feature>
<feature type="modified residue" description="Phosphoserine" evidence="42 81 84 85">
    <location>
        <position position="153"/>
    </location>
</feature>
<feature type="modified residue" description="Phosphoserine" evidence="81 85">
    <location>
        <position position="197"/>
    </location>
</feature>
<feature type="modified residue" description="N6-acetyllysine" evidence="1">
    <location>
        <position position="239"/>
    </location>
</feature>
<feature type="modified residue" description="N6-acetyllysine" evidence="1">
    <location>
        <position position="373"/>
    </location>
</feature>
<feature type="modified residue" description="Phosphoserine" evidence="81">
    <location>
        <position position="518"/>
    </location>
</feature>
<feature type="modified residue" description="N6-acetyllysine" evidence="83">
    <location>
        <position position="636"/>
    </location>
</feature>
<feature type="modified residue" description="Phosphoserine" evidence="81">
    <location>
        <position position="680"/>
    </location>
</feature>
<feature type="modified residue" description="Phosphothreonine" evidence="81">
    <location>
        <position position="840"/>
    </location>
</feature>
<feature type="modified residue" description="Phosphoserine" evidence="85">
    <location>
        <position position="926"/>
    </location>
</feature>
<feature type="modified residue" description="Phosphoserine" evidence="81">
    <location>
        <position position="1056"/>
    </location>
</feature>
<feature type="modified residue" description="N6-acetyllysine" evidence="83">
    <location>
        <position position="1130"/>
    </location>
</feature>
<feature type="modified residue" description="N6-acetyllysine" evidence="83">
    <location>
        <position position="1235"/>
    </location>
</feature>
<feature type="modified residue" description="Phosphoserine" evidence="88">
    <location>
        <position position="1837"/>
    </location>
</feature>
<feature type="modified residue" description="Phosphothreonine" evidence="81">
    <location>
        <position position="1845"/>
    </location>
</feature>
<feature type="modified residue" description="Phosphoserine" evidence="82 87">
    <location>
        <position position="1858"/>
    </location>
</feature>
<feature type="modified residue" description="Phosphoserine" evidence="81 84 87">
    <location>
        <position position="2098"/>
    </location>
</feature>
<feature type="modified residue" description="Phosphothreonine" evidence="81">
    <location>
        <position position="2147"/>
    </location>
</feature>
<feature type="modified residue" description="Phosphoserine" evidence="81">
    <location>
        <position position="2151"/>
    </location>
</feature>
<feature type="modified residue" description="Phosphoserine" evidence="86">
    <location>
        <position position="2201"/>
    </location>
</feature>
<feature type="modified residue" description="Phosphothreonine" evidence="81 87">
    <location>
        <position position="2525"/>
    </location>
</feature>
<feature type="modified residue" description="Phosphoserine" evidence="87">
    <location>
        <position position="2611"/>
    </location>
</feature>
<feature type="modified residue" description="Phosphoserine" evidence="87">
    <location>
        <position position="2796"/>
    </location>
</feature>
<feature type="modified residue" description="Phosphoserine" evidence="81 85 87">
    <location>
        <position position="2955"/>
    </location>
</feature>
<feature type="modified residue" description="N6-acetyllysine" evidence="1">
    <location>
        <position position="2958"/>
    </location>
</feature>
<feature type="modified residue" description="Phosphoserine" evidence="81 87">
    <location>
        <position position="3036"/>
    </location>
</feature>
<feature type="modified residue" description="Phosphothreonine" evidence="81 85">
    <location>
        <position position="3372"/>
    </location>
</feature>
<feature type="modified residue" description="N6-acetyllysine" evidence="1">
    <location>
        <position position="3462"/>
    </location>
</feature>
<feature type="modified residue" description="Phosphoserine" evidence="81 87">
    <location>
        <position position="3511"/>
    </location>
</feature>
<feature type="modified residue" description="Phosphoserine" evidence="84">
    <location>
        <position position="3515"/>
    </location>
</feature>
<feature type="modified residue" description="Phosphoserine" evidence="87">
    <location>
        <position position="3527"/>
    </location>
</feature>
<feature type="modified residue" description="S-methylcysteine; by autocatalysis" evidence="35">
    <location>
        <position position="3882"/>
    </location>
</feature>
<feature type="cross-link" description="Glycyl lysine isopeptide (Lys-Gly) (interchain with G-Cter in SUMO2)" evidence="89">
    <location>
        <position position="2528"/>
    </location>
</feature>
<feature type="splice variant" id="VSP_006666" description="In isoform 2." evidence="50">
    <location>
        <begin position="1407"/>
        <end position="1444"/>
    </location>
</feature>
<feature type="splice variant" id="VSP_046879" description="In isoform 3." evidence="47 49">
    <original>S</original>
    <variation>SGTE</variation>
    <location>
        <position position="1603"/>
    </location>
</feature>
<feature type="sequence variant" id="VAR_021317" description="In dbSNP:rs9332745." evidence="44">
    <original>A</original>
    <variation>G</variation>
    <location>
        <position position="30"/>
    </location>
</feature>
<feature type="sequence variant" id="VAR_021318" description="In dbSNP:rs9332747." evidence="46">
    <original>A</original>
    <variation>V</variation>
    <location>
        <position position="53"/>
    </location>
</feature>
<feature type="sequence variant" id="VAR_021319" description="In dbSNP:rs9332772." evidence="46">
    <original>E</original>
    <variation>K</variation>
    <location>
        <position position="502"/>
    </location>
</feature>
<feature type="sequence variant" id="VAR_052652" description="In dbSNP:rs693598.">
    <original>Q</original>
    <variation>P</variation>
    <location>
        <position position="1975"/>
    </location>
</feature>
<feature type="sequence variant" id="VAR_021320" description="In dbSNP:rs9332837." evidence="46">
    <original>S</original>
    <variation>T</variation>
    <location>
        <position position="2319"/>
    </location>
</feature>
<feature type="sequence variant" id="VAR_021321" description="In dbSNP:rs9332838." evidence="46">
    <original>P</original>
    <variation>R</variation>
    <location>
        <position position="2354"/>
    </location>
</feature>
<feature type="sequence variant" id="VAR_021322" description="In dbSNP:rs9332839." evidence="46">
    <original>Q</original>
    <variation>R</variation>
    <location>
        <position position="2387"/>
    </location>
</feature>
<feature type="sequence variant" id="VAR_021323" description="In dbSNP:rs9332859." evidence="46">
    <original>V</original>
    <variation>I</variation>
    <location>
        <position position="3714"/>
    </location>
</feature>
<feature type="sequence variant" id="VAR_021324" description="In dbSNP:rs9332861." evidence="46">
    <original>S</original>
    <variation>A</variation>
    <location>
        <position position="3773"/>
    </location>
</feature>
<feature type="mutagenesis site" description="Reduced interaction with MEN1." evidence="29">
    <original>R</original>
    <variation>A</variation>
    <location>
        <position position="6"/>
    </location>
</feature>
<feature type="mutagenesis site" description="Reduced interaction with MEN1." evidence="29">
    <original>W</original>
    <variation>A</variation>
    <location>
        <position position="7"/>
    </location>
</feature>
<feature type="mutagenesis site" description="Reduced interaction with MEN1." evidence="29">
    <original>R</original>
    <variation>A</variation>
    <location>
        <position position="8"/>
    </location>
</feature>
<feature type="mutagenesis site" description="Loss of interaction with MEN1." evidence="29">
    <original>F</original>
    <variation>A</variation>
    <location>
        <position position="9"/>
    </location>
</feature>
<feature type="mutagenesis site" description="Reduced interaction with MEN1." evidence="29">
    <original>F</original>
    <variation>H</variation>
    <variation>Y</variation>
    <location>
        <position position="9"/>
    </location>
</feature>
<feature type="mutagenesis site" description="Reduced interaction with MEN1." evidence="29">
    <original>P</original>
    <variation>A</variation>
    <location>
        <position position="10"/>
    </location>
</feature>
<feature type="mutagenesis site" description="Reduced interaction with MEN1." evidence="29">
    <original>A</original>
    <variation>R</variation>
    <location>
        <position position="11"/>
    </location>
</feature>
<feature type="mutagenesis site" description="Reduced interaction with MEN1." evidence="29">
    <original>R</original>
    <variation>A</variation>
    <location>
        <position position="12"/>
    </location>
</feature>
<feature type="mutagenesis site" description="Reduced interaction with MEN1." evidence="29">
    <original>P</original>
    <variation>A</variation>
    <location>
        <position position="13"/>
    </location>
</feature>
<feature type="mutagenesis site" description="Reduced interaction with MEN1; when associated with E-25." evidence="29">
    <original>R</original>
    <variation>E</variation>
    <location>
        <position position="24"/>
    </location>
</feature>
<feature type="mutagenesis site" description="Reduced interaction with MEN1; when associated with E-24." evidence="29">
    <original>R</original>
    <variation>E</variation>
    <location>
        <position position="25"/>
    </location>
</feature>
<feature type="mutagenesis site" description="Weakly affects interaction with PSIP1 whereas significantly decreases interaction of KMT2A-MEN1 complex with PSIP1. Reduced interaction with PSIP1; when associated with A-133." evidence="36 37">
    <original>F</original>
    <variation>A</variation>
    <location>
        <position position="129"/>
    </location>
</feature>
<feature type="mutagenesis site" description="Reduced interaction with PSIP1; when associated with A-133." evidence="42">
    <original>V</original>
    <variation>A</variation>
    <location>
        <position position="132"/>
    </location>
</feature>
<feature type="mutagenesis site" description="Reduced interaction with PSIP1; when associated with A-129 or A-132." evidence="36 42">
    <original>F</original>
    <variation>A</variation>
    <location>
        <position position="133"/>
    </location>
</feature>
<feature type="mutagenesis site" description="Phosphomimetic mutant. Significant increase in interaction with PSIP1; when associated with D-142." evidence="42">
    <original>S</original>
    <variation>D</variation>
    <location>
        <position position="136"/>
    </location>
</feature>
<feature type="mutagenesis site" description="Phosphomimetic mutant. Significant increase in interaction with PSIP1; when associated with D-136." evidence="42">
    <original>S</original>
    <variation>D</variation>
    <location>
        <position position="142"/>
    </location>
</feature>
<feature type="mutagenesis site" description="Loss of interaction with PSIP1; when associated with Q-146 and A-148." evidence="36">
    <original>E</original>
    <variation>Q</variation>
    <location>
        <position position="144"/>
    </location>
</feature>
<feature type="mutagenesis site" description="Loss of interaction with PSIP1; when associated with Q-144 and A-148." evidence="36">
    <original>E</original>
    <variation>Q</variation>
    <location>
        <position position="146"/>
    </location>
</feature>
<feature type="mutagenesis site" description="Reduced interaction with PSIP1. Loss of interaction with PSIP1; when associated with A-149 or Q-144 and Q-146." evidence="36 37">
    <original>F</original>
    <variation>A</variation>
    <location>
        <position position="148"/>
    </location>
</feature>
<feature type="mutagenesis site" description="Loss of interaction with PSIP1; when associated with A-148." evidence="37">
    <original>L</original>
    <variation>A</variation>
    <location>
        <position position="149"/>
    </location>
</feature>
<feature type="mutagenesis site" description="Reduced interaction with PSIP1." evidence="36">
    <original>F</original>
    <variation>A</variation>
    <location>
        <position position="151"/>
    </location>
</feature>
<feature type="mutagenesis site" description="Impairs DNA-binding." evidence="25">
    <original>R</original>
    <variation>A</variation>
    <location>
        <position position="1150"/>
    </location>
</feature>
<feature type="mutagenesis site" description="Impairs DNA-binding." evidence="18">
    <original>R</original>
    <variation>A</variation>
    <location>
        <position position="1151"/>
    </location>
</feature>
<feature type="mutagenesis site" description="No effect on stability or DNA-binding." evidence="18">
    <original>R</original>
    <variation>A</variation>
    <location>
        <position position="1153"/>
    </location>
</feature>
<feature type="mutagenesis site" description="Impairs DNA-binding." evidence="18 25">
    <original>R</original>
    <variation>A</variation>
    <location>
        <position position="1154"/>
    </location>
</feature>
<feature type="mutagenesis site" description="Abolishes zinc-binding and stability of the CXXC-type zinc finger and causes loss of DNA-binding." evidence="18">
    <original>C</original>
    <variation>A</variation>
    <location>
        <position position="1155"/>
    </location>
</feature>
<feature type="mutagenesis site" description="Abolishes zinc-binding and stability of the CXXC-type zinc finger and causes loss of DNA-binding." evidence="18">
    <original>C</original>
    <variation>A</variation>
    <location>
        <position position="1158"/>
    </location>
</feature>
<feature type="mutagenesis site" description="Abolishes zinc-binding and stability of the CXXC-type zinc finger and causes loss of DNA-binding." evidence="18">
    <original>C</original>
    <variation>A</variation>
    <location>
        <position position="1161"/>
    </location>
</feature>
<feature type="mutagenesis site" description="No effect on stability or DNA-binding." evidence="18">
    <original>Q</original>
    <variation>A</variation>
    <location>
        <position position="1162"/>
    </location>
</feature>
<feature type="mutagenesis site" description="Abolishes zinc-binding and stability of the CXXC-type zinc finger and causes loss of DNA-binding." evidence="18">
    <original>D</original>
    <variation>A</variation>
    <location>
        <position position="1166"/>
    </location>
</feature>
<feature type="mutagenesis site" description="Abolishes zinc-binding and stability of the CXXC-type zinc finger and causes loss of DNA-binding." evidence="18">
    <original>C</original>
    <variation>A</variation>
    <location>
        <position position="1167"/>
    </location>
</feature>
<feature type="mutagenesis site" description="Abolishes zinc-binding and stability of the CXXC-type zinc finger and causes loss of DNA-binding." evidence="18">
    <original>C</original>
    <variation>A</variation>
    <location>
        <position position="1170"/>
    </location>
</feature>
<feature type="mutagenesis site" description="No effect on stability or DNA-binding." evidence="18">
    <original>N</original>
    <variation>A</variation>
    <location>
        <position position="1172"/>
    </location>
</feature>
<feature type="mutagenesis site" description="Abolishes zinc-binding and stability of the CXXC-type zinc finger and causes loss of DNA-binding." evidence="18">
    <original>C</original>
    <variation>A</variation>
    <location>
        <position position="1173"/>
    </location>
</feature>
<feature type="mutagenesis site" description="Impairs DNA-binding." evidence="18">
    <original>D</original>
    <variation>A</variation>
    <location>
        <position position="1175"/>
    </location>
</feature>
<feature type="mutagenesis site" description="Impairs DNA-binding." evidence="18">
    <original>K</original>
    <variation>A</variation>
    <location>
        <position position="1176"/>
    </location>
</feature>
<feature type="mutagenesis site" description="Abolishes zinc-binding and stability of the CXXC-type zinc finger and causes loss of DNA-binding." evidence="18">
    <original>KFGG</original>
    <variation>AAAA</variation>
    <location>
        <begin position="1178"/>
        <end position="1181"/>
    </location>
</feature>
<feature type="mutagenesis site" description="Impairs DNA-binding." evidence="18">
    <original>K</original>
    <variation>A</variation>
    <location>
        <position position="1178"/>
    </location>
</feature>
<feature type="mutagenesis site" description="Impairs DNA-binding." evidence="18">
    <original>F</original>
    <variation>A</variation>
    <location>
        <position position="1179"/>
    </location>
</feature>
<feature type="mutagenesis site" description="Impairs DNA-binding." evidence="18">
    <original>N</original>
    <variation>A</variation>
    <location>
        <position position="1183"/>
    </location>
</feature>
<feature type="mutagenesis site" description="Impairs DNA-binding." evidence="18 25">
    <original>K</original>
    <variation>A</variation>
    <location>
        <position position="1185"/>
    </location>
</feature>
<feature type="mutagenesis site" description="Impairs DNA-binding." evidence="18">
    <original>K</original>
    <variation>A</variation>
    <location>
        <position position="1186"/>
    </location>
</feature>
<feature type="mutagenesis site" description="Impairs DNA-binding." evidence="18 25">
    <original>Q</original>
    <variation>A</variation>
    <location>
        <position position="1187"/>
    </location>
</feature>
<feature type="mutagenesis site" description="No effect on stability or DNA-binding." evidence="18 25">
    <original>C</original>
    <variation>A</variation>
    <location>
        <position position="1188"/>
    </location>
</feature>
<feature type="mutagenesis site" description="Abolishes DNA-binding and increases CpG methylation of the HOXA9 promoter region. Does not lead to the development of leukemia when overexpressed in mice as gene fusion with MLLT3." evidence="25">
    <original>C</original>
    <variation>D</variation>
    <location>
        <position position="1188"/>
    </location>
</feature>
<feature type="mutagenesis site" description="Abolishes zinc-binding and stability of the CXXC-type zinc finger and causes loss of DNA-binding." evidence="18">
    <original>C</original>
    <variation>A</variation>
    <location>
        <position position="1189"/>
    </location>
</feature>
<feature type="mutagenesis site" description="Abolishes zinc-binding and stability of the CXXC-type zinc finger and causes loss of DNA-binding." evidence="18">
    <original>R</original>
    <variation>A</variation>
    <location>
        <position position="1192"/>
    </location>
</feature>
<feature type="mutagenesis site" description="Impairs DNA-binding." evidence="18 25">
    <original>K</original>
    <variation>A</variation>
    <location>
        <position position="1193"/>
    </location>
</feature>
<feature type="mutagenesis site" description="Impairs zinc-binding and stability of the CXXC-type zinc finger and causes loss of DNA-binding." evidence="18">
    <original>C</original>
    <variation>A</variation>
    <location>
        <position position="1194"/>
    </location>
</feature>
<feature type="mutagenesis site" description="No effect on stability or DNA-binding." evidence="18">
    <original>Q</original>
    <variation>A</variation>
    <location>
        <position position="1195"/>
    </location>
</feature>
<feature type="mutagenesis site" description="No effect on stability or DNA-binding." evidence="18">
    <original>N</original>
    <variation>A</variation>
    <location>
        <position position="1196"/>
    </location>
</feature>
<feature type="mutagenesis site" description="Mildly decreases DNA-binding." evidence="25">
    <original>L</original>
    <variation>A</variation>
    <location>
        <position position="1197"/>
    </location>
</feature>
<feature type="mutagenesis site" description="No effect on DNA-binding." evidence="25">
    <original>M</original>
    <variation>A</variation>
    <location>
        <position position="1200"/>
    </location>
</feature>
<feature type="mutagenesis site" description="Decreases affinity for histone H3K4me3." evidence="26">
    <original>Y</original>
    <variation>A</variation>
    <location>
        <position position="1581"/>
    </location>
</feature>
<feature type="mutagenesis site" description="Decreases affinity for histone H3K4me3." evidence="26">
    <original>Q</original>
    <variation>A</variation>
    <location>
        <position position="1587"/>
    </location>
</feature>
<feature type="mutagenesis site" description="Abolishes interaction with histone H3K4me3." evidence="27">
    <original>W</original>
    <variation>A</variation>
    <location>
        <position position="1594"/>
    </location>
</feature>
<feature type="mutagenesis site" description="Decreases affinity for histone H3K4me3." evidence="26">
    <original>W</original>
    <variation>E</variation>
    <location>
        <position position="1594"/>
    </location>
</feature>
<feature type="mutagenesis site" description="Decreases binding affinity for PPIE." evidence="27">
    <original>V</original>
    <variation>A</variation>
    <location>
        <position position="1617"/>
    </location>
</feature>
<feature type="mutagenesis site" description="May perturb protein folding and thereby decrease binding affinity for PPIE." evidence="27">
    <original>Y</original>
    <variation>A</variation>
    <location>
        <position position="1619"/>
    </location>
</feature>
<feature type="mutagenesis site" description="Reduces cleavage without abolishing it. Abolishes cleavage by TASP1; when associated with 2718-A--A-2720." evidence="14">
    <original>DG</original>
    <variation>AA</variation>
    <location>
        <begin position="2666"/>
        <end position="2667"/>
    </location>
</feature>
<feature type="mutagenesis site" description="Abolishes cleavage by TASP1; when associated with 2666-A-A-2667." evidence="13 14">
    <original>DGV</original>
    <variation>AAA</variation>
    <location>
        <begin position="2718"/>
        <end position="2720"/>
    </location>
</feature>
<feature type="mutagenesis site" description="Increased interaction with WDR5." evidence="30">
    <original>S</original>
    <variation>A</variation>
    <location>
        <position position="3763"/>
    </location>
</feature>
<feature type="mutagenesis site" description="Loss of interaction with the WRAD complex and WDR5." evidence="22 30">
    <original>R</original>
    <variation>A</variation>
    <location>
        <position position="3765"/>
    </location>
</feature>
<feature type="mutagenesis site" description="Slight decrease in interaction with WDR5." evidence="22">
    <original>H</original>
    <variation>A</variation>
    <variation>F</variation>
    <location>
        <position position="3769"/>
    </location>
</feature>
<feature type="mutagenesis site" description="Increased interaction with WDR5." evidence="30">
    <original>H</original>
    <variation>Y</variation>
    <location>
        <position position="3769"/>
    </location>
</feature>
<feature type="mutagenesis site" description="Impairs methyltransferase activity toward unmodified or monomethylated H3K4me." evidence="23">
    <original>Y</original>
    <variation>A</variation>
    <location>
        <position position="3858"/>
    </location>
</feature>
<feature type="mutagenesis site" description="Slightly affects methyltransferase activity toward unmodified or monomethylated H3K4me." evidence="23">
    <original>Y</original>
    <variation>F</variation>
    <location>
        <position position="3858"/>
    </location>
</feature>
<feature type="mutagenesis site" description="Leads to stable interaction with ASH2L and RBBP5 in the absence of WDR5; when associated with L-3867." evidence="40">
    <original>N</original>
    <variation>I</variation>
    <location>
        <position position="3861"/>
    </location>
</feature>
<feature type="mutagenesis site" description="Leads to stable interaction with ASH2L and RBBP5 in the absence of WDR5; when associated with V-3867." evidence="40">
    <original>N</original>
    <variation>T</variation>
    <location>
        <position position="3861"/>
    </location>
</feature>
<feature type="mutagenesis site" description="Disrupts interaction with ASH2L and RBBP5 and nearly abolishes histone methyltransferase activity." evidence="40">
    <original>R</original>
    <variation>A</variation>
    <location>
        <position position="3864"/>
    </location>
</feature>
<feature type="mutagenesis site" description="Slightly affects methyltransferase activity of the enzyme alone, while it impairs methyltransferase activity in complex; when associated with A-3871." evidence="23">
    <original>Q</original>
    <variation>A</variation>
    <location>
        <position position="3867"/>
    </location>
</feature>
<feature type="mutagenesis site" description="Leads to stable interaction with ASH2L and RBBP5 in the absence of WDR5; when associated with I-3861." evidence="40">
    <original>Q</original>
    <variation>L</variation>
    <location>
        <position position="3867"/>
    </location>
</feature>
<feature type="mutagenesis site" description="Leads to stable interaction with ASH2L and RBBP5 in the absence of WDR5; when associated with T-3861." evidence="40">
    <original>Q</original>
    <variation>V</variation>
    <location>
        <position position="3867"/>
    </location>
</feature>
<feature type="mutagenesis site" description="Does not affect methyltransferase activity of the enzyme alone or in complex; when associated with A-3872." evidence="23">
    <original>D</original>
    <variation>A</variation>
    <location>
        <position position="3869"/>
    </location>
</feature>
<feature type="mutagenesis site" description="Slightly affects methyltransferase activity of the enzyme alone, while it impairs methyltransferase activity in complex; when associated with A-3867." evidence="23">
    <original>R</original>
    <variation>A</variation>
    <location>
        <position position="3871"/>
    </location>
</feature>
<feature type="mutagenesis site" description="Does not affect methyltransferase activity of the enzyme alone or in complex; when associated with A-3869." evidence="23">
    <original>E</original>
    <variation>A</variation>
    <location>
        <position position="3872"/>
    </location>
</feature>
<feature type="mutagenesis site" description="Affects methyltransferase activity of the enzyme alone, while it does not affect methyltransferase activity in complex; when associated with A-3878." evidence="23">
    <original>Y</original>
    <variation>A</variation>
    <location>
        <position position="3874"/>
    </location>
</feature>
<feature type="mutagenesis site" description="Affects methyltransferase activity of the enzyme alone, while it does not affect methyltransferase activity in complex; when associated with A-3874." evidence="23">
    <original>K</original>
    <variation>A</variation>
    <location>
        <position position="3878"/>
    </location>
</feature>
<feature type="mutagenesis site" description="Abolished auto-methylation." evidence="35">
    <original>C</original>
    <variation>A</variation>
    <variation>S</variation>
    <location>
        <position position="3882"/>
    </location>
</feature>
<feature type="mutagenesis site" description="Loss of the histone H3 methyltransferase activity. Abolishes interaction with S-adenosyl-L-methionine." evidence="24 38">
    <original>N</original>
    <variation>A</variation>
    <location>
        <position position="3906"/>
    </location>
</feature>
<feature type="mutagenesis site" description="Impairs methyltransferase activity toward unmodified or monomethylated H3K4me." evidence="23 24">
    <original>Y</original>
    <variation>A</variation>
    <variation>F</variation>
    <location>
        <position position="3942"/>
    </location>
</feature>
<feature type="mutagenesis site" description="Shifts from a specific monomethyltransferase to a di- and trimethyltransferase activity." evidence="23 24">
    <original>Y</original>
    <variation>F</variation>
    <location>
        <position position="3942"/>
    </location>
</feature>
<feature type="sequence conflict" description="In Ref. 2; CAA93625." evidence="51" ref="2">
    <original>E</original>
    <variation>ELTTQIPCSWRTKGHIHDKKTEPFRLLAWSWCLN</variation>
    <location>
        <position position="144"/>
    </location>
</feature>
<feature type="sequence conflict" description="In Ref. 2; CAA93625 and 6; L04731." evidence="51" ref="2 6">
    <original>Q</original>
    <variation>E</variation>
    <location>
        <position position="556"/>
    </location>
</feature>
<feature type="sequence conflict" description="In Ref. 13; AAG26335." evidence="51" ref="13">
    <original>V</original>
    <variation>A</variation>
    <location>
        <position position="1347"/>
    </location>
</feature>
<feature type="sequence conflict" description="In Ref. 12; AAA18644." evidence="51" ref="12">
    <original>R</original>
    <variation>G</variation>
    <location>
        <position position="1487"/>
    </location>
</feature>
<feature type="sequence conflict" description="In Ref. 13; AAG26335." evidence="51" ref="13">
    <original>Q</original>
    <variation>R</variation>
    <location>
        <position position="1490"/>
    </location>
</feature>
<feature type="sequence conflict" description="In Ref. 13; AAG26335." evidence="51" ref="13">
    <original>P</original>
    <variation>L</variation>
    <location>
        <position position="1507"/>
    </location>
</feature>
<feature type="sequence conflict" description="In Ref. 13; AAG26335." evidence="51" ref="13">
    <original>N</original>
    <variation>T</variation>
    <location>
        <position position="1513"/>
    </location>
</feature>
<feature type="sequence conflict" description="In Ref. 13; AAG26335." evidence="51" ref="13">
    <original>E</original>
    <variation>G</variation>
    <location>
        <position position="1600"/>
    </location>
</feature>
<feature type="sequence conflict" description="In Ref. 11; AAB34770." evidence="51" ref="11">
    <original>S</original>
    <variation>C</variation>
    <location>
        <position position="1616"/>
    </location>
</feature>
<feature type="sequence conflict" description="In Ref. 8; AAA92511." evidence="51" ref="8">
    <original>Q</original>
    <variation>H</variation>
    <location>
        <position position="1937"/>
    </location>
</feature>
<feature type="sequence conflict" description="In Ref. 8; AAA92511." evidence="51" ref="8">
    <original>P</original>
    <variation>S</variation>
    <location>
        <position position="2181"/>
    </location>
</feature>
<feature type="sequence conflict" description="In Ref. 6; L04731." evidence="51" ref="6">
    <original>K</original>
    <variation>N</variation>
    <location>
        <position position="3556"/>
    </location>
</feature>
<feature type="sequence conflict" description="In Ref. 2; CAA93625." evidence="51" ref="2">
    <original>R</original>
    <variation>G</variation>
    <location>
        <position position="3718"/>
    </location>
</feature>
<feature type="sequence conflict" description="In Ref. 2; CAA93625." evidence="51" ref="2">
    <original>N</original>
    <variation>D</variation>
    <location>
        <position position="3759"/>
    </location>
</feature>
<feature type="sequence conflict" description="In Ref. 2; CAA93625." evidence="51" ref="2">
    <original>D</original>
    <variation>G</variation>
    <location>
        <position position="3813"/>
    </location>
</feature>
<feature type="sequence conflict" description="In Ref. 1; AAA58669." evidence="51" ref="1">
    <original>A</original>
    <variation>R</variation>
    <location>
        <position position="3901"/>
    </location>
</feature>
<feature type="helix" evidence="97">
    <location>
        <begin position="114"/>
        <end position="133"/>
    </location>
</feature>
<feature type="strand" evidence="93">
    <location>
        <begin position="135"/>
        <end position="138"/>
    </location>
</feature>
<feature type="strand" evidence="102">
    <location>
        <begin position="140"/>
        <end position="145"/>
    </location>
</feature>
<feature type="strand" evidence="92">
    <location>
        <begin position="150"/>
        <end position="152"/>
    </location>
</feature>
<feature type="strand" evidence="90">
    <location>
        <begin position="1151"/>
        <end position="1154"/>
    </location>
</feature>
<feature type="strand" evidence="99">
    <location>
        <begin position="1156"/>
        <end position="1158"/>
    </location>
</feature>
<feature type="helix" evidence="99">
    <location>
        <begin position="1159"/>
        <end position="1162"/>
    </location>
</feature>
<feature type="strand" evidence="99">
    <location>
        <begin position="1168"/>
        <end position="1170"/>
    </location>
</feature>
<feature type="helix" evidence="99">
    <location>
        <begin position="1171"/>
        <end position="1175"/>
    </location>
</feature>
<feature type="helix" evidence="99">
    <location>
        <begin position="1177"/>
        <end position="1179"/>
    </location>
</feature>
<feature type="strand" evidence="90">
    <location>
        <begin position="1183"/>
        <end position="1185"/>
    </location>
</feature>
<feature type="turn" evidence="99">
    <location>
        <begin position="1190"/>
        <end position="1192"/>
    </location>
</feature>
<feature type="strand" evidence="90">
    <location>
        <begin position="1197"/>
        <end position="1200"/>
    </location>
</feature>
<feature type="turn" evidence="90">
    <location>
        <begin position="1204"/>
        <end position="1206"/>
    </location>
</feature>
<feature type="strand" evidence="96">
    <location>
        <begin position="1566"/>
        <end position="1568"/>
    </location>
</feature>
<feature type="turn" evidence="95">
    <location>
        <begin position="1570"/>
        <end position="1572"/>
    </location>
</feature>
<feature type="strand" evidence="96">
    <location>
        <begin position="1575"/>
        <end position="1577"/>
    </location>
</feature>
<feature type="turn" evidence="91">
    <location>
        <begin position="1578"/>
        <end position="1582"/>
    </location>
</feature>
<feature type="strand" evidence="95">
    <location>
        <begin position="1585"/>
        <end position="1587"/>
    </location>
</feature>
<feature type="turn" evidence="95">
    <location>
        <begin position="1589"/>
        <end position="1591"/>
    </location>
</feature>
<feature type="strand" evidence="95">
    <location>
        <begin position="1594"/>
        <end position="1596"/>
    </location>
</feature>
<feature type="helix" evidence="95">
    <location>
        <begin position="1597"/>
        <end position="1599"/>
    </location>
</feature>
<feature type="helix" evidence="95">
    <location>
        <begin position="1604"/>
        <end position="1612"/>
    </location>
</feature>
<feature type="helix" evidence="95">
    <location>
        <begin position="1614"/>
        <end position="1617"/>
    </location>
</feature>
<feature type="turn" evidence="95">
    <location>
        <begin position="1622"/>
        <end position="1624"/>
    </location>
</feature>
<feature type="strand" evidence="95">
    <location>
        <begin position="1627"/>
        <end position="1629"/>
    </location>
</feature>
<feature type="helix" evidence="95">
    <location>
        <begin position="1631"/>
        <end position="1652"/>
    </location>
</feature>
<feature type="helix" evidence="95">
    <location>
        <begin position="1655"/>
        <end position="1661"/>
    </location>
</feature>
<feature type="helix" evidence="95">
    <location>
        <begin position="1708"/>
        <end position="1716"/>
    </location>
</feature>
<feature type="helix" evidence="95">
    <location>
        <begin position="1723"/>
        <end position="1740"/>
    </location>
</feature>
<feature type="helix" evidence="95">
    <location>
        <begin position="1745"/>
        <end position="1765"/>
    </location>
</feature>
<feature type="helix" evidence="95">
    <location>
        <begin position="1771"/>
        <end position="1773"/>
    </location>
</feature>
<feature type="helix" evidence="101">
    <location>
        <begin position="2847"/>
        <end position="2855"/>
    </location>
</feature>
<feature type="helix" evidence="98">
    <location>
        <begin position="3764"/>
        <end position="3766"/>
    </location>
</feature>
<feature type="helix" evidence="94">
    <location>
        <begin position="3796"/>
        <end position="3799"/>
    </location>
</feature>
<feature type="helix" evidence="94">
    <location>
        <begin position="3809"/>
        <end position="3811"/>
    </location>
</feature>
<feature type="helix" evidence="100">
    <location>
        <begin position="3816"/>
        <end position="3820"/>
    </location>
</feature>
<feature type="helix" evidence="100">
    <location>
        <begin position="3823"/>
        <end position="3830"/>
    </location>
</feature>
<feature type="strand" evidence="100">
    <location>
        <begin position="3831"/>
        <end position="3835"/>
    </location>
</feature>
<feature type="strand" evidence="100">
    <location>
        <begin position="3837"/>
        <end position="3847"/>
    </location>
</feature>
<feature type="strand" evidence="100">
    <location>
        <begin position="3854"/>
        <end position="3857"/>
    </location>
</feature>
<feature type="strand" evidence="100">
    <location>
        <begin position="3860"/>
        <end position="3864"/>
    </location>
</feature>
<feature type="helix" evidence="100">
    <location>
        <begin position="3865"/>
        <end position="3867"/>
    </location>
</feature>
<feature type="helix" evidence="100">
    <location>
        <begin position="3868"/>
        <end position="3877"/>
    </location>
</feature>
<feature type="strand" evidence="100">
    <location>
        <begin position="3884"/>
        <end position="3886"/>
    </location>
</feature>
<feature type="strand" evidence="100">
    <location>
        <begin position="3888"/>
        <end position="3894"/>
    </location>
</feature>
<feature type="turn" evidence="100">
    <location>
        <begin position="3896"/>
        <end position="3898"/>
    </location>
</feature>
<feature type="helix" evidence="100">
    <location>
        <begin position="3901"/>
        <end position="3904"/>
    </location>
</feature>
<feature type="strand" evidence="100">
    <location>
        <begin position="3912"/>
        <end position="3920"/>
    </location>
</feature>
<feature type="strand" evidence="100">
    <location>
        <begin position="3923"/>
        <end position="3932"/>
    </location>
</feature>
<feature type="strand" evidence="100">
    <location>
        <begin position="3939"/>
        <end position="3942"/>
    </location>
</feature>
<feature type="helix" evidence="103">
    <location>
        <begin position="3951"/>
        <end position="3953"/>
    </location>
</feature>
<comment type="function">
    <text evidence="1 11 12 16 23 24 25 28 35 40 55">Histone methyltransferase that plays an essential role in early development and hematopoiesis (PubMed:12453419, PubMed:15960975, PubMed:19187761, PubMed:19556245, PubMed:20677832, PubMed:21220120, PubMed:26886794). Catalytic subunit of the MLL1/MLL complex, a multiprotein complex that mediates both methylation of 'Lys-4' of histone H3 (H3K4me) complex and acetylation of 'Lys-16' of histone H4 (H4K16ac) (PubMed:12453419, PubMed:15960975, PubMed:19187761, PubMed:19556245, PubMed:20677832, PubMed:21220120, PubMed:24235145, PubMed:26886794). Catalyzes methyl group transfer from S-adenosyl-L-methionine to the epsilon-amino group of 'Lys-4' of histone H3 (H3K4) via a non-processive mechanism. Part of chromatin remodeling machinery predominantly forms H3K4me1 and H3K4me2 methylation marks at active chromatin sites where transcription and DNA repair take place (PubMed:12453419, PubMed:15960975, PubMed:19187761, PubMed:19556245, PubMed:20677832, PubMed:21220120, PubMed:25561738, PubMed:26886794). Has weak methyltransferase activity by itself, and requires other component of the MLL1/MLL complex to obtain full methyltransferase activity (PubMed:19187761, PubMed:26886794). Has no activity toward histone H3 phosphorylated on 'Thr-3', less activity toward H3 dimethylated on 'Arg-8' or 'Lys-9', while it has higher activity toward H3 acetylated on 'Lys-9' (PubMed:19187761). Binds to unmethylated CpG elements in the promoter of target genes and helps maintain them in the nonmethylated state (PubMed:20010842). Required for transcriptional activation of HOXA9 (PubMed:12453419, PubMed:20010842, PubMed:20677832). Promotes PPP1R15A-induced apoptosis (PubMed:10490642). Plays a critical role in the control of circadian gene expression and is essential for the transcriptional activation mediated by the CLOCK-BMAL1 heterodimer (By similarity). Establishes a permissive chromatin state for circadian transcription by mediating a rhythmic methylation of 'Lys-4' of histone H3 (H3K4me) and this histone modification directs the circadian acetylation at H3K9 and H3K14 allowing the recruitment of CLOCK-BMAL1 to chromatin (By similarity). Also has auto-methylation activity on Cys-3882 in absence of histone H3 substrate (PubMed:24235145).</text>
</comment>
<comment type="catalytic activity">
    <reaction evidence="12 23 24 35 38 40">
        <text>L-lysyl(4)-[histone H3] + S-adenosyl-L-methionine = N(6)-methyl-L-lysyl(4)-[histone H3] + S-adenosyl-L-homocysteine + H(+)</text>
        <dbReference type="Rhea" id="RHEA:60264"/>
        <dbReference type="Rhea" id="RHEA-COMP:15543"/>
        <dbReference type="Rhea" id="RHEA-COMP:15547"/>
        <dbReference type="ChEBI" id="CHEBI:15378"/>
        <dbReference type="ChEBI" id="CHEBI:29969"/>
        <dbReference type="ChEBI" id="CHEBI:57856"/>
        <dbReference type="ChEBI" id="CHEBI:59789"/>
        <dbReference type="ChEBI" id="CHEBI:61929"/>
        <dbReference type="EC" id="2.1.1.364"/>
    </reaction>
    <physiologicalReaction direction="left-to-right" evidence="54 56">
        <dbReference type="Rhea" id="RHEA:60265"/>
    </physiologicalReaction>
</comment>
<comment type="catalytic activity">
    <reaction evidence="23 35 38 40">
        <text>N(6)-methyl-L-lysyl(4)-[histone H3] + S-adenosyl-L-methionine = N(6),N(6)-dimethyl-L-lysyl(4)-[histone H3] + S-adenosyl-L-homocysteine + H(+)</text>
        <dbReference type="Rhea" id="RHEA:60268"/>
        <dbReference type="Rhea" id="RHEA-COMP:15540"/>
        <dbReference type="Rhea" id="RHEA-COMP:15543"/>
        <dbReference type="ChEBI" id="CHEBI:15378"/>
        <dbReference type="ChEBI" id="CHEBI:57856"/>
        <dbReference type="ChEBI" id="CHEBI:59789"/>
        <dbReference type="ChEBI" id="CHEBI:61929"/>
        <dbReference type="ChEBI" id="CHEBI:61976"/>
    </reaction>
    <physiologicalReaction direction="left-to-right" evidence="56">
        <dbReference type="Rhea" id="RHEA:60269"/>
    </physiologicalReaction>
</comment>
<comment type="catalytic activity">
    <reaction evidence="35">
        <text>L-cysteinyl-[protein] + S-adenosyl-L-methionine = S-methyl-L-cysteinyl-[protein] + S-adenosyl-L-homocysteine + H(+)</text>
        <dbReference type="Rhea" id="RHEA:66544"/>
        <dbReference type="Rhea" id="RHEA-COMP:10131"/>
        <dbReference type="Rhea" id="RHEA-COMP:10132"/>
        <dbReference type="ChEBI" id="CHEBI:15378"/>
        <dbReference type="ChEBI" id="CHEBI:29950"/>
        <dbReference type="ChEBI" id="CHEBI:57856"/>
        <dbReference type="ChEBI" id="CHEBI:59789"/>
        <dbReference type="ChEBI" id="CHEBI:82612"/>
    </reaction>
    <physiologicalReaction direction="left-to-right" evidence="35">
        <dbReference type="Rhea" id="RHEA:66545"/>
    </physiologicalReaction>
</comment>
<comment type="biophysicochemical properties">
    <kinetics>
        <KM evidence="35">10.4 uM for S-adenosyl-L-methionine (for histone-lysine N-methyltransferase activity)</KM>
        <KM evidence="35">6.5 uM for S-adenosyl-L-methionine (for protein-cysteine methyltransferase)</KM>
    </kinetics>
</comment>
<comment type="subunit">
    <text evidence="1 11 13 14 15 16 17 18 20 21 22 23 24 26 27 28 29 30 33 34 36 37 38 40 42 45">MLL cleavage product N320 heterodimerizes with MLL cleavage product C180 (via SET and FYRC domains). Component of some MLL1/MLL complex, at least composed of the core components KMT2A/MLL1, ASH2L, HCFC1/HCF1, HCFC2, WDR5, DPY30 and RBBP5, as well as the facultative components BACC1, CHD8, E2F6, HSP70, INO80C, KANSL1, LAS1L, MAX, MCRS1, MEN1, MGA, KAT8/MOF, PELP1, PHF20, PRP31, RING2, RUVB1/TIP49A, RUVB2/TIP49B, SENP3, TAF1, TAF4, TAF6, TAF7, TAF9 and TEX10 (PubMed:15199122, PubMed:15960975, PubMed:17500065, PubMed:19187761, PubMed:19556245, PubMed:23508102, PubMed:26886794). Forms a core complex with the evolutionary conserved subcomplex WRAD composed of WDR5, RBBP5, ASH2L/ASH2 and DPY30 subunits; WRAD differentially stimulates the methyltransferase activity (PubMed:25561738). Interacts (via WIN motif) with WDR5; the interaction is direct (PubMed:18829459, PubMed:18840606, PubMed:19556245, PubMed:22665483). Interaction with WDR5 is required for stable interaction with ASH2L and RBBP5, and thereby also for optimal histone methyltransferase activity (PubMed:26886794). Interacts with KAT8/MOF; the interaction is direct (PubMed:15960975). Interacts with SBF1 and PPP1R15A (PubMed:10490642, PubMed:9537414). Interacts with ZNF335 (PubMed:23178126). Interacts with CLOCK and BMAL1 in a circadian manner (By similarity). Interacts with PPIE; this results in decreased histone H3 methyltransferase activity (PubMed:20541251, PubMed:20677832). Interacts with CREBBP (PubMed:16253272). Interacts with the WRAD complex composed of WDR5, RBBP5, ASH2L and DPY30 (PubMed:22665483). Interacts (via MBM motif) with MEN1 (PubMed:22327296, PubMed:22936661, PubMed:25305204). Interacts (via IBM motifs) with PSIP1 (via IBD domain) with moderate affinity whereas the KMT2A-MEN1 complex interacts with a greater affinity; MEN1 enhances interaction of KMT2A with PSIP1 (PubMed:22327296, PubMed:25082813, PubMed:25305204, PubMed:29997176). Phosphorylation increases its affinity for PSIP1 (PubMed:29997176). Forms a complex with CREBBP and CREB1 (PubMed:23651431).</text>
</comment>
<comment type="subunit">
    <text evidence="43">(Microbial infection) Interacts with herpes virus 8/HHV-8 protein LANA1; this interaction regulates the MLL1 histone methyltransferase activity on viral DNA.</text>
</comment>
<comment type="interaction">
    <interactant intactId="EBI-591370">
        <id>Q03164</id>
    </interactant>
    <interactant intactId="EBI-608057">
        <id>P10275</id>
        <label>AR</label>
    </interactant>
    <organismsDiffer>false</organismsDiffer>
    <experiments>4</experiments>
</comment>
<comment type="interaction">
    <interactant intactId="EBI-591370">
        <id>Q03164</id>
    </interactant>
    <interactant intactId="EBI-16130425">
        <id>Q9UBL3-3</id>
        <label>ASH2L</label>
    </interactant>
    <organismsDiffer>false</organismsDiffer>
    <experiments>4</experiments>
</comment>
<comment type="interaction">
    <interactant intactId="EBI-591370">
        <id>Q03164</id>
    </interactant>
    <interactant intactId="EBI-930143">
        <id>Q6P1J9</id>
        <label>CDC73</label>
    </interactant>
    <organismsDiffer>false</organismsDiffer>
    <experiments>4</experiments>
</comment>
<comment type="interaction">
    <interactant intactId="EBI-591370">
        <id>Q03164</id>
    </interactant>
    <interactant intactId="EBI-1019583">
        <id>Q6PD62</id>
        <label>CTR9</label>
    </interactant>
    <organismsDiffer>false</organismsDiffer>
    <experiments>5</experiments>
</comment>
<comment type="interaction">
    <interactant intactId="EBI-591370">
        <id>Q03164</id>
    </interactant>
    <interactant intactId="EBI-79722">
        <id>P68431</id>
        <label>H3C12</label>
    </interactant>
    <organismsDiffer>false</organismsDiffer>
    <experiments>11</experiments>
</comment>
<comment type="interaction">
    <interactant intactId="EBI-591370">
        <id>Q03164</id>
    </interactant>
    <interactant intactId="EBI-896414">
        <id>Q9H7Z6</id>
        <label>KAT8</label>
    </interactant>
    <organismsDiffer>false</organismsDiffer>
    <experiments>3</experiments>
</comment>
<comment type="interaction">
    <interactant intactId="EBI-591370">
        <id>Q03164</id>
    </interactant>
    <interactant intactId="EBI-591370">
        <id>Q03164</id>
        <label>KMT2A</label>
    </interactant>
    <organismsDiffer>false</organismsDiffer>
    <experiments>5</experiments>
</comment>
<comment type="interaction">
    <interactant intactId="EBI-591370">
        <id>Q03164</id>
    </interactant>
    <interactant intactId="EBI-9869387">
        <id>O00255-2</id>
        <label>MEN1</label>
    </interactant>
    <organismsDiffer>false</organismsDiffer>
    <experiments>12</experiments>
</comment>
<comment type="interaction">
    <interactant intactId="EBI-591370">
        <id>Q03164</id>
    </interactant>
    <interactant intactId="EBI-2607770">
        <id>Q8N7H5</id>
        <label>PAF1</label>
    </interactant>
    <organismsDiffer>false</organismsDiffer>
    <experiments>4</experiments>
</comment>
<comment type="interaction">
    <interactant intactId="EBI-591370">
        <id>Q03164</id>
    </interactant>
    <interactant intactId="EBI-591818">
        <id>Q9UNP9</id>
        <label>PPIE</label>
    </interactant>
    <organismsDiffer>false</organismsDiffer>
    <experiments>4</experiments>
</comment>
<comment type="interaction">
    <interactant intactId="EBI-591370">
        <id>Q03164</id>
    </interactant>
    <interactant intactId="EBI-592823">
        <id>Q15291</id>
        <label>RBBP5</label>
    </interactant>
    <organismsDiffer>false</organismsDiffer>
    <experiments>11</experiments>
</comment>
<comment type="interaction">
    <interactant intactId="EBI-591370">
        <id>Q03164</id>
    </interactant>
    <interactant intactId="EBI-1802965">
        <id>Q96EB6</id>
        <label>SIRT1</label>
    </interactant>
    <organismsDiffer>false</organismsDiffer>
    <experiments>5</experiments>
</comment>
<comment type="interaction">
    <interactant intactId="EBI-591370">
        <id>Q03164</id>
    </interactant>
    <interactant intactId="EBI-15490084">
        <id>Q13309-1</id>
        <label>SKP2</label>
    </interactant>
    <organismsDiffer>false</organismsDiffer>
    <experiments>2</experiments>
</comment>
<comment type="interaction">
    <interactant intactId="EBI-591370">
        <id>Q03164</id>
    </interactant>
    <interactant intactId="EBI-540834">
        <id>P61964</id>
        <label>WDR5</label>
    </interactant>
    <organismsDiffer>false</organismsDiffer>
    <experiments>17</experiments>
</comment>
<comment type="interaction">
    <interactant intactId="EBI-591370">
        <id>Q03164</id>
    </interactant>
    <interactant intactId="EBI-644534">
        <id>Q9WTL8</id>
        <label>Bmal1</label>
    </interactant>
    <organismsDiffer>true</organismsDiffer>
    <experiments>3</experiments>
</comment>
<comment type="interaction">
    <interactant intactId="EBI-591370">
        <id>Q03164</id>
    </interactant>
    <interactant intactId="EBI-79859">
        <id>O08785</id>
        <label>Clock</label>
    </interactant>
    <organismsDiffer>true</organismsDiffer>
    <experiments>3</experiments>
</comment>
<comment type="interaction">
    <interactant intactId="EBI-591370">
        <id>Q03164</id>
    </interactant>
    <interactant intactId="EBI-296306">
        <id>P45481</id>
        <label>Crebbp</label>
    </interactant>
    <organismsDiffer>true</organismsDiffer>
    <experiments>7</experiments>
</comment>
<comment type="interaction">
    <interactant intactId="EBI-2610266">
        <id>PRO_0000390949</id>
    </interactant>
    <interactant intactId="EBI-296331">
        <id>Q02548</id>
        <label>PAX5</label>
    </interactant>
    <organismsDiffer>false</organismsDiffer>
    <experiments>2</experiments>
</comment>
<comment type="interaction">
    <interactant intactId="EBI-2638616">
        <id>PRO_0000390950</id>
    </interactant>
    <interactant intactId="EBI-948013">
        <id>Q92794</id>
        <label>KAT6A</label>
    </interactant>
    <organismsDiffer>false</organismsDiffer>
    <experiments>10</experiments>
</comment>
<comment type="interaction">
    <interactant intactId="EBI-2638616">
        <id>PRO_0000390950</id>
    </interactant>
    <interactant intactId="EBI-540834">
        <id>P61964</id>
        <label>WDR5</label>
    </interactant>
    <organismsDiffer>false</organismsDiffer>
    <experiments>2</experiments>
</comment>
<comment type="subcellular location">
    <subcellularLocation>
        <location evidence="13 39 43">Nucleus</location>
    </subcellularLocation>
</comment>
<comment type="subcellular location">
    <molecule>MLL cleavage product N320</molecule>
    <subcellularLocation>
        <location>Nucleus</location>
    </subcellularLocation>
</comment>
<comment type="subcellular location">
    <molecule>MLL cleavage product C180</molecule>
    <subcellularLocation>
        <location>Nucleus</location>
    </subcellularLocation>
    <text>Localizes to a diffuse nuclear pattern when not associated with MLL cleavage product N320.</text>
</comment>
<comment type="alternative products">
    <event type="alternative splicing"/>
    <isoform>
        <id>Q03164-1</id>
        <name>1</name>
        <sequence type="displayed"/>
    </isoform>
    <isoform>
        <id>Q03164-2</id>
        <name>2</name>
        <name>14P-18B</name>
        <sequence type="described" ref="VSP_006666"/>
    </isoform>
    <isoform>
        <id>Q03164-3</id>
        <name>3</name>
        <sequence type="described" ref="VSP_046879"/>
    </isoform>
</comment>
<comment type="tissue specificity">
    <text>Heart, lung, brain and T- and B-lymphocytes.</text>
</comment>
<comment type="domain">
    <text evidence="19">The 9aaTAD motif is a transactivation domain present in a large number of yeast and animal transcription factors.</text>
</comment>
<comment type="domain">
    <text evidence="23 40">The SET domain structure is atypical and is not in an optimal position to have methyltransferase activity. It requires other components of the MLL1/MLL complex, such as ASH2L or RBBP5, to order the active site and obtain optimal histone methyltransferase activity.</text>
</comment>
<comment type="domain">
    <text evidence="18 25 41">The CXXC-type zinc finger binds to DNA sequence elements containing unnmethylated CpG dinucleotides.</text>
</comment>
<comment type="domain">
    <text evidence="26 27">The third PHD-type zinc-finger binds both trimethylated histone H3K4me3 and PPIE; histone and PPIE bind to distinct surfaces (PubMed:20541251, PubMed:20677832). Nevertheless, PPIE binding and histone binding are mutually inhibitory (PubMed:20677832). Isomerization of a peptidylproline bond in the linker between the third PHD-type zinc-finger and the bromo domain disrupts the interaction between the bromo domain and the third PHD-type zinc-finger, and thereby facilitates interaction with PPIE (PubMed:20541251).</text>
</comment>
<comment type="PTM">
    <text evidence="13 14">Proteolytic cleavage by TASP1 generates MLL cleavage product N320 and MLL cleavage product C180, which reassemble through a non-covalent association. 2 cleavage sites exist, cleavage site 1 (CS1) and cleavage site 2 (CS2), to generate MLL cleavage products N320 and C180. CS2 is the major site.</text>
</comment>
<comment type="PTM">
    <text evidence="42">Phosphorylation increases its interaction with PSIP1.</text>
</comment>
<comment type="PTM">
    <text evidence="35">Auto-methylated at Cys-3882: auto-methylation is inhibited by the WRAD complex and unmodified histone H3.</text>
</comment>
<comment type="disease" evidence="31">
    <disease id="DI-03533">
        <name>Wiedemann-Steiner syndrome</name>
        <acronym>WDSTS</acronym>
        <description>A syndrome characterized by hairy elbows (hypertrichosis cubiti), intellectual disability, a distinctive facial appearance, and short stature. Facial characteristics include long eyelashes, thick or arched eyebrows with a lateral flare, and downslanting and vertically narrow palpebral fissures.</description>
        <dbReference type="MIM" id="605130"/>
    </disease>
    <text>The disease is caused by variants affecting the gene represented in this entry.</text>
</comment>
<comment type="disease">
    <text evidence="11 32 37">Chromosomal aberrations involving KMT2A are a cause of acute leukemias. Translocation t(1;11)(q21;q23) with MLLT11/AF1Q; translocation t(3;11)(p21;q23) with NCKIPSD/AF3p21; translocation t(3,11)(q25,q23) with GMPS; translocation t(4;11)(q21;q23) with AFF1/MLLT2/AF4; insertion ins(5;11)(q31;q13q23) with AFF4/AF5Q31; translocation t(5;11)(q12;q23) with AF5-alpha/CENPK; translocation t(6;11)(q27;q23) with AFDN; translocation t(9;11)(p22;q23) with MLLT3/AF9; translocation t(10;11)(p11.2;q23) with ABI1; translocation t(10;11)(p12;q23) with MLLT10/AF10; t(11;15)(q23;q14) with KNL1 and ZFYVE19; translocation t(11;17)(q23;q21) with MLLT6/AF17; translocation t(11;19)(q23;p13.3) with ELL; translocation t(11;19)(q23;p13.3) with MLLT1/ENL; translocation t(11;19)(q23;p23) with GAS7; translocation t(X;11)(q13;q23) with FOXO4/AFX1. Translocation t(3;11)(q28;q23) with LPP. Translocation t(10;11)(q22;q23) with TET1. Translocation t(9;11)(q34;q23) with DAB2IP. Translocation t(4;11)(p12;q23) with FRYL. Fusion proteins KMT2A-MLLT1, KMT2A-MLLT3 and KMT2A-ELL interact with PPP1R15A and, on the contrary to unfused KMT2A, inhibit PPP1R15A-induced apoptosis. Fusion protein KMT2A-MLLT3 interacts with MEN1 and PSIP1 (PubMed:22936661, PubMed:25305204).</text>
</comment>
<comment type="disease">
    <text evidence="11">A chromosomal aberration involving KMT2A may be a cause of chronic neutrophilic leukemia. Translocation t(4;11)(q21;q23) with SEPT11.</text>
</comment>
<comment type="similarity">
    <text evidence="5">Belongs to the class V-like SAM-binding methyltransferase superfamily. Histone-lysine methyltransferase family. TRX/MLL subfamily.</text>
</comment>
<comment type="sequence caution" evidence="51">
    <conflict type="frameshift">
        <sequence resource="EMBL-CDS" id="AAA58669"/>
    </conflict>
</comment>
<comment type="sequence caution" evidence="51">
    <conflict type="miscellaneous discrepancy">
        <sequence resource="EMBL-CDS" id="AAG26332"/>
    </conflict>
    <text>Contaminating sequence. Potential poly-A sequence.</text>
</comment>
<comment type="sequence caution" evidence="51">
    <conflict type="frameshift">
        <sequence resource="EMBL-CDS" id="BAD92745"/>
    </conflict>
</comment>
<comment type="online information" name="Atlas of Genetics and Cytogenetics in Oncology and Haematology">
    <link uri="https://atlasgeneticsoncology.org/gene/13/kmt2a"/>
</comment>
<proteinExistence type="evidence at protein level"/>
<reference key="1">
    <citation type="journal article" date="1992" name="Cell">
        <title>Involvement of a homolog of Drosophila trithorax by 11q23 chromosomal translocations in acute leukemias.</title>
        <authorList>
            <person name="Tkachuk D.C."/>
            <person name="Kohler S."/>
            <person name="Cleary M.L."/>
        </authorList>
    </citation>
    <scope>NUCLEOTIDE SEQUENCE [MRNA] (ISOFORM 1)</scope>
</reference>
<reference key="2">
    <citation type="journal article" date="1996" name="Br. J. Haematol.">
        <title>Exon/intron structure of the human ALL-1 (MLL) gene involved in translocations to chromosomal region 11q23 and acute leukaemias.</title>
        <authorList>
            <person name="Nilson I."/>
            <person name="Loechner K."/>
            <person name="Siegler G."/>
            <person name="Greil J."/>
            <person name="Beck J.D."/>
            <person name="Fey G.H."/>
            <person name="Marschalek R."/>
        </authorList>
    </citation>
    <scope>NUCLEOTIDE SEQUENCE [GENOMIC DNA] (ISOFORM 3)</scope>
    <scope>VARIANT GLY-30</scope>
</reference>
<reference key="3">
    <citation type="submission" date="2003-08" db="EMBL/GenBank/DDBJ databases">
        <authorList>
            <consortium name="NIEHS SNPs program"/>
        </authorList>
    </citation>
    <scope>NUCLEOTIDE SEQUENCE [GENOMIC DNA]</scope>
    <scope>VARIANTS VAL-53; LYS-502; THR-2319; ARG-2354; ARG-2387; ILE-3714 AND ALA-3773</scope>
</reference>
<reference key="4">
    <citation type="journal article" date="2006" name="Nature">
        <title>Human chromosome 11 DNA sequence and analysis including novel gene identification.</title>
        <authorList>
            <person name="Taylor T.D."/>
            <person name="Noguchi H."/>
            <person name="Totoki Y."/>
            <person name="Toyoda A."/>
            <person name="Kuroki Y."/>
            <person name="Dewar K."/>
            <person name="Lloyd C."/>
            <person name="Itoh T."/>
            <person name="Takeda T."/>
            <person name="Kim D.-W."/>
            <person name="She X."/>
            <person name="Barlow K.F."/>
            <person name="Bloom T."/>
            <person name="Bruford E."/>
            <person name="Chang J.L."/>
            <person name="Cuomo C.A."/>
            <person name="Eichler E."/>
            <person name="FitzGerald M.G."/>
            <person name="Jaffe D.B."/>
            <person name="LaButti K."/>
            <person name="Nicol R."/>
            <person name="Park H.-S."/>
            <person name="Seaman C."/>
            <person name="Sougnez C."/>
            <person name="Yang X."/>
            <person name="Zimmer A.R."/>
            <person name="Zody M.C."/>
            <person name="Birren B.W."/>
            <person name="Nusbaum C."/>
            <person name="Fujiyama A."/>
            <person name="Hattori M."/>
            <person name="Rogers J."/>
            <person name="Lander E.S."/>
            <person name="Sakaki Y."/>
        </authorList>
    </citation>
    <scope>NUCLEOTIDE SEQUENCE [LARGE SCALE GENOMIC DNA]</scope>
</reference>
<reference key="5">
    <citation type="journal article" date="1993" name="Oncogene">
        <title>Two distinct portions of LTG19/ENL at 19p13 are involved in t(11;19) leukemia.</title>
        <authorList>
            <person name="Yamamoto K."/>
            <person name="Seto M."/>
            <person name="Komatsu H."/>
            <person name="Iida S."/>
            <person name="Akao Y."/>
            <person name="Kojima S."/>
            <person name="Kodera Y."/>
            <person name="Nakazawa S."/>
            <person name="Ariyoshi Y."/>
            <person name="Takahashi T."/>
            <person name="Ueda R."/>
        </authorList>
    </citation>
    <scope>NUCLEOTIDE SEQUENCE [MRNA] OF 1-1909</scope>
</reference>
<reference key="6">
    <citation type="journal article" date="1992" name="Cell">
        <title>The t(4;11) chromosome translocation of human acute leukemias fuses the ALL-1 gene, related to Drosophila trithorax, to the AF-4 gene.</title>
        <authorList>
            <person name="Gu Y."/>
            <person name="Nakamura T."/>
            <person name="Alder H."/>
            <person name="Prasad R."/>
            <person name="Canaani O."/>
            <person name="Cimino G."/>
            <person name="Croce C.M."/>
            <person name="Canaani E."/>
        </authorList>
    </citation>
    <scope>NUCLEOTIDE SEQUENCE [MRNA] OF 63-3969 (ISOFORM 3)</scope>
    <scope>CHROMOSOMAL TRANSLOCATION WITH AFF1/MLLT2</scope>
</reference>
<reference key="7">
    <citation type="submission" date="2005-03" db="EMBL/GenBank/DDBJ databases">
        <title>Homo sapiens protein coding cDNA.</title>
        <authorList>
            <person name="Totoki Y."/>
            <person name="Toyoda A."/>
            <person name="Takeda T."/>
            <person name="Sakaki Y."/>
            <person name="Tanaka A."/>
            <person name="Yokoyama S."/>
            <person name="Ohara O."/>
            <person name="Nagase T."/>
            <person name="Kikuno R.F."/>
        </authorList>
    </citation>
    <scope>NUCLEOTIDE SEQUENCE [LARGE SCALE MRNA] OF 812-3969</scope>
    <source>
        <tissue>Brain</tissue>
    </source>
</reference>
<reference key="8">
    <citation type="journal article" date="1992" name="Nat. Genet.">
        <title>A trithorax-like gene is interrupted by chromosome 11q23 translocations in acute leukaemias.</title>
        <authorList>
            <person name="Djabali M."/>
            <person name="Selleri L."/>
            <person name="Parry P."/>
            <person name="Bower M."/>
            <person name="Young B.D."/>
            <person name="Evans G.A."/>
        </authorList>
    </citation>
    <scope>NUCLEOTIDE SEQUENCE [GENOMIC DNA] OF 1112-1140 AND 1552-162</scope>
    <scope>NUCLEOTIDE SEQUENCE [MRNA] OF 1317-2328</scope>
    <source>
        <tissue>Brain</tissue>
    </source>
</reference>
<reference key="9">
    <citation type="journal article" date="1993" name="Nat. Genet.">
        <authorList>
            <person name="Djabali M."/>
            <person name="Selleri L."/>
            <person name="Parry P."/>
            <person name="Bower M."/>
            <person name="Young B."/>
            <person name="Evans G.A."/>
        </authorList>
    </citation>
    <scope>ERRATUM OF PUBMED:1303259</scope>
</reference>
<reference key="10">
    <citation type="journal article" date="1995" name="Br. J. Haematol.">
        <title>Molecular analysis of the chromosomal breakpoint and fusion transcripts in the acute lymphoblastic SEM cell line with chromosomal translocation t(4;11).</title>
        <authorList>
            <person name="Marschalek R."/>
            <person name="Greil J."/>
            <person name="Lochner K."/>
            <person name="Nilson I."/>
            <person name="Siegler G."/>
            <person name="Zweckbronner I."/>
            <person name="Beck J.D."/>
            <person name="Fey G.H."/>
        </authorList>
    </citation>
    <scope>NUCLEOTIDE SEQUENCE [GENOMIC DNA] OF 1212-1603 (ISOFORM 3)</scope>
</reference>
<reference key="11">
    <citation type="journal article" date="1995" name="DNA Cell Biol.">
        <title>The human MLL gene: nucleotide sequence, homology to the Drosophila trx zinc-finger domain, and alternative splicing.</title>
        <authorList>
            <person name="Mbangkollo D."/>
            <person name="Burnett R."/>
            <person name="McCabe N."/>
            <person name="Thirman M."/>
            <person name="Gill H."/>
            <person name="Yu H."/>
            <person name="Rowley J.D."/>
            <person name="Diaz M.O."/>
        </authorList>
    </citation>
    <scope>NUCLEOTIDE SEQUENCE [MRNA] OF 1251-1654 (ISOFORM 2)</scope>
</reference>
<reference key="12">
    <citation type="journal article" date="1994" name="Cancer Res.">
        <title>Sequence analysis of the breakpoint cluster region in the ALL-1 gene involved in acute leukemia.</title>
        <authorList>
            <person name="Gu Y."/>
            <person name="Alder H."/>
            <person name="Nakamura T."/>
            <person name="Schichman S.A."/>
            <person name="Prasad R."/>
            <person name="Canaani O."/>
            <person name="Saito H."/>
            <person name="Croce C.M."/>
            <person name="Canaani E."/>
        </authorList>
    </citation>
    <scope>NUCLEOTIDE SEQUENCE [MRNA] OF 1251-1538</scope>
</reference>
<reference key="13">
    <citation type="journal article" date="2000" name="Proc. Natl. Acad. Sci. U.S.A.">
        <title>Detection of leukemia-associated MLL-GAS7 translocation early during chemotherapy with DNA topoisomerase II inhibitors.</title>
        <authorList>
            <person name="Megonigal M.D."/>
            <person name="Cheung N.-K.V."/>
            <person name="Rappaport E.F."/>
            <person name="Nowell P.C."/>
            <person name="Wilson R.B."/>
            <person name="Jones D.H."/>
            <person name="Addya K."/>
            <person name="Leonard D.G.B."/>
            <person name="Kushner B.H."/>
            <person name="Williams T.M."/>
            <person name="Lange B.J."/>
            <person name="Felix C.A."/>
        </authorList>
    </citation>
    <scope>NUCLEOTIDE SEQUENCE [MRNA] OF 1311-1687 (ISOFORM 3)</scope>
    <scope>CHROMOSOMAL TRANSLOCATION WITH GAS7</scope>
</reference>
<reference key="14">
    <citation type="journal article" date="1993" name="Oncogene">
        <title>A method for identifying genes within yeast artificial chromosomes: application to isolation of MLL fusion cDNAs from acute leukaemia translocations.</title>
        <authorList>
            <person name="Forster A."/>
            <person name="Rabbitts T.H."/>
        </authorList>
    </citation>
    <scope>NUCLEOTIDE SEQUENCE [MRNA] OF 1421-1540</scope>
</reference>
<reference key="15">
    <citation type="journal article" date="2003" name="Mol. Cell. Biol.">
        <title>Proteolytic cleavage of MLL generates a complex of N- and C-terminal fragments that confers protein stability and subnuclear localization.</title>
        <authorList>
            <person name="Hsieh J.J.-D."/>
            <person name="Ernst P."/>
            <person name="Erdjument-Bromage H."/>
            <person name="Tempst P."/>
            <person name="Korsmeyer S.J."/>
        </authorList>
    </citation>
    <scope>PROTEIN SEQUENCE OF 2719-2730</scope>
    <scope>CLEAVAGE</scope>
    <scope>SUBUNIT</scope>
    <scope>SUBCELLULAR LOCATION</scope>
    <scope>MUTAGENESIS OF 2718-ASP--VAL-2720</scope>
</reference>
<reference key="16">
    <citation type="journal article" date="1996" name="Oncogene">
        <title>Fusion of the MLL gene with two different genes, AF-6 and AF-5alpha, by a complex translocation involving chromosomes 5, 6, 8 and 11 in infant leukemia.</title>
        <authorList>
            <person name="Taki T."/>
            <person name="Hayashi Y."/>
            <person name="Taniwaki M."/>
            <person name="Seto M."/>
            <person name="Ueda R."/>
            <person name="Hanada R."/>
            <person name="Suzukawa K."/>
            <person name="Yokota J."/>
            <person name="Morishita K."/>
        </authorList>
    </citation>
    <scope>CHROMOSOMAL TRANSLOCATION WITH CENPK</scope>
</reference>
<reference key="17">
    <citation type="journal article" date="1998" name="Blood">
        <title>ABI-1, a human homolog to mouse Abl-interactor 1, fuses the MLL gene in acute myeloid leukemia with t(10;11)(p11.2;q23).</title>
        <authorList>
            <person name="Taki T."/>
            <person name="Shibuya N."/>
            <person name="Taniwaki M."/>
            <person name="Hanada R."/>
            <person name="Morishita K."/>
            <person name="Bessho F."/>
            <person name="Yanagisawa M."/>
            <person name="Hayashi Y."/>
        </authorList>
    </citation>
    <scope>CHROMOSOMAL TRANSLOCATION WITH ABI1</scope>
</reference>
<reference key="18">
    <citation type="journal article" date="1998" name="Nat. Genet.">
        <title>Association of SET domain and myotubularin-related proteins modulates growth control.</title>
        <authorList>
            <person name="Cui X."/>
            <person name="De Vivo I."/>
            <person name="Slany R."/>
            <person name="Miyamoto A."/>
            <person name="Firestein R."/>
            <person name="Cleary M.L."/>
        </authorList>
    </citation>
    <scope>INTERACTION WITH SBF1</scope>
</reference>
<reference key="19">
    <citation type="journal article" date="1999" name="Mol. Cell. Biol.">
        <title>Leukemic HRX fusion proteins inhibit GADD34-induced apoptosis and associate with the GADD34 and hSNF5/INI1 proteins.</title>
        <authorList>
            <person name="Adler H.T."/>
            <person name="Chinery R."/>
            <person name="Wu D.Y."/>
            <person name="Kussick S.J."/>
            <person name="Payne J.M."/>
            <person name="Fornace A.J. Jr."/>
            <person name="Tkachuk D.C."/>
        </authorList>
    </citation>
    <scope>INTERACTION WITH PPP1R15A</scope>
    <scope>DISEASE</scope>
    <scope>FUNCTION</scope>
</reference>
<reference key="20">
    <citation type="journal article" date="1999" name="Proc. Natl. Acad. Sci. U.S.A.">
        <title>AF5q31, a newly identified AF4-related gene, is fused to MLL in infant acute lymphoblastic leukemia with ins(5;11)(q31;q13q23).</title>
        <authorList>
            <person name="Taki T."/>
            <person name="Kano H."/>
            <person name="Taniwaki M."/>
            <person name="Sako M."/>
            <person name="Yanagisawa M."/>
            <person name="Hayashi Y."/>
        </authorList>
    </citation>
    <scope>CHROMOSOMAL TRANSLOCATION WITH AFF4</scope>
    <source>
        <tissue>Placenta</tissue>
    </source>
</reference>
<reference key="21">
    <citation type="journal article" date="2000" name="Blood">
        <title>Novel SH3 protein encoded by the AF3p21 gene is fused to the mixed lineage leukemia protein in a therapy-related leukemia with t(3;11)(p21;q23).</title>
        <authorList>
            <person name="Sano K."/>
            <person name="Hayakawa A."/>
            <person name="Piao J.-H."/>
            <person name="Kosaka Y."/>
            <person name="Nakamura H."/>
        </authorList>
    </citation>
    <scope>CHROMOSOMAL TRANSLOCATION WITH NCKIPSD/AF3P21</scope>
</reference>
<reference key="22">
    <citation type="journal article" date="2000" name="Blood">
        <title>t(3;11) translocation in treatment-related acute myeloid leukemia fuses MLL with the GMPS (guanosine 5-prime monophosphate synthetase) gene.</title>
        <authorList>
            <person name="Pegram L.D."/>
            <person name="Megonigal M.D."/>
            <person name="Lange B.J."/>
            <person name="Nowell P.C."/>
            <person name="Rowley J.D."/>
            <person name="Rappaport E.F."/>
            <person name="Felix C.A."/>
        </authorList>
    </citation>
    <scope>CHROMOSOMAL TRANSLOCATION WITH GMPS</scope>
</reference>
<reference key="23">
    <citation type="journal article" date="2001" name="Genes Chromosomes Cancer">
        <title>Human LPP gene is fused to MLL in a secondary acute leukemia with a t(3;11) (q28;q23).</title>
        <authorList>
            <person name="Daheron L."/>
            <person name="Veinstein A."/>
            <person name="Brizard F."/>
            <person name="Drabkin H."/>
            <person name="Lacotte L."/>
            <person name="Guilhot F."/>
            <person name="Larsen C.J."/>
            <person name="Brizard A."/>
            <person name="Roche J."/>
        </authorList>
    </citation>
    <scope>CHROMOSOMAL TRANSLOCATION WITH LPP</scope>
</reference>
<reference key="24">
    <citation type="journal article" date="2002" name="Cancer Res.">
        <title>LCX, leukemia-associated protein with a CXXC domain, is fused to MLL in acute myeloid leukemia with trilineage dysplasia having t(10;11)(q22;q23).</title>
        <authorList>
            <person name="Ono R."/>
            <person name="Taki T."/>
            <person name="Taketani T."/>
            <person name="Taniwaki M."/>
            <person name="Kobayashi H."/>
            <person name="Hayashi Y."/>
        </authorList>
    </citation>
    <scope>CHROMOSOMAL TRANSLOCATION WITH TET1</scope>
</reference>
<reference key="25">
    <citation type="journal article" date="2002" name="Mol. Cell">
        <title>ALL-1 is a histone methyltransferase that assembles a supercomplex of proteins involved in transcriptional regulation.</title>
        <authorList>
            <person name="Nakamura T."/>
            <person name="Mori T."/>
            <person name="Tada S."/>
            <person name="Krajewski W."/>
            <person name="Rozovskaia T."/>
            <person name="Wassell R."/>
            <person name="Dubois G."/>
            <person name="Mazo A."/>
            <person name="Croce C.M."/>
            <person name="Canaani E."/>
        </authorList>
    </citation>
    <scope>FUNCTION</scope>
    <scope>CATALYTIC ACTIVITY</scope>
</reference>
<reference key="26">
    <citation type="journal article" date="2003" name="Cell">
        <title>Taspase1: a threonine aspartase required for cleavage of MLL and proper HOX gene expression.</title>
        <authorList>
            <person name="Hsieh J.J.-D."/>
            <person name="Cheng E.H.-Y."/>
            <person name="Korsmeyer S.J."/>
        </authorList>
    </citation>
    <scope>CLEAVAGE</scope>
    <scope>INTERACTION WITH TASP1</scope>
    <scope>MUTAGENESIS OF 2666-ASP-GLY-2667 AND 2718-ASP--VAL-2720</scope>
</reference>
<reference key="27">
    <citation type="journal article" date="2003" name="Oncogene">
        <title>A t(11;15) fuses MLL to two different genes, AF15q14 and a novel gene MPFYVE on chromosome 15.</title>
        <authorList>
            <person name="Chinwalla V."/>
            <person name="Chien A."/>
            <person name="Odero M."/>
            <person name="Neilly M.B."/>
            <person name="Zeleznik-Le N.J."/>
            <person name="Rowley J.D."/>
        </authorList>
    </citation>
    <scope>CHROMOSOMAL TRANSLOCATION WITH ZFYVE19 AND KNL1</scope>
</reference>
<reference key="28">
    <citation type="journal article" date="2003" name="Oncogene">
        <title>Characterization of the MLL partner gene AF15q14 involved in t(11;15)(q23;q14).</title>
        <authorList>
            <person name="Kuefer M.U."/>
            <person name="Chinwalla V."/>
            <person name="Zeleznik-Le N.J."/>
            <person name="Behm F.G."/>
            <person name="Naeve C.W."/>
            <person name="Rakestraw K.M."/>
            <person name="Mukatira S.T."/>
            <person name="Raimondi S.C."/>
            <person name="Morris S.W."/>
        </authorList>
    </citation>
    <scope>CHROMOSOMAL TRANSLOCATION WITH KNL1</scope>
</reference>
<reference key="29">
    <citation type="journal article" date="2004" name="Genes Chromosomes Cancer">
        <title>Identification of a novel RAS GTPase-activating protein (RASGAP) gene at 9q34 as an MLL fusion partner in a patient with de novo acute myeloid leukemia.</title>
        <authorList>
            <person name="von Bergh A.R.M."/>
            <person name="Wijers P.M."/>
            <person name="Groot A.J."/>
            <person name="van Zelderen-Bhola S."/>
            <person name="Falkenburg J.H.F."/>
            <person name="Kluin P.M."/>
            <person name="Schuuring E."/>
        </authorList>
    </citation>
    <scope>CHROMOSOMAL TRANSLOCATION WITH DAB2IP</scope>
</reference>
<reference key="30">
    <citation type="journal article" date="2004" name="Leukemia">
        <title>FLJ10849, a septin family gene, fuses MLL in a novel leukemia cell line CNLBC1 derived from chronic neutrophilic leukemia in transformation with t(4;11)(q21;q23).</title>
        <authorList>
            <person name="Kojima K."/>
            <person name="Sakai I."/>
            <person name="Hasegawa A."/>
            <person name="Niiya H."/>
            <person name="Azuma T."/>
            <person name="Matsuo Y."/>
            <person name="Fujii N."/>
            <person name="Tanimoto M."/>
            <person name="Fujita S."/>
        </authorList>
    </citation>
    <scope>CHROMOSOMAL TRANSLOCATION WITH SEPT11</scope>
</reference>
<reference key="31">
    <citation type="journal article" date="2004" name="Mol. Cell. Biol.">
        <title>Leukemia proto-oncoprotein MLL forms a SET1-like histone methyltransferase complex with menin to regulate Hox gene expression.</title>
        <authorList>
            <person name="Yokoyama A."/>
            <person name="Wang Z."/>
            <person name="Wysocka J."/>
            <person name="Sanyal M."/>
            <person name="Aufiero D.J."/>
            <person name="Kitabayashi I."/>
            <person name="Herr W."/>
            <person name="Cleary M.L."/>
        </authorList>
    </citation>
    <scope>IDENTIFICATION IN THE MLL1/MLL COMPLEX</scope>
</reference>
<reference key="32">
    <citation type="journal article" date="2005" name="Cancer Res.">
        <title>AF4p12, a human homologue to the furry gene of Drosophila, as a novel MLL fusion partner.</title>
        <authorList>
            <person name="Hayette S."/>
            <person name="Cornillet-Lefebvre P."/>
            <person name="Tigaud I."/>
            <person name="Struski S."/>
            <person name="Forissier S."/>
            <person name="Berchet A."/>
            <person name="Doll D."/>
            <person name="Gillot L."/>
            <person name="Brahim W."/>
            <person name="Delabesse E."/>
            <person name="Magaud J.-P."/>
            <person name="Rimokh R."/>
        </authorList>
    </citation>
    <scope>CHROMOSOMAL TRANSLOCATION WITH FRYL</scope>
</reference>
<reference key="33">
    <citation type="journal article" date="2005" name="Cell">
        <title>Physical association and coordinate function of the H3 K4 methyltransferase MLL1 and the H4 K16 acetyltransferase MOF.</title>
        <authorList>
            <person name="Dou Y."/>
            <person name="Milne T.A."/>
            <person name="Tackett A.J."/>
            <person name="Smith E.R."/>
            <person name="Fukuda A."/>
            <person name="Wysocka J."/>
            <person name="Allis C.D."/>
            <person name="Chait B.T."/>
            <person name="Hess J.L."/>
            <person name="Roeder R.G."/>
        </authorList>
    </citation>
    <scope>FUNCTION</scope>
    <scope>IDENTIFICATION IN THE MLL1/MLL COMPLEX</scope>
    <scope>INTERACTION WITH KAT8</scope>
</reference>
<reference key="34">
    <citation type="journal article" date="2007" name="Genomics">
        <title>Nine-amino-acid transactivation domain: establishment and prediction utilities.</title>
        <authorList>
            <person name="Piskacek S."/>
            <person name="Gregor M."/>
            <person name="Nemethova M."/>
            <person name="Grabner M."/>
            <person name="Kovarik P."/>
            <person name="Piskacek M."/>
        </authorList>
    </citation>
    <scope>DOMAIN 9AATAD</scope>
</reference>
<reference key="35">
    <citation type="journal article" date="2007" name="J. Biol. Chem.">
        <title>PTIP associates with MLL3- and MLL4-containing histone H3 lysine 4 methyltransferase complex.</title>
        <authorList>
            <person name="Cho Y.-W."/>
            <person name="Hong T."/>
            <person name="Hong S."/>
            <person name="Guo H."/>
            <person name="Yu H."/>
            <person name="Kim D."/>
            <person name="Guszczynski T."/>
            <person name="Dressler G.R."/>
            <person name="Copeland T.D."/>
            <person name="Kalkum M."/>
            <person name="Ge K."/>
        </authorList>
    </citation>
    <scope>IDENTIFICATION IN THE MLL1/MLL COMPLEX</scope>
</reference>
<reference key="36">
    <citation type="journal article" date="2008" name="Proc. Natl. Acad. Sci. U.S.A.">
        <title>A quantitative atlas of mitotic phosphorylation.</title>
        <authorList>
            <person name="Dephoure N."/>
            <person name="Zhou C."/>
            <person name="Villen J."/>
            <person name="Beausoleil S.A."/>
            <person name="Bakalarski C.E."/>
            <person name="Elledge S.J."/>
            <person name="Gygi S.P."/>
        </authorList>
    </citation>
    <scope>PHOSPHORYLATION [LARGE SCALE ANALYSIS] AT SER-153; SER-197; SER-518; SER-680; THR-840; SER-1056; THR-1845; SER-2098; THR-2147; SER-2151; THR-2525; SER-2955; SER-3036; THR-3372 AND SER-3511</scope>
    <scope>IDENTIFICATION BY MASS SPECTROMETRY [LARGE SCALE ANALYSIS]</scope>
    <source>
        <tissue>Cervix carcinoma</tissue>
    </source>
</reference>
<reference key="37">
    <citation type="journal article" date="2009" name="Anal. Chem.">
        <title>Lys-N and trypsin cover complementary parts of the phosphoproteome in a refined SCX-based approach.</title>
        <authorList>
            <person name="Gauci S."/>
            <person name="Helbig A.O."/>
            <person name="Slijper M."/>
            <person name="Krijgsveld J."/>
            <person name="Heck A.J."/>
            <person name="Mohammed S."/>
        </authorList>
    </citation>
    <scope>IDENTIFICATION BY MASS SPECTROMETRY [LARGE SCALE ANALYSIS]</scope>
</reference>
<reference key="38">
    <citation type="journal article" date="2009" name="J. Biol. Chem.">
        <title>On the mechanism of multiple lysine methylation by the human mixed lineage leukemia protein-1 (MLL1) core complex.</title>
        <authorList>
            <person name="Patel A."/>
            <person name="Dharmarajan V."/>
            <person name="Vought V.E."/>
            <person name="Cosgrove M.S."/>
        </authorList>
    </citation>
    <scope>FUNCTION</scope>
    <scope>CATALYTIC ACTIVITY</scope>
    <scope>CHARACTERIZATION OF THE MLL1/MLL COMPLEX</scope>
    <scope>INTERACTION WITH WDR5</scope>
    <scope>MUTAGENESIS OF ASN-3906 AND TYR-3942</scope>
</reference>
<reference key="39">
    <citation type="journal article" date="2009" name="Mol. Cell. Proteomics">
        <title>Large-scale proteomics analysis of the human kinome.</title>
        <authorList>
            <person name="Oppermann F.S."/>
            <person name="Gnad F."/>
            <person name="Olsen J.V."/>
            <person name="Hornberger R."/>
            <person name="Greff Z."/>
            <person name="Keri G."/>
            <person name="Mann M."/>
            <person name="Daub H."/>
        </authorList>
    </citation>
    <scope>PHOSPHORYLATION [LARGE SCALE ANALYSIS] AT SER-1858</scope>
    <scope>IDENTIFICATION BY MASS SPECTROMETRY [LARGE SCALE ANALYSIS]</scope>
</reference>
<reference key="40">
    <citation type="journal article" date="2009" name="Sci. Signal.">
        <title>Quantitative phosphoproteomic analysis of T cell receptor signaling reveals system-wide modulation of protein-protein interactions.</title>
        <authorList>
            <person name="Mayya V."/>
            <person name="Lundgren D.H."/>
            <person name="Hwang S.-I."/>
            <person name="Rezaul K."/>
            <person name="Wu L."/>
            <person name="Eng J.K."/>
            <person name="Rodionov V."/>
            <person name="Han D.K."/>
        </authorList>
    </citation>
    <scope>PHOSPHORYLATION [LARGE SCALE ANALYSIS] AT SER-153; SER-2098 AND SER-3515</scope>
    <scope>IDENTIFICATION BY MASS SPECTROMETRY [LARGE SCALE ANALYSIS]</scope>
    <source>
        <tissue>Leukemic T-cell</tissue>
    </source>
</reference>
<reference key="41">
    <citation type="journal article" date="2009" name="Science">
        <title>Lysine acetylation targets protein complexes and co-regulates major cellular functions.</title>
        <authorList>
            <person name="Choudhary C."/>
            <person name="Kumar C."/>
            <person name="Gnad F."/>
            <person name="Nielsen M.L."/>
            <person name="Rehman M."/>
            <person name="Walther T.C."/>
            <person name="Olsen J.V."/>
            <person name="Mann M."/>
        </authorList>
    </citation>
    <scope>ACETYLATION [LARGE SCALE ANALYSIS] AT LYS-636; LYS-1130 AND LYS-1235</scope>
    <scope>IDENTIFICATION BY MASS SPECTROMETRY [LARGE SCALE ANALYSIS]</scope>
</reference>
<reference key="42">
    <citation type="journal article" date="2010" name="Sci. Signal.">
        <title>Quantitative phosphoproteomics reveals widespread full phosphorylation site occupancy during mitosis.</title>
        <authorList>
            <person name="Olsen J.V."/>
            <person name="Vermeulen M."/>
            <person name="Santamaria A."/>
            <person name="Kumar C."/>
            <person name="Miller M.L."/>
            <person name="Jensen L.J."/>
            <person name="Gnad F."/>
            <person name="Cox J."/>
            <person name="Jensen T.S."/>
            <person name="Nigg E.A."/>
            <person name="Brunak S."/>
            <person name="Mann M."/>
        </authorList>
    </citation>
    <scope>PHOSPHORYLATION [LARGE SCALE ANALYSIS] AT SER-153; SER-197; SER-926; SER-2955 AND THR-3372</scope>
    <scope>IDENTIFICATION BY MASS SPECTROMETRY [LARGE SCALE ANALYSIS]</scope>
    <source>
        <tissue>Cervix carcinoma</tissue>
    </source>
</reference>
<reference key="43">
    <citation type="journal article" date="2011" name="Sci. Signal.">
        <title>System-wide temporal characterization of the proteome and phosphoproteome of human embryonic stem cell differentiation.</title>
        <authorList>
            <person name="Rigbolt K.T."/>
            <person name="Prokhorova T.A."/>
            <person name="Akimov V."/>
            <person name="Henningsen J."/>
            <person name="Johansen P.T."/>
            <person name="Kratchmarova I."/>
            <person name="Kassem M."/>
            <person name="Mann M."/>
            <person name="Olsen J.V."/>
            <person name="Blagoev B."/>
        </authorList>
    </citation>
    <scope>PHOSPHORYLATION [LARGE SCALE ANALYSIS] AT SER-2201</scope>
    <scope>IDENTIFICATION BY MASS SPECTROMETRY [LARGE SCALE ANALYSIS]</scope>
</reference>
<reference key="44">
    <citation type="journal article" date="2013" name="Mol. Cell. Biol.">
        <title>Quantitative dissection and stoichiometry determination of the human SET1/MLL histone methyltransferase complexes.</title>
        <authorList>
            <person name="van Nuland R."/>
            <person name="Smits A.H."/>
            <person name="Pallaki P."/>
            <person name="Jansen P.W."/>
            <person name="Vermeulen M."/>
            <person name="Timmers H.T."/>
        </authorList>
    </citation>
    <scope>IDENTIFICATION IN MLL1 COMPLEX</scope>
</reference>
<reference key="45">
    <citation type="journal article" date="2015" name="Genes Dev.">
        <title>Screen identifies bromodomain protein ZMYND8 in chromatin recognition of transcription-associated DNA damage that promotes homologous recombination.</title>
        <authorList>
            <person name="Gong F."/>
            <person name="Chiu L.Y."/>
            <person name="Cox B."/>
            <person name="Aymard F."/>
            <person name="Clouaire T."/>
            <person name="Leung J.W."/>
            <person name="Cammarata M."/>
            <person name="Perez M."/>
            <person name="Agarwal P."/>
            <person name="Brodbelt J.S."/>
            <person name="Legube G."/>
            <person name="Miller K.M."/>
        </authorList>
    </citation>
    <scope>SUBCELLULAR LOCATION</scope>
</reference>
<reference key="46">
    <citation type="journal article" date="2015" name="J. Biol. Chem.">
        <title>Biochemical reconstitution and phylogenetic comparison of human SET1 family core complexes involved in histone methylation.</title>
        <authorList>
            <person name="Shinsky S.A."/>
            <person name="Monteith K.E."/>
            <person name="Viggiano S."/>
            <person name="Cosgrove M.S."/>
        </authorList>
    </citation>
    <scope>FUNCTION</scope>
    <scope>CATALYTIC ACTIVITY</scope>
    <scope>SUBUNIT</scope>
    <scope>MUTAGENESIS OF ASN-3906</scope>
</reference>
<reference key="47">
    <citation type="journal article" date="2012" name="Am. J. Hum. Genet.">
        <title>De novo mutations in MLL cause Wiedemann-Steiner syndrome.</title>
        <authorList>
            <person name="Jones W.D."/>
            <person name="Dafou D."/>
            <person name="McEntagart M."/>
            <person name="Woollard W.J."/>
            <person name="Elmslie F.V."/>
            <person name="Holder-Espinasse M."/>
            <person name="Irving M."/>
            <person name="Saggar A.K."/>
            <person name="Smithson S."/>
            <person name="Trembath R.C."/>
            <person name="Deshpande C."/>
            <person name="Simpson M.A."/>
        </authorList>
    </citation>
    <scope>INVOLVEMENT IN WDSTS</scope>
</reference>
<reference key="48">
    <citation type="journal article" date="2012" name="Cell">
        <title>Microcephaly gene links trithorax and REST/NRSF to control neural stem cell proliferation and differentiation.</title>
        <authorList>
            <person name="Yang Y.J."/>
            <person name="Baltus A.E."/>
            <person name="Mathew R.S."/>
            <person name="Murphy E.A."/>
            <person name="Evrony G.D."/>
            <person name="Gonzalez D.M."/>
            <person name="Wang E.P."/>
            <person name="Marshall-Walker C.A."/>
            <person name="Barry B.J."/>
            <person name="Murn J."/>
            <person name="Tatarakis A."/>
            <person name="Mahajan M.A."/>
            <person name="Samuels H.H."/>
            <person name="Shi Y."/>
            <person name="Golden J.A."/>
            <person name="Mahajnah M."/>
            <person name="Shenhav R."/>
            <person name="Walsh C.A."/>
        </authorList>
    </citation>
    <scope>INTERACTION WITH ZNF335</scope>
</reference>
<reference key="49">
    <citation type="journal article" date="2013" name="J. Proteome Res.">
        <title>Toward a comprehensive characterization of a human cancer cell phosphoproteome.</title>
        <authorList>
            <person name="Zhou H."/>
            <person name="Di Palma S."/>
            <person name="Preisinger C."/>
            <person name="Peng M."/>
            <person name="Polat A.N."/>
            <person name="Heck A.J."/>
            <person name="Mohammed S."/>
        </authorList>
    </citation>
    <scope>PHOSPHORYLATION [LARGE SCALE ANALYSIS] AT SER-1858; SER-2098; THR-2525; SER-2611; SER-2796; SER-2955; SER-3036; SER-3511 AND SER-3527</scope>
    <scope>IDENTIFICATION BY MASS SPECTROMETRY [LARGE SCALE ANALYSIS]</scope>
    <source>
        <tissue>Cervix carcinoma</tissue>
        <tissue>Erythroleukemia</tissue>
    </source>
</reference>
<reference key="50">
    <citation type="journal article" date="2014" name="J. Biol. Chem.">
        <title>Automethylation activities within the mixed lineage leukemia-1 (MLL1) core complex reveal evidence supporting a 'two-active site' model for multiple histone H3 lysine 4 methylation.</title>
        <authorList>
            <person name="Patel A."/>
            <person name="Vought V.E."/>
            <person name="Swatkoski S."/>
            <person name="Viggiano S."/>
            <person name="Howard B."/>
            <person name="Dharmarajan V."/>
            <person name="Monteith K.E."/>
            <person name="Kupakuwana G."/>
            <person name="Namitz K.E."/>
            <person name="Shinsky S.A."/>
            <person name="Cotter R.J."/>
            <person name="Cosgrove M.S."/>
        </authorList>
    </citation>
    <scope>FUNCTION</scope>
    <scope>CATALYTIC ACTIVITY</scope>
    <scope>BIOPHYSICOCHEMICAL PROPERTIES</scope>
    <scope>METHYLATION AT CYS-3882</scope>
    <scope>MUTAGENESIS OF CYS-3882</scope>
</reference>
<reference key="51">
    <citation type="journal article" date="2014" name="J. Proteomics">
        <title>An enzyme assisted RP-RPLC approach for in-depth analysis of human liver phosphoproteome.</title>
        <authorList>
            <person name="Bian Y."/>
            <person name="Song C."/>
            <person name="Cheng K."/>
            <person name="Dong M."/>
            <person name="Wang F."/>
            <person name="Huang J."/>
            <person name="Sun D."/>
            <person name="Wang L."/>
            <person name="Ye M."/>
            <person name="Zou H."/>
        </authorList>
    </citation>
    <scope>PHOSPHORYLATION [LARGE SCALE ANALYSIS] AT SER-1837</scope>
    <scope>IDENTIFICATION BY MASS SPECTROMETRY [LARGE SCALE ANALYSIS]</scope>
    <source>
        <tissue>Liver</tissue>
    </source>
</reference>
<reference key="52">
    <citation type="journal article" date="2017" name="Nat. Struct. Mol. Biol.">
        <title>Site-specific mapping of the human SUMO proteome reveals co-modification with phosphorylation.</title>
        <authorList>
            <person name="Hendriks I.A."/>
            <person name="Lyon D."/>
            <person name="Young C."/>
            <person name="Jensen L.J."/>
            <person name="Vertegaal A.C."/>
            <person name="Nielsen M.L."/>
        </authorList>
    </citation>
    <scope>SUMOYLATION [LARGE SCALE ANALYSIS] AT LYS-2528</scope>
    <scope>IDENTIFICATION BY MASS SPECTROMETRY [LARGE SCALE ANALYSIS]</scope>
</reference>
<reference key="53">
    <citation type="journal article" date="2021" name="Nucleic Acids Res.">
        <title>MLL1 is regulated by KSHV LANA and is important for virus latency.</title>
        <authorList>
            <person name="Tan M."/>
            <person name="Li S."/>
            <person name="Juillard F."/>
            <person name="Chitas R."/>
            <person name="Custodio T.F."/>
            <person name="Xue H."/>
            <person name="Szymula A."/>
            <person name="Sun Q."/>
            <person name="Liu B."/>
            <person name="Alvarez A.L."/>
            <person name="Chen S."/>
            <person name="Huang J."/>
            <person name="Simas J.P."/>
            <person name="McVey C.E."/>
            <person name="Kaye K.M."/>
        </authorList>
    </citation>
    <scope>INTERACTION WITH HUMAN HERPESVIRUS 8/HHV-8 PROTEIN LANA1</scope>
    <scope>SUBCELLULAR LOCATION</scope>
</reference>
<reference key="54">
    <citation type="journal article" date="2006" name="EMBO J.">
        <title>Solution structure of the nonmethyl-CpG-binding CXXC domain of the leukaemia-associated MLL histone methyltransferase.</title>
        <authorList>
            <person name="Allen M.D."/>
            <person name="Grummitt C.G."/>
            <person name="Hilcenko C."/>
            <person name="Min S.Y."/>
            <person name="Tonkin L.M."/>
            <person name="Johnson C.M."/>
            <person name="Freund S.M."/>
            <person name="Bycroft M."/>
            <person name="Warren A.J."/>
        </authorList>
    </citation>
    <scope>STRUCTURE BY NMR OF 1146-1214 IN COMPLEX WITH ZINC</scope>
    <scope>DOMAIN CXXC-TYPE ZINC-FINGER</scope>
    <scope>DNA-BINDING</scope>
    <scope>MUTAGENESIS OF ARG-1151; ARG-1153; ARG-1154; CYS-1155; CYS-1158; CYS-1161; GLN-1162; ASP-1166; CYS-1167; CYS-1170; ASN-1172; CYS-1173; ASP-1175; LYS-1176; 1178-LYS--GLY-1181; LYS-1178; PHE-1179; ASN-1183; LYS-1185; LYS-1186; GLN-1187; CYS-1188; CYS-1189; ARG-1192; LYS-1193; CYS-1194; GLN-1195 AND ASN-1196</scope>
</reference>
<reference key="55">
    <citation type="journal article" date="2006" name="J. Mol. Biol.">
        <title>Structural basis for cooperative transcription factor binding to the CBP coactivator.</title>
        <authorList>
            <person name="De Guzman R.N."/>
            <person name="Goto N.K."/>
            <person name="Dyson H.J."/>
            <person name="Wright P.E."/>
        </authorList>
    </citation>
    <scope>STRUCTURE BY NMR OF 2842-2869 IN COMPLEX WITH CREBBP</scope>
</reference>
<reference evidence="57" key="56">
    <citation type="submission" date="2007-12" db="PDB data bank">
        <title>Structural basis for maintenance of unmethylated CpG elements by the CXXC domain of MLL and its critical contributions to MLL-AF9 immortalization activity.</title>
        <authorList>
            <person name="Cierpicki T."/>
            <person name="Riesbeck L.E."/>
            <person name="Grembecka J."/>
            <person name="Lukasik S.M."/>
            <person name="Omonkowska M."/>
            <person name="Shultis D."/>
            <person name="Zeleznik-Le N.J."/>
            <person name="Bushweller J.H."/>
        </authorList>
    </citation>
    <scope>STRUCTURE BY NMR OF 1147-1203</scope>
</reference>
<reference key="57">
    <citation type="journal article" date="2008" name="J. Biol. Chem.">
        <title>Structure of WDR5 bound to mixed lineage leukemia protein-1 peptide.</title>
        <authorList>
            <person name="Patel A."/>
            <person name="Dharmarajan V."/>
            <person name="Cosgrove M.S."/>
        </authorList>
    </citation>
    <scope>X-RAY CRYSTALLOGRAPHY (1.37 ANGSTROMS) OF 3764-3776 IN COMPLEX WITH WDR5</scope>
    <scope>INTERACTION WITH WDR5</scope>
</reference>
<reference evidence="67" key="58">
    <citation type="journal article" date="2008" name="J. Biol. Chem.">
        <title>WDR5 interacts with mixed lineage leukemia (MLL) protein via the histone H3-binding pocket.</title>
        <authorList>
            <person name="Song J.J."/>
            <person name="Kingston R.E."/>
        </authorList>
    </citation>
    <scope>X-RAY CRYSTALLOGRAPHY (1.37 ANGSTROMS) OF 3764-3776 IN COMPLEX WITH WDR5</scope>
    <scope>INTERACTION WITH WDR5</scope>
    <scope>MUTAGENESIS OF ARG-3765 AND HIS-3769</scope>
</reference>
<reference key="59">
    <citation type="journal article" date="2009" name="Mol. Cell">
        <title>Structural basis for the requirement of additional factors for MLL1 SET domain activity and recognition of epigenetic marks.</title>
        <authorList>
            <person name="Southall S.M."/>
            <person name="Wong P.S."/>
            <person name="Odho Z."/>
            <person name="Roe S.M."/>
            <person name="Wilson J.R."/>
        </authorList>
    </citation>
    <scope>X-RAY CRYSTALLOGRAPHY (2.0 ANGSTROMS) OF 3785-3969 IN COMPLEX WITH ZINC; S-ADENOSYL-L-HOMOCYSTEINE AND HISTONE H3 PEPTIDE</scope>
    <scope>FUNCTION</scope>
    <scope>CATALYTIC ACTIVITY</scope>
    <scope>DOMAIN SET</scope>
    <scope>INTERACTION WITH ASH2L AND RBBP5</scope>
    <scope>MUTAGENESIS OF TYR-3858; GLN-3867; ASP-3869; ARG-3871; GLU-3872; TYR-3874; LYS-3878 AND TYR-3942</scope>
</reference>
<reference evidence="60" key="60">
    <citation type="journal article" date="2010" name="Biochemistry">
        <title>The PHD3 domain of MLL acts as a CYP33-regulated switch between MLL-mediated activation and repression.</title>
        <authorList>
            <person name="Park S."/>
            <person name="Osmers U."/>
            <person name="Raman G."/>
            <person name="Schwantes R.H."/>
            <person name="Diaz M.O."/>
            <person name="Bushweller J.H."/>
        </authorList>
    </citation>
    <scope>STRUCTURE BY NMR OF 1564-1628 IN COMPLEX WITH ZINC</scope>
    <scope>FUNCTION</scope>
    <scope>DOMAIN</scope>
    <scope>MUTAGENESIS OF TRP-1594; VAL-1617 AND TYR-1619</scope>
    <scope>INTERACTION WITH PPIE</scope>
</reference>
<reference evidence="59 68 69 70" key="61">
    <citation type="journal article" date="2010" name="Cell">
        <title>Pro isomerization in MLL1 PHD3-bromo cassette connects H3K4me readout to CyP33 and HDAC-mediated repression.</title>
        <authorList>
            <person name="Wang Z."/>
            <person name="Song J."/>
            <person name="Milne T.A."/>
            <person name="Wang G.G."/>
            <person name="Li H."/>
            <person name="Allis C.D."/>
            <person name="Patel D.J."/>
        </authorList>
    </citation>
    <scope>X-RAY CRYSTALLOGRAPHY (1.72 ANGSTROMS) OF 1566-1784 IN COMPLEX WITH ZINC AND METHYLATED HISTONE H3</scope>
    <scope>INTERACTION WITH PPIE</scope>
    <scope>DOMAIN</scope>
    <scope>MUTAGENESIS OF TYR-1581; GLN-1587 AND TRP-1594</scope>
</reference>
<reference evidence="58" key="62">
    <citation type="journal article" date="2010" name="Nat. Struct. Mol. Biol.">
        <title>Structure of the MLL CXXC domain-DNA complex and its functional role in MLL-AF9 leukemia.</title>
        <authorList>
            <person name="Cierpicki T."/>
            <person name="Risner L.E."/>
            <person name="Grembecka J."/>
            <person name="Lukasik S.M."/>
            <person name="Popovic R."/>
            <person name="Omonkowska M."/>
            <person name="Shultis D.D."/>
            <person name="Zeleznik-Le N.J."/>
            <person name="Bushweller J.H."/>
        </authorList>
    </citation>
    <scope>STRUCTURE BY NMR OF 1147-1203 IN COMPLEX WITH ZINC AND TARGET DNA</scope>
    <scope>FUNCTION</scope>
    <scope>DOMAIN CXXC-TYPE ZINC-FINGER</scope>
    <scope>MUTAGENESIS OF ARG-1150; ARG-1154; LYS-1185; GLN-1187; CYS-1188; LYS-1193; LEU-1197 AND MET-1200</scope>
</reference>
<reference evidence="71" key="63">
    <citation type="journal article" date="2011" name="Structure">
        <title>Structural and biochemical insights into MLL1 core complex assembly.</title>
        <authorList>
            <person name="Avdic V."/>
            <person name="Zhang P."/>
            <person name="Lanouette S."/>
            <person name="Groulx A."/>
            <person name="Tremblay V."/>
            <person name="Brunzelle J."/>
            <person name="Couture J.F."/>
        </authorList>
    </citation>
    <scope>X-RAY CRYSTALLOGRAPHY (2.35 ANGSTROMS) OF 3761-3770 IN COMPLEX WITH RBBP5 AND WDR5</scope>
    <scope>FUNCTION</scope>
</reference>
<reference evidence="75" key="64">
    <citation type="journal article" date="2012" name="Blood">
        <title>Structural insights into inhibition of the bivalent menin-MLL interaction by small molecules in leukemia.</title>
        <authorList>
            <person name="Shi A."/>
            <person name="Murai M.J."/>
            <person name="He S."/>
            <person name="Lund G."/>
            <person name="Hartley T."/>
            <person name="Purohit T."/>
            <person name="Reddy G."/>
            <person name="Chruszcz M."/>
            <person name="Grembecka J."/>
            <person name="Cierpicki T."/>
        </authorList>
    </citation>
    <scope>X-RAY CRYSTALLOGRAPHY (1.55 ANGSTROMS) OF 6-15 IN COMPLEX WITH MEN1</scope>
    <scope>INTERACTION WITH MEN1</scope>
    <scope>INTERACTION OF FUSION PROTEIN KMT2A-MLLT3 WITH MEN1</scope>
</reference>
<reference evidence="74" key="65">
    <citation type="journal article" date="2012" name="J. Biol. Chem.">
        <title>Structural basis for WDR5 interaction (Win) motif recognition in human SET1 family histone methyltransferases.</title>
        <authorList>
            <person name="Dharmarajan V."/>
            <person name="Lee J.H."/>
            <person name="Patel A."/>
            <person name="Skalnik D.G."/>
            <person name="Cosgrove M.S."/>
        </authorList>
    </citation>
    <scope>X-RAY CRYSTALLOGRAPHY (1.70 ANGSTROMS) OF 3755-3771 IN COMPLEX WITH WDR5</scope>
    <scope>INTERACTION WITH THE WRAD COMPLEX</scope>
    <scope>INTERACTION WITH WDR5</scope>
    <scope>MUTAGENESIS OF SER-3763; ARG-3765 AND HIS-3769</scope>
    <scope>MOTIF WIN</scope>
</reference>
<reference evidence="72 73" key="66">
    <citation type="journal article" date="2012" name="Nature">
        <title>The same pocket in menin binds both MLL and JUND but has opposite effects on transcription.</title>
        <authorList>
            <person name="Huang J."/>
            <person name="Gurung B."/>
            <person name="Wan B."/>
            <person name="Matkar S."/>
            <person name="Veniaminova N.A."/>
            <person name="Wan K."/>
            <person name="Merchant J.L."/>
            <person name="Hua X."/>
            <person name="Lei M."/>
        </authorList>
    </citation>
    <scope>X-RAY CRYSTALLOGRAPHY (3.00 ANGSTROMS) OF 6-25 AND 103-153 IN COMPLEX WITH MEN1 AND PSIP1</scope>
    <scope>INTERACTION WITH MEN1</scope>
    <scope>INTERACTION OF KMT2A-MEN1 COMPLEX WITH PSIP1</scope>
    <scope>MOTIF MBM</scope>
    <scope>MUTAGENESIS OF ARG-6; TRP-7; ARG-8; PHE-9; PRO-10; ALA-11; ARG-12; PRO-13; ARG-24 AND ARG-25</scope>
</reference>
<reference evidence="61 62" key="67">
    <citation type="journal article" date="2013" name="ACS Chem. Biol.">
        <title>Allosteric communication in the KIX domain proceeds through dynamic repacking of the hydrophobic core.</title>
        <authorList>
            <person name="Bruschweiler S."/>
            <person name="Konrat R."/>
            <person name="Tollinger M."/>
        </authorList>
    </citation>
    <scope>STRUCTURE BY NMR OF 2840-2858 IN COMPLEX WITH CREBBP AND CREB1</scope>
</reference>
<reference evidence="64" key="68">
    <citation type="journal article" date="2014" name="Blood">
        <title>The same site on the integrase-binding domain of lens epithelium-derived growth factor is a therapeutic target for MLL leukemia and HIV.</title>
        <authorList>
            <person name="Murai M.J."/>
            <person name="Pollock J."/>
            <person name="He S."/>
            <person name="Miao H."/>
            <person name="Purohit T."/>
            <person name="Yokom A."/>
            <person name="Hess J.L."/>
            <person name="Muntean A.G."/>
            <person name="Grembecka J."/>
            <person name="Cierpicki T."/>
        </authorList>
    </citation>
    <scope>STRUCTURE BY NMR OF 110-160 IN COMPLEX WITH PSIP1</scope>
    <scope>DOMAIN IBM MOTIF</scope>
    <scope>INTERACTION WITH PSIP1 AND MEN1</scope>
    <scope>INTERACTION OF FUSION PROTEIN KMT2A-MLLT3 WITH PSIP1 AND MEN1</scope>
    <scope>MUTAGENESIS OF PHE-129; PHE-148 AND LEU-149</scope>
</reference>
<reference evidence="63" key="69">
    <citation type="journal article" date="2014" name="Cancer Res.">
        <title>Validation and structural characterization of the LEDGF/p75-MLL interface as a new target for the treatment of MLL-dependent leukemia.</title>
        <authorList>
            <person name="Cermakova K."/>
            <person name="Tesina P."/>
            <person name="Demeulemeester J."/>
            <person name="El Ashkar S."/>
            <person name="Mereau H."/>
            <person name="Schwaller J."/>
            <person name="Rezacova P."/>
            <person name="Veverka V."/>
            <person name="De Rijck J."/>
        </authorList>
    </citation>
    <scope>STRUCTURE BY NMR OF 140-160 IN COMPLEX WITH PSIP1</scope>
    <scope>INTERACTION WITH PSIP1</scope>
    <scope>MUTAGENESIS OF PHE-129; PHE-133; GLU-144; GLU-146; PHE-148 AND PHE-151</scope>
</reference>
<reference evidence="77 78" key="70">
    <citation type="journal article" date="2016" name="Nature">
        <title>Structural basis for activity regulation of MLL family methyltransferases.</title>
        <authorList>
            <person name="Li Y."/>
            <person name="Han J."/>
            <person name="Zhang Y."/>
            <person name="Cao F."/>
            <person name="Liu Z."/>
            <person name="Li S."/>
            <person name="Wu J."/>
            <person name="Hu C."/>
            <person name="Wang Y."/>
            <person name="Shuai J."/>
            <person name="Chen J."/>
            <person name="Cao L."/>
            <person name="Li D."/>
            <person name="Shi P."/>
            <person name="Tian C."/>
            <person name="Zhang J."/>
            <person name="Dou Y."/>
            <person name="Li G."/>
            <person name="Chen Y."/>
            <person name="Lei M."/>
        </authorList>
    </citation>
    <scope>X-RAY CRYSTALLOGRAPHY (1.80 ANGSTROMS) OF 3813-3969 IN COMPLEX WITH S-ADENOSYL-L-HOMOCYSTEINE AND ZINC</scope>
    <scope>FUNCTION</scope>
    <scope>CATALYTIC ACTIVITY</scope>
    <scope>SUBUNIT</scope>
    <scope>DOMAIN</scope>
    <scope>MUTAGENESIS OF ASN-3861; ARG-3864 AND GLN-3867</scope>
</reference>
<reference evidence="79" key="71">
    <citation type="submission" date="2016-08" db="PDB data bank">
        <title>Design of a nanomolar affinity ligand to the KIX domain of CBP.</title>
        <authorList>
            <person name="Langelaan D.N."/>
            <person name="Smith S.P."/>
        </authorList>
    </citation>
    <scope>X-RAY CRYSTALLOGRAPHY (2.05 ANGSTROMS) OF 2839-2869</scope>
</reference>
<reference evidence="80" key="72">
    <citation type="journal article" date="2018" name="Proc. Natl. Acad. Sci. U.S.A.">
        <title>Affinity switching of the LEDGF/p75 IBD interactome is governed by kinase-dependent phosphorylation.</title>
        <authorList>
            <person name="Sharma S."/>
            <person name="Cermakova K."/>
            <person name="De Rijck J."/>
            <person name="Demeulemeester J."/>
            <person name="Fabry M."/>
            <person name="El Ashkar S."/>
            <person name="Van Belle S."/>
            <person name="Lepsik M."/>
            <person name="Tesina P."/>
            <person name="Duchoslav V."/>
            <person name="Novak P."/>
            <person name="Hubalek M."/>
            <person name="Srb P."/>
            <person name="Christ F."/>
            <person name="Rezacova P."/>
            <person name="Hodges H.C."/>
            <person name="Debyser Z."/>
            <person name="Veverka V."/>
        </authorList>
    </citation>
    <scope>STRUCTURE BY NMR OF 111-160 IN COMPLEX WITH PSIP1</scope>
    <scope>INTERACTION WITH PSIP1</scope>
    <scope>DOMAIN IBM MOTIF</scope>
    <scope>MUTAGENESIS OF VAL-132; PHE-133; SER-136 AND SER-142</scope>
    <scope>PHOSPHORYLATION AT SER-136; SER-142 AND SER-153</scope>
</reference>
<reference evidence="76" key="73">
    <citation type="journal article" date="2018" name="Structure">
        <title>DNA Sequence Recognition of Human CXXC Domains and Their Structural Determinants.</title>
        <authorList>
            <person name="Xu C."/>
            <person name="Liu K."/>
            <person name="Lei M."/>
            <person name="Yang A."/>
            <person name="Li Y."/>
            <person name="Hughes T.R."/>
            <person name="Min J."/>
        </authorList>
    </citation>
    <scope>X-RAY CRYSTALLOGRAPHY (2.82 ANGSTROMS) OF 1147-1204 IN COMPLEX WITH CPG DNA</scope>
    <scope>DOMAIN CXXC-TYPE ZINC-FINGER</scope>
    <scope>ZINC-BINDING</scope>
</reference>
<evidence type="ECO:0000250" key="1">
    <source>
        <dbReference type="UniProtKB" id="P55200"/>
    </source>
</evidence>
<evidence type="ECO:0000255" key="2">
    <source>
        <dbReference type="PROSITE-ProRule" id="PRU00035"/>
    </source>
</evidence>
<evidence type="ECO:0000255" key="3">
    <source>
        <dbReference type="PROSITE-ProRule" id="PRU00146"/>
    </source>
</evidence>
<evidence type="ECO:0000255" key="4">
    <source>
        <dbReference type="PROSITE-ProRule" id="PRU00155"/>
    </source>
</evidence>
<evidence type="ECO:0000255" key="5">
    <source>
        <dbReference type="PROSITE-ProRule" id="PRU00190"/>
    </source>
</evidence>
<evidence type="ECO:0000255" key="6">
    <source>
        <dbReference type="PROSITE-ProRule" id="PRU00509"/>
    </source>
</evidence>
<evidence type="ECO:0000255" key="7">
    <source>
        <dbReference type="PROSITE-ProRule" id="PRU00875"/>
    </source>
</evidence>
<evidence type="ECO:0000255" key="8">
    <source>
        <dbReference type="PROSITE-ProRule" id="PRU00876"/>
    </source>
</evidence>
<evidence type="ECO:0000255" key="9">
    <source>
        <dbReference type="PROSITE-ProRule" id="PRU01146"/>
    </source>
</evidence>
<evidence type="ECO:0000256" key="10">
    <source>
        <dbReference type="SAM" id="MobiDB-lite"/>
    </source>
</evidence>
<evidence type="ECO:0000269" key="11">
    <source>
    </source>
</evidence>
<evidence type="ECO:0000269" key="12">
    <source>
    </source>
</evidence>
<evidence type="ECO:0000269" key="13">
    <source>
    </source>
</evidence>
<evidence type="ECO:0000269" key="14">
    <source>
    </source>
</evidence>
<evidence type="ECO:0000269" key="15">
    <source>
    </source>
</evidence>
<evidence type="ECO:0000269" key="16">
    <source>
    </source>
</evidence>
<evidence type="ECO:0000269" key="17">
    <source>
    </source>
</evidence>
<evidence type="ECO:0000269" key="18">
    <source>
    </source>
</evidence>
<evidence type="ECO:0000269" key="19">
    <source>
    </source>
</evidence>
<evidence type="ECO:0000269" key="20">
    <source>
    </source>
</evidence>
<evidence type="ECO:0000269" key="21">
    <source>
    </source>
</evidence>
<evidence type="ECO:0000269" key="22">
    <source>
    </source>
</evidence>
<evidence type="ECO:0000269" key="23">
    <source>
    </source>
</evidence>
<evidence type="ECO:0000269" key="24">
    <source>
    </source>
</evidence>
<evidence type="ECO:0000269" key="25">
    <source>
    </source>
</evidence>
<evidence type="ECO:0000269" key="26">
    <source>
    </source>
</evidence>
<evidence type="ECO:0000269" key="27">
    <source>
    </source>
</evidence>
<evidence type="ECO:0000269" key="28">
    <source>
    </source>
</evidence>
<evidence type="ECO:0000269" key="29">
    <source>
    </source>
</evidence>
<evidence type="ECO:0000269" key="30">
    <source>
    </source>
</evidence>
<evidence type="ECO:0000269" key="31">
    <source>
    </source>
</evidence>
<evidence type="ECO:0000269" key="32">
    <source>
    </source>
</evidence>
<evidence type="ECO:0000269" key="33">
    <source>
    </source>
</evidence>
<evidence type="ECO:0000269" key="34">
    <source>
    </source>
</evidence>
<evidence type="ECO:0000269" key="35">
    <source>
    </source>
</evidence>
<evidence type="ECO:0000269" key="36">
    <source>
    </source>
</evidence>
<evidence type="ECO:0000269" key="37">
    <source>
    </source>
</evidence>
<evidence type="ECO:0000269" key="38">
    <source>
    </source>
</evidence>
<evidence type="ECO:0000269" key="39">
    <source>
    </source>
</evidence>
<evidence type="ECO:0000269" key="40">
    <source>
    </source>
</evidence>
<evidence type="ECO:0000269" key="41">
    <source>
    </source>
</evidence>
<evidence type="ECO:0000269" key="42">
    <source>
    </source>
</evidence>
<evidence type="ECO:0000269" key="43">
    <source>
    </source>
</evidence>
<evidence type="ECO:0000269" key="44">
    <source>
    </source>
</evidence>
<evidence type="ECO:0000269" key="45">
    <source>
    </source>
</evidence>
<evidence type="ECO:0000269" key="46">
    <source ref="3"/>
</evidence>
<evidence type="ECO:0000303" key="47">
    <source>
    </source>
</evidence>
<evidence type="ECO:0000303" key="48">
    <source>
    </source>
</evidence>
<evidence type="ECO:0000303" key="49">
    <source>
    </source>
</evidence>
<evidence type="ECO:0000303" key="50">
    <source>
    </source>
</evidence>
<evidence type="ECO:0000305" key="51"/>
<evidence type="ECO:0000305" key="52">
    <source>
    </source>
</evidence>
<evidence type="ECO:0000305" key="53">
    <source>
    </source>
</evidence>
<evidence type="ECO:0000305" key="54">
    <source>
    </source>
</evidence>
<evidence type="ECO:0000305" key="55">
    <source>
    </source>
</evidence>
<evidence type="ECO:0000305" key="56">
    <source>
    </source>
</evidence>
<evidence type="ECO:0007744" key="57">
    <source>
        <dbReference type="PDB" id="2JYI"/>
    </source>
</evidence>
<evidence type="ECO:0007744" key="58">
    <source>
        <dbReference type="PDB" id="2KKF"/>
    </source>
</evidence>
<evidence type="ECO:0007744" key="59">
    <source>
        <dbReference type="PDB" id="2KU7"/>
    </source>
</evidence>
<evidence type="ECO:0007744" key="60">
    <source>
        <dbReference type="PDB" id="2KYU"/>
    </source>
</evidence>
<evidence type="ECO:0007744" key="61">
    <source>
        <dbReference type="PDB" id="2LXS"/>
    </source>
</evidence>
<evidence type="ECO:0007744" key="62">
    <source>
        <dbReference type="PDB" id="2LXT"/>
    </source>
</evidence>
<evidence type="ECO:0007744" key="63">
    <source>
        <dbReference type="PDB" id="2MSR"/>
    </source>
</evidence>
<evidence type="ECO:0007744" key="64">
    <source>
        <dbReference type="PDB" id="2MTN"/>
    </source>
</evidence>
<evidence type="ECO:0007744" key="65">
    <source>
        <dbReference type="PDB" id="2W5Y"/>
    </source>
</evidence>
<evidence type="ECO:0007744" key="66">
    <source>
        <dbReference type="PDB" id="2W5Z"/>
    </source>
</evidence>
<evidence type="ECO:0007744" key="67">
    <source>
        <dbReference type="PDB" id="3EMH"/>
    </source>
</evidence>
<evidence type="ECO:0007744" key="68">
    <source>
        <dbReference type="PDB" id="3LQH"/>
    </source>
</evidence>
<evidence type="ECO:0007744" key="69">
    <source>
        <dbReference type="PDB" id="3LQI"/>
    </source>
</evidence>
<evidence type="ECO:0007744" key="70">
    <source>
        <dbReference type="PDB" id="3LQJ"/>
    </source>
</evidence>
<evidence type="ECO:0007744" key="71">
    <source>
        <dbReference type="PDB" id="3P4F"/>
    </source>
</evidence>
<evidence type="ECO:0007744" key="72">
    <source>
        <dbReference type="PDB" id="3U85"/>
    </source>
</evidence>
<evidence type="ECO:0007744" key="73">
    <source>
        <dbReference type="PDB" id="3U88"/>
    </source>
</evidence>
<evidence type="ECO:0007744" key="74">
    <source>
        <dbReference type="PDB" id="4ESG"/>
    </source>
</evidence>
<evidence type="ECO:0007744" key="75">
    <source>
        <dbReference type="PDB" id="4GQ6"/>
    </source>
</evidence>
<evidence type="ECO:0007744" key="76">
    <source>
        <dbReference type="PDB" id="4NW3"/>
    </source>
</evidence>
<evidence type="ECO:0007744" key="77">
    <source>
        <dbReference type="PDB" id="5F5E"/>
    </source>
</evidence>
<evidence type="ECO:0007744" key="78">
    <source>
        <dbReference type="PDB" id="5F6L"/>
    </source>
</evidence>
<evidence type="ECO:0007744" key="79">
    <source>
        <dbReference type="PDB" id="5SVH"/>
    </source>
</evidence>
<evidence type="ECO:0007744" key="80">
    <source>
        <dbReference type="PDB" id="6EMQ"/>
    </source>
</evidence>
<evidence type="ECO:0007744" key="81">
    <source>
    </source>
</evidence>
<evidence type="ECO:0007744" key="82">
    <source>
    </source>
</evidence>
<evidence type="ECO:0007744" key="83">
    <source>
    </source>
</evidence>
<evidence type="ECO:0007744" key="84">
    <source>
    </source>
</evidence>
<evidence type="ECO:0007744" key="85">
    <source>
    </source>
</evidence>
<evidence type="ECO:0007744" key="86">
    <source>
    </source>
</evidence>
<evidence type="ECO:0007744" key="87">
    <source>
    </source>
</evidence>
<evidence type="ECO:0007744" key="88">
    <source>
    </source>
</evidence>
<evidence type="ECO:0007744" key="89">
    <source>
    </source>
</evidence>
<evidence type="ECO:0007829" key="90">
    <source>
        <dbReference type="PDB" id="2J2S"/>
    </source>
</evidence>
<evidence type="ECO:0007829" key="91">
    <source>
        <dbReference type="PDB" id="2KYU"/>
    </source>
</evidence>
<evidence type="ECO:0007829" key="92">
    <source>
        <dbReference type="PDB" id="2MSR"/>
    </source>
</evidence>
<evidence type="ECO:0007829" key="93">
    <source>
        <dbReference type="PDB" id="2MTN"/>
    </source>
</evidence>
<evidence type="ECO:0007829" key="94">
    <source>
        <dbReference type="PDB" id="2W5Y"/>
    </source>
</evidence>
<evidence type="ECO:0007829" key="95">
    <source>
        <dbReference type="PDB" id="3LQH"/>
    </source>
</evidence>
<evidence type="ECO:0007829" key="96">
    <source>
        <dbReference type="PDB" id="3LQI"/>
    </source>
</evidence>
<evidence type="ECO:0007829" key="97">
    <source>
        <dbReference type="PDB" id="3U88"/>
    </source>
</evidence>
<evidence type="ECO:0007829" key="98">
    <source>
        <dbReference type="PDB" id="4ESG"/>
    </source>
</evidence>
<evidence type="ECO:0007829" key="99">
    <source>
        <dbReference type="PDB" id="4NW3"/>
    </source>
</evidence>
<evidence type="ECO:0007829" key="100">
    <source>
        <dbReference type="PDB" id="5F5E"/>
    </source>
</evidence>
<evidence type="ECO:0007829" key="101">
    <source>
        <dbReference type="PDB" id="5SVH"/>
    </source>
</evidence>
<evidence type="ECO:0007829" key="102">
    <source>
        <dbReference type="PDB" id="6EMQ"/>
    </source>
</evidence>
<evidence type="ECO:0007829" key="103">
    <source>
        <dbReference type="PDB" id="7W67"/>
    </source>
</evidence>
<protein>
    <recommendedName>
        <fullName>Histone-lysine N-methyltransferase 2A</fullName>
        <shortName>Lysine N-methyltransferase 2A</shortName>
        <ecNumber evidence="12 23 24 35 38 40">2.1.1.364</ecNumber>
    </recommendedName>
    <alternativeName>
        <fullName evidence="48">ALL-1</fullName>
    </alternativeName>
    <alternativeName>
        <fullName>CXXC-type zinc finger protein 7</fullName>
    </alternativeName>
    <alternativeName>
        <fullName evidence="51">Cysteine methyltransferase KMT2A</fullName>
        <ecNumber evidence="35">2.1.1.-</ecNumber>
    </alternativeName>
    <alternativeName>
        <fullName>Myeloid/lymphoid or mixed-lineage leukemia</fullName>
    </alternativeName>
    <alternativeName>
        <fullName>Myeloid/lymphoid or mixed-lineage leukemia protein 1</fullName>
    </alternativeName>
    <alternativeName>
        <fullName>Trithorax-like protein</fullName>
    </alternativeName>
    <alternativeName>
        <fullName>Zinc finger protein HRX</fullName>
    </alternativeName>
    <component>
        <recommendedName>
            <fullName>MLL cleavage product N320</fullName>
        </recommendedName>
        <alternativeName>
            <fullName>N-terminal cleavage product of 320 kDa</fullName>
            <shortName>p320</shortName>
        </alternativeName>
    </component>
    <component>
        <recommendedName>
            <fullName>MLL cleavage product C180</fullName>
        </recommendedName>
        <alternativeName>
            <fullName>C-terminal cleavage product of 180 kDa</fullName>
            <shortName>p180</shortName>
        </alternativeName>
    </component>
</protein>
<name>KMT2A_HUMAN</name>
<keyword id="KW-0002">3D-structure</keyword>
<keyword id="KW-0007">Acetylation</keyword>
<keyword id="KW-0025">Alternative splicing</keyword>
<keyword id="KW-0053">Apoptosis</keyword>
<keyword id="KW-0090">Biological rhythms</keyword>
<keyword id="KW-0103">Bromodomain</keyword>
<keyword id="KW-0156">Chromatin regulator</keyword>
<keyword id="KW-0160">Chromosomal rearrangement</keyword>
<keyword id="KW-0903">Direct protein sequencing</keyword>
<keyword id="KW-0238">DNA-binding</keyword>
<keyword id="KW-0945">Host-virus interaction</keyword>
<keyword id="KW-1017">Isopeptide bond</keyword>
<keyword id="KW-0479">Metal-binding</keyword>
<keyword id="KW-0488">Methylation</keyword>
<keyword id="KW-0489">Methyltransferase</keyword>
<keyword id="KW-0539">Nucleus</keyword>
<keyword id="KW-0597">Phosphoprotein</keyword>
<keyword id="KW-1267">Proteomics identification</keyword>
<keyword id="KW-0656">Proto-oncogene</keyword>
<keyword id="KW-1185">Reference proteome</keyword>
<keyword id="KW-0677">Repeat</keyword>
<keyword id="KW-0949">S-adenosyl-L-methionine</keyword>
<keyword id="KW-0804">Transcription</keyword>
<keyword id="KW-0805">Transcription regulation</keyword>
<keyword id="KW-0808">Transferase</keyword>
<keyword id="KW-0832">Ubl conjugation</keyword>
<keyword id="KW-0862">Zinc</keyword>
<keyword id="KW-0863">Zinc-finger</keyword>
<accession>Q03164</accession>
<accession>E9PQG7</accession>
<accession>Q13743</accession>
<accession>Q13744</accession>
<accession>Q14845</accession>
<accession>Q16364</accession>
<accession>Q59FF2</accession>
<accession>Q6UBD1</accession>
<accession>Q9HBJ3</accession>
<accession>Q9UD94</accession>
<accession>Q9UMA3</accession>
<gene>
    <name type="primary">KMT2A</name>
    <name type="synonym">ALL1</name>
    <name type="synonym">CXXC7</name>
    <name type="synonym">HRX</name>
    <name type="synonym">HTRX</name>
    <name type="synonym">MLL</name>
    <name type="synonym">MLL1</name>
    <name type="synonym">TRX1</name>
</gene>
<sequence length="3969" mass="431764">MAHSCRWRFPARPGTTGGGGGGGRRGLGGAPRQRVPALLLPPGPPVGGGGPGAPPSPPAVAAAAAAAGSSGAGVPGGAAAASAASSSSASSSSSSSSSASSGPALLRVGPGFDAALQVSAAIGTNLRRFRAVFGESGGGGGSGEDEQFLGFGSDEEVRVRSPTRSPSVKTSPRKPRGRPRSGSDRNSAILSDPSVFSPLNKSETKSGDKIKKKDSKSIEKKRGRPPTFPGVKIKITHGKDISELPKGNKEDSLKKIKRTPSATFQQATKIKKLRAGKLSPLKSKFKTGKLQIGRKGVQIVRRRGRPPSTERIKTPSGLLINSELEKPQKVRKDKEGTPPLTKEDKTVVRQSPRRIKPVRIIPSSKRTDATIAKQLLQRAKKGAQKKIEKEAAQLQGRKVKTQVKNIRQFIMPVVSAISSRIIKTPRRFIEDEDYDPPIKIARLESTPNSRFSAPSCGSSEKSSAASQHSSQMSSDSSRSSSPSVDTSTDSQASEEIQVLPEERSDTPEVHPPLPISQSPENESNDRRSRRYSVSERSFGSRTTKKLSTLQSAPQQQTSSSPPPPLLTPPPPLQPASSISDHTPWLMPPTIPLASPFLPASTAPMQGKRKSILREPTFRWTSLKHSRSEPQYFSSAKYAKEGLIRKPIFDNFRPPPLTPEDVGFASGFSASGTAASARLFSPLHSGTRFDMHKRSPLLRAPRFTPSEAHSRIFESVTLPSNRTSAGTSSSGVSNRKRKRKVFSPIRSEPRSPSHSMRTRSGRLSSSELSPLTPPSSVSSSLSISVSPLATSALNPTFTFPSHSLTQSGESAEKNQRPRKQTSAPAEPFSSSSPTPLFPWFTPGSQTERGRNKDKAPEELSKDRDADKSVEKDKSRERDREREKENKRESRKEKRKKGSEIQSSSALYPVGRVSKEKVVGEDVATSSSAKKATGRKKSSSHDSGTDITSVTLGDTTAVKTKILIKKGRGNLEKTNLDLGPTAPSLEKEKTLCLSTPSSSTVKHSTSSIGSMLAQADKLPMTDKRVASLLKKAKAQLCKIEKSKSLKQTDQPKAQGQESDSSETSVRGPRIKHVCRRAAVALGRKRAVFPDDMPTLSALPWEEREKILSSMGNDDKSSIAGSEDAEPLAPPIKPIKPVTRNKAPQEPPVKKGRRSRRCGQCPGCQVPEDCGVCTNCLDKPKFGGRNIKKQCCKMRKCQNLQWMPSKAYLQKQAKAVKKKEKKSKTSEKKDSKESSVVKNVVDSSQKPTPSAREDPAPKKSSSEPPPRKPVEEKSEEGNVSAPGPESKQATTPASRKSSKQVSQPALVIPPQPPTTGPPRKEVPKTTPSEPKKKQPPPPESGPEQSKQKKVAPRPSIPVKQKPKEKEKPPPVNKQENAGTLNILSTLSNGNSSKQKIPADGVHRIRVDFKEDCEAENVWEMGGLGILTSVPITPRVVCFLCASSGHVEFVYCQVCCEPFHKFCLEENERPLEDQLENWCCRRCKFCHVCGRQHQATKQLLECNKCRNSYHPECLGPNYPTKPTKKKKVWICTKCVRCKSCGSTTPGKGWDAQWSHDFSLCHDCAKLFAKGNFCPLCDKCYDDDDYESKMMQCGKCDRWVHSKCENLSDEMYEILSNLPESVAYTCVNCTERHPAEWRLALEKELQISLKQVLTALLNSRTTSHLLRYRQAAKPPDLNPETEESIPSRSSPEGPDPPVLTEVSKQDDQQPLDLEGVKRKMDQGNYTSVLEFSDDIVKIIQAAINSDGGQPEIKKANSMVKSFFIRQMERVFPWFSVKKSRFWEPNKVSSNSGMLPNAVLPPSLDHNYAQWQEREENSHTEQPPLMKKIIPAPKPKGPGEPDSPTPLHPPTPPILSTDRSREDSPELNPPPGIEDNRQCALCLTYGDDSANDAGRLLYIGQNEWTHVNCALWSAEVFEDDDGSLKNVHMAVIRGKQLRCEFCQKPGATVGCCLTSCTSNYHFMCSRAKNCVFLDDKKVYCQRHRDLIKGEVVPENGFEVFRRVFVDFEGISLRRKFLNGLEPENIHMMIGSMTIDCLGILNDLSDCEDKLFPIGYQCSRVYWSTTDARKRCVYTCKIVECRPPVVEPDINSTVEHDENRTIAHSPTSFTESSSKESQNTAEIISPPSPDRPPHSQTSGSCYYHVISKVPRIRTPSYSPTQRSPGCRPLPSAGSPTPTTHEIVTVGDPLLSSGLRSIGSRRHSTSSLSPQRSKLRIMSPMRTGNTYSRNNVSSVSTTGTATDLESSAKVVDHVLGPLNSSTSLGQNTSTSSNLQRTVVTVGNKNSHLDGSSSSEMKQSSASDLVSKSSSLKGEKTKVLSSKSSEGSAHNVAYPGIPKLAPQVHNTTSRELNVSKIGSFAEPSSVSFSSKEALSFPHLHLRGQRNDRDQHTDSTQSANSSPDEDTEVKTLKLSGMSNRSSIINEHMGSSSRDRRQKGKKSCKETFKEKHSSKSFLEPGQVTTGEEGNLKPEFMDEVLTPEYMGQRPCNNVSSDKIGDKGLSMPGVPKAPPMQVEGSAKELQAPRKRTVKVTLTPLKMENESQSKNALKESSPASPLQIESTSPTEPISASENPGDGPVAQPSPNNTSCQDSQSNNYQNLPVQDRNLMLPDGPKPQEDGSFKRRYPRRSARARSNMFFGLTPLYGVRSYGEEDIPFYSSSTGKKRGKRSAEGQVDGADDLSTSDEDDLYYYNFTRTVISSGGEERLASHNLFREEEQCDLPKISQLDGVDDGTESDTSVTATTRKSSQIPKRNGKENGTENLKIDRPEDAGEKEHVTKSSVGHKNEPKMDNCHSVSRVKTQGQDSLEAQLSSLESSRRVHTSTPSDKNLLDTYNTELLKSDSDNNNSDDCGNILPSDIMDFVLKNTPSMQALGESPESSSSELLNLGEGLGLDSNREKDMGLFEVFSQQLPTTEPVDSSVSSSISAEEQFELPLELPSDLSVLTTRSPTVPSQNPSRLAVISDSGEKRVTITEKSVASSESDPALLSPGVDPTPEGHMTPDHFIQGHMDADHISSPPCGSVEQGHGNNQDLTRNSSTPGLQVPVSPTVPIQNQKYVPNSTDSPGPSQISNAAVQTTPPHLKPATEKLIVVNQNMQPLYVLQTLPNGVTQKIQLTSSVSSTPSVMETNTSVLGPMGGGLTLTTGLNPSLPTSQSLFPSASKGLLPMSHHQHLHSFPAATQSSFPPNISNPPSGLLIGVQPPPDPQLLVSESSQRTDLSTTVATPSSGLKKRPISRLQTRKNKKLAPSSTPSNIAPSDVVSNMTLINFTPSQLPNHPSLLDLGSLNTSSHRTVPNIIKRSKSSIMYFEPAPLLPQSVGGTAATAAGTSTISQDTSHLTSGSVSGLASSSSVLNVVSMQTTTTPTSSASVPGHVTLTNPRLLGTPDIGSISNLLIKASQQSLGIQDQPVALPPSSGMFPQLGTSQTPSTAAITAASSICVLPSTQTTGITAASPSGEADEHYQLQHVNQLLASKTGIHSSQRDLDSASGPQVSNFTQTVDAPNSMGLEQNKALSSAVQASPTSPGGSPSSPSSGQRSASPSVPGPTKPKPKTKRFQLPLDKGNGKKHKVSHLRTSSSEAHIPDQETTSLTSGTGTPGAEAEQQDTASVEQSSQKECGQPAGQVAVLPEVQVTQNPANEQESAEPKTVEEEESNFSSPLMLWLQQEQKRKESITEKKPKKGLVFEISSDDGFQICAESIEDAWKSLTDKVQEARSNARLKQLSFAGVNGLRMLGILHDAVVFLIEQLSGAKHCRNYKFRFHKPEEANEPPLNPHGSARAEVHLRKSAFDMFNFLASKHRQPPEYNPNDEEEEEVQLKSARRATSMDLPMPMRFRHLKKTSKEAVGVYRSPIHGRGLFCKRNIDAGEMVIEYAGNVIRSIQTDKREKYYDSKGIGCYMFRIDDSEVVDATMHGNAARFINHSCEPNCYSRVINIDGQKHIVIFAMRKIYRGEELTYDYKFPIEDASNKLPCNCGAKKCRKFLN</sequence>
<organism>
    <name type="scientific">Homo sapiens</name>
    <name type="common">Human</name>
    <dbReference type="NCBI Taxonomy" id="9606"/>
    <lineage>
        <taxon>Eukaryota</taxon>
        <taxon>Metazoa</taxon>
        <taxon>Chordata</taxon>
        <taxon>Craniata</taxon>
        <taxon>Vertebrata</taxon>
        <taxon>Euteleostomi</taxon>
        <taxon>Mammalia</taxon>
        <taxon>Eutheria</taxon>
        <taxon>Euarchontoglires</taxon>
        <taxon>Primates</taxon>
        <taxon>Haplorrhini</taxon>
        <taxon>Catarrhini</taxon>
        <taxon>Hominidae</taxon>
        <taxon>Homo</taxon>
    </lineage>
</organism>